<comment type="function">
    <text evidence="51 56 76 79 81 86 88 95 97 105">Steroid hormone receptors are ligand-activated transcription factors that regulate eukaryotic gene expression and affect cellular proliferation and differentiation in target tissues (PubMed:19022849). Transcription factor activity is modulated by bound coactivator and corepressor proteins like ZBTB7A that recruits NCOR1 and NCOR2 to the androgen response elements/ARE on target genes, negatively regulating androgen receptor signaling and androgen-induced cell proliferation (PubMed:20812024). Transcription activation is also down-regulated by NR0B2. Activated, but not phosphorylated, by HIPK3 and ZIPK/DAPK3.</text>
</comment>
<comment type="function">
    <molecule>Isoform 3</molecule>
    <text evidence="87">Lacks the C-terminal ligand-binding domain and may therefore constitutively activate the transcription of a specific set of genes independently of steroid hormones.</text>
</comment>
<comment type="function">
    <molecule>Isoform 4</molecule>
    <text evidence="87">Lacks the C-terminal ligand-binding domain and may therefore constitutively activate the transcription of a specific set of genes independently of steroid hormones.</text>
</comment>
<comment type="activity regulation">
    <text evidence="93">AIM-100 (4-amino-5,6-biaryl-furo[2,3-d]pyrimidine) suppresses TNK2-mediated phosphorylation at Tyr-269. Inhibits the binding of the Tyr-269 phosphorylated form to androgen-responsive enhancers (AREs) and its transcriptional activity.</text>
</comment>
<comment type="subunit">
    <text evidence="1 2 7 11 14 15 26 30 37 38 39 40 49 51 55 56 63 64 70 72 73 74 75 76 77 79 80 81 82 83 84 86 88 89 92 95 97 98 100 102 103 105 153">Binds DNA as a homodimer. Part of a ternary complex containing AR, EFCAB6/DJBP and PARK7. Interacts with HIPK3 and NR0B2 in the presence of androgen. The ligand binding domain interacts with KAT7/HBO1 in the presence of dihydrotestosterone. Interacts with EFCAB6/DJBP, PQBP1, RANBP9, RBAK, SPDEF, SRA1, TGFB1I1 and RREB1. Interacts with ZMIZ1/ZIMP10 and ZMIZ2/ZMIP7 which both enhance its transactivation activity. Interacts with SLC30A9 and RAD54L2/ARIP4. Interacts with MACROD1 (via macro domain) (PubMed:19022849). Interacts via the ligand-binding domain with LXXLL and FXXLF motifs from NCOA1, NCOA2, NCOA3 and MAGEA11. Interacts (via nuclear receptor DNA binding domain and nuclear receptor ligand binding domain) with NCOA4 (PubMed:15563469, PubMed:8643607). The AR N-terminal poly-Gln region binds Ran resulting in enhancement of AR-mediated transactivation. Ran-binding decreases as the poly-Gln length increases. Interacts with HIP1 (via coiled coil domain). Interacts (via ligand-binding domain) with TRIM68. Interacts with TNK2. Interacts with USP26. Interacts with RNF6. Interacts (regulated by RNF6 probably through polyubiquitination) with RNF14; regulates AR transcriptional activity. Interacts with PRMT2 and TRIM24. Interacts with RACK1. Interacts with RANBP10; this interaction enhances dihydrotestosterone-induced AR transcriptional activity. Interacts with PRPF6 in a hormone-independent way; this interaction enhances dihydrotestosterone-induced AR transcriptional activity. Interacts with STK4/MST1. Interacts with ZIPK/DAPK3. Interacts with LPXN. Interacts with MAK. Part of a complex containing AR, MAK and NCOA3. Interacts with CRY1. Interacts with CCAR1 and GATA2. Interacts with ZNF318 (By similarity). Interacts with BUD31 (PubMed:25091737). Interacts with ARID4A (PubMed:23487765). Interacts with ARID4B (By similarity). Interacts (via NR LBD domain) with ZBTB7A; the interaction is direct and androgen-dependent (PubMed:20812024). Interacts with NCOR1 (PubMed:20812024). Interacts with NCOR2 (PubMed:20812024). Interacts with CRY2 in a ligand-dependent manner (By similarity).</text>
</comment>
<comment type="interaction">
    <interactant intactId="EBI-608057">
        <id>P10275</id>
    </interactant>
    <interactant intactId="EBI-375543">
        <id>P00519</id>
        <label>ABL1</label>
    </interactant>
    <organismsDiffer>false</organismsDiffer>
    <experiments>2</experiments>
</comment>
<comment type="interaction">
    <interactant intactId="EBI-608057">
        <id>P10275</id>
    </interactant>
    <interactant intactId="EBI-540797">
        <id>Q9UBL3</id>
        <label>ASH2L</label>
    </interactant>
    <organismsDiffer>false</organismsDiffer>
    <experiments>3</experiments>
</comment>
<comment type="interaction">
    <interactant intactId="EBI-608057">
        <id>P10275</id>
    </interactant>
    <interactant intactId="EBI-2105445">
        <id>P51451</id>
        <label>BLK</label>
    </interactant>
    <organismsDiffer>false</organismsDiffer>
    <experiments>3</experiments>
</comment>
<comment type="interaction">
    <interactant intactId="EBI-608057">
        <id>P10275</id>
    </interactant>
    <interactant intactId="EBI-2623522">
        <id>Q8WV28</id>
        <label>BLNK</label>
    </interactant>
    <organismsDiffer>false</organismsDiffer>
    <experiments>2</experiments>
</comment>
<comment type="interaction">
    <interactant intactId="EBI-608057">
        <id>P10275</id>
    </interactant>
    <interactant intactId="EBI-9345088">
        <id>O60885-1</id>
        <label>BRD4</label>
    </interactant>
    <organismsDiffer>false</organismsDiffer>
    <experiments>6</experiments>
</comment>
<comment type="interaction">
    <interactant intactId="EBI-608057">
        <id>P10275</id>
    </interactant>
    <interactant intactId="EBI-1047576">
        <id>P78543</id>
        <label>BTG2</label>
    </interactant>
    <organismsDiffer>false</organismsDiffer>
    <experiments>4</experiments>
</comment>
<comment type="interaction">
    <interactant intactId="EBI-608057">
        <id>P10275</id>
    </interactant>
    <interactant intactId="EBI-78060">
        <id>Q14790</id>
        <label>CASP8</label>
    </interactant>
    <organismsDiffer>false</organismsDiffer>
    <experiments>3</experiments>
</comment>
<comment type="interaction">
    <interactant intactId="EBI-608057">
        <id>P10275</id>
    </interactant>
    <interactant intactId="EBI-375001">
        <id>P24385</id>
        <label>CCND1</label>
    </interactant>
    <organismsDiffer>false</organismsDiffer>
    <experiments>4</experiments>
</comment>
<comment type="interaction">
    <interactant intactId="EBI-608057">
        <id>P10275</id>
    </interactant>
    <interactant intactId="EBI-81215">
        <id>Q92793</id>
        <label>CREBBP</label>
    </interactant>
    <organismsDiffer>false</organismsDiffer>
    <experiments>3</experiments>
</comment>
<comment type="interaction">
    <interactant intactId="EBI-608057">
        <id>P10275</id>
    </interactant>
    <interactant intactId="EBI-2802973">
        <id>O14595</id>
        <label>CTDSP2</label>
    </interactant>
    <organismsDiffer>false</organismsDiffer>
    <experiments>3</experiments>
</comment>
<comment type="interaction">
    <interactant intactId="EBI-608057">
        <id>P10275</id>
    </interactant>
    <interactant intactId="EBI-491549">
        <id>P35222</id>
        <label>CTNNB1</label>
    </interactant>
    <organismsDiffer>false</organismsDiffer>
    <experiments>11</experiments>
</comment>
<comment type="interaction">
    <interactant intactId="EBI-608057">
        <id>P10275</id>
    </interactant>
    <interactant intactId="EBI-77321">
        <id>Q9UER7</id>
        <label>DAXX</label>
    </interactant>
    <organismsDiffer>false</organismsDiffer>
    <experiments>5</experiments>
</comment>
<comment type="interaction">
    <interactant intactId="EBI-608057">
        <id>P10275</id>
    </interactant>
    <interactant intactId="EBI-1632155">
        <id>P20711</id>
        <label>DDC</label>
    </interactant>
    <organismsDiffer>false</organismsDiffer>
    <experiments>2</experiments>
</comment>
<comment type="interaction">
    <interactant intactId="EBI-608057">
        <id>P10275</id>
    </interactant>
    <interactant intactId="EBI-79704">
        <id>P11308</id>
        <label>ERG</label>
    </interactant>
    <organismsDiffer>false</organismsDiffer>
    <experiments>4</experiments>
</comment>
<comment type="interaction">
    <interactant intactId="EBI-608057">
        <id>P10275</id>
    </interactant>
    <interactant intactId="EBI-1055635">
        <id>P07332</id>
        <label>FES</label>
    </interactant>
    <organismsDiffer>false</organismsDiffer>
    <experiments>3</experiments>
</comment>
<comment type="interaction">
    <interactant intactId="EBI-608057">
        <id>P10275</id>
    </interactant>
    <interactant intactId="EBI-1383732">
        <id>P09769</id>
        <label>FGR</label>
    </interactant>
    <organismsDiffer>false</organismsDiffer>
    <experiments>3</experiments>
</comment>
<comment type="interaction">
    <interactant intactId="EBI-608057">
        <id>P10275</id>
    </interactant>
    <interactant intactId="EBI-1047444">
        <id>Q02790</id>
        <label>FKBP4</label>
    </interactant>
    <organismsDiffer>false</organismsDiffer>
    <experiments>2</experiments>
</comment>
<comment type="interaction">
    <interactant intactId="EBI-608057">
        <id>P10275</id>
    </interactant>
    <interactant intactId="EBI-3918034">
        <id>P55317</id>
        <label>FOXA1</label>
    </interactant>
    <organismsDiffer>false</organismsDiffer>
    <experiments>4</experiments>
</comment>
<comment type="interaction">
    <interactant intactId="EBI-608057">
        <id>P10275</id>
    </interactant>
    <interactant intactId="EBI-1759806">
        <id>O75593</id>
        <label>FOXH1</label>
    </interactant>
    <organismsDiffer>false</organismsDiffer>
    <experiments>3</experiments>
</comment>
<comment type="interaction">
    <interactant intactId="EBI-608057">
        <id>P10275</id>
    </interactant>
    <interactant intactId="EBI-970191">
        <id>Q14451</id>
        <label>GRB7</label>
    </interactant>
    <organismsDiffer>false</organismsDiffer>
    <experiments>3</experiments>
</comment>
<comment type="interaction">
    <interactant intactId="EBI-608057">
        <id>P10275</id>
    </interactant>
    <interactant intactId="EBI-351506">
        <id>P06396</id>
        <label>GSN</label>
    </interactant>
    <organismsDiffer>false</organismsDiffer>
    <experiments>2</experiments>
</comment>
<comment type="interaction">
    <interactant intactId="EBI-608057">
        <id>P10275</id>
    </interactant>
    <interactant intactId="EBI-308629">
        <id>P56524</id>
        <label>HDAC4</label>
    </interactant>
    <organismsDiffer>false</organismsDiffer>
    <experiments>4</experiments>
</comment>
<comment type="interaction">
    <interactant intactId="EBI-608057">
        <id>P10275</id>
    </interactant>
    <interactant intactId="EBI-447269">
        <id>Q16665</id>
        <label>HIF1A</label>
    </interactant>
    <organismsDiffer>false</organismsDiffer>
    <experiments>2</experiments>
</comment>
<comment type="interaction">
    <interactant intactId="EBI-608057">
        <id>P10275</id>
    </interactant>
    <interactant intactId="EBI-2867186">
        <id>Q16666</id>
        <label>IFI16</label>
    </interactant>
    <organismsDiffer>false</organismsDiffer>
    <experiments>3</experiments>
</comment>
<comment type="interaction">
    <interactant intactId="EBI-608057">
        <id>P10275</id>
    </interactant>
    <interactant intactId="EBI-1384248">
        <id>O15357</id>
        <label>INPPL1</label>
    </interactant>
    <organismsDiffer>false</organismsDiffer>
    <experiments>3</experiments>
</comment>
<comment type="interaction">
    <interactant intactId="EBI-608057">
        <id>P10275</id>
    </interactant>
    <interactant intactId="EBI-1224969">
        <id>Q15652</id>
        <label>JMJD1C</label>
    </interactant>
    <organismsDiffer>false</organismsDiffer>
    <experiments>4</experiments>
</comment>
<comment type="interaction">
    <interactant intactId="EBI-608057">
        <id>P10275</id>
    </interactant>
    <interactant intactId="EBI-473199">
        <id>O95251</id>
        <label>KAT7</label>
    </interactant>
    <organismsDiffer>false</organismsDiffer>
    <experiments>5</experiments>
</comment>
<comment type="interaction">
    <interactant intactId="EBI-608057">
        <id>P10275</id>
    </interactant>
    <interactant intactId="EBI-1246860">
        <id>Q9BY66</id>
        <label>KDM5D</label>
    </interactant>
    <organismsDiffer>false</organismsDiffer>
    <experiments>2</experiments>
</comment>
<comment type="interaction">
    <interactant intactId="EBI-608057">
        <id>P10275</id>
    </interactant>
    <interactant intactId="EBI-12559887">
        <id>Q9BY66-3</id>
        <label>KDM5D</label>
    </interactant>
    <organismsDiffer>false</organismsDiffer>
    <experiments>2</experiments>
</comment>
<comment type="interaction">
    <interactant intactId="EBI-608057">
        <id>P10275</id>
    </interactant>
    <interactant intactId="EBI-591370">
        <id>Q03164</id>
        <label>KMT2A</label>
    </interactant>
    <organismsDiffer>false</organismsDiffer>
    <experiments>4</experiments>
</comment>
<comment type="interaction">
    <interactant intactId="EBI-608057">
        <id>P10275</id>
    </interactant>
    <interactant intactId="EBI-996065">
        <id>O14686</id>
        <label>KMT2D</label>
    </interactant>
    <organismsDiffer>false</organismsDiffer>
    <experiments>3</experiments>
</comment>
<comment type="interaction">
    <interactant intactId="EBI-608057">
        <id>P10275</id>
    </interactant>
    <interactant intactId="EBI-1348">
        <id>P06239</id>
        <label>LCK</label>
    </interactant>
    <organismsDiffer>false</organismsDiffer>
    <experiments>7</experiments>
</comment>
<comment type="interaction">
    <interactant intactId="EBI-608057">
        <id>P10275</id>
    </interactant>
    <interactant intactId="EBI-79452">
        <id>P07948</id>
        <label>LYN</label>
    </interactant>
    <organismsDiffer>false</organismsDiffer>
    <experiments>5</experiments>
</comment>
<comment type="interaction">
    <interactant intactId="EBI-608057">
        <id>P10275</id>
    </interactant>
    <interactant intactId="EBI-3911321">
        <id>P20794</id>
        <label>MAK</label>
    </interactant>
    <organismsDiffer>false</organismsDiffer>
    <experiments>5</experiments>
</comment>
<comment type="interaction">
    <interactant intactId="EBI-608057">
        <id>P10275</id>
    </interactant>
    <interactant intactId="EBI-751664">
        <id>P42679</id>
        <label>MATK</label>
    </interactant>
    <organismsDiffer>false</organismsDiffer>
    <experiments>4</experiments>
</comment>
<comment type="interaction">
    <interactant intactId="EBI-608057">
        <id>P10275</id>
    </interactant>
    <interactant intactId="EBI-389668">
        <id>Q00987</id>
        <label>MDM2</label>
    </interactant>
    <organismsDiffer>false</organismsDiffer>
    <experiments>2</experiments>
</comment>
<comment type="interaction">
    <interactant intactId="EBI-608057">
        <id>P10275</id>
    </interactant>
    <interactant intactId="EBI-81236">
        <id>Q15596</id>
        <label>NCOA2</label>
    </interactant>
    <organismsDiffer>false</organismsDiffer>
    <experiments>3</experiments>
</comment>
<comment type="interaction">
    <interactant intactId="EBI-608057">
        <id>P10275</id>
    </interactant>
    <interactant intactId="EBI-78670">
        <id>Q14686</id>
        <label>NCOA6</label>
    </interactant>
    <organismsDiffer>false</organismsDiffer>
    <experiments>3</experiments>
</comment>
<comment type="interaction">
    <interactant intactId="EBI-608057">
        <id>P10275</id>
    </interactant>
    <interactant intactId="EBI-2693298">
        <id>O96028</id>
        <label>NSD2</label>
    </interactant>
    <organismsDiffer>false</organismsDiffer>
    <experiments>5</experiments>
</comment>
<comment type="interaction">
    <interactant intactId="EBI-608057">
        <id>P10275</id>
    </interactant>
    <interactant intactId="EBI-1164361">
        <id>Q99497</id>
        <label>PARK7</label>
    </interactant>
    <organismsDiffer>false</organismsDiffer>
    <experiments>6</experiments>
</comment>
<comment type="interaction">
    <interactant intactId="EBI-608057">
        <id>P10275</id>
    </interactant>
    <interactant intactId="EBI-79464">
        <id>P27986</id>
        <label>PIK3R1</label>
    </interactant>
    <organismsDiffer>false</organismsDiffer>
    <experiments>5</experiments>
</comment>
<comment type="interaction">
    <interactant intactId="EBI-608057">
        <id>P10275</id>
    </interactant>
    <interactant intactId="EBI-346930">
        <id>O00459</id>
        <label>PIK3R2</label>
    </interactant>
    <organismsDiffer>false</organismsDiffer>
    <experiments>14</experiments>
</comment>
<comment type="interaction">
    <interactant intactId="EBI-608057">
        <id>P10275</id>
    </interactant>
    <interactant intactId="EBI-79893">
        <id>Q92569</id>
        <label>PIK3R3</label>
    </interactant>
    <organismsDiffer>false</organismsDiffer>
    <experiments>37</experiments>
</comment>
<comment type="interaction">
    <interactant intactId="EBI-608057">
        <id>P10275</id>
    </interactant>
    <interactant intactId="EBI-79387">
        <id>P19174</id>
        <label>PLCG1</label>
    </interactant>
    <organismsDiffer>false</organismsDiffer>
    <experiments>22</experiments>
</comment>
<comment type="interaction">
    <interactant intactId="EBI-608057">
        <id>P10275</id>
    </interactant>
    <interactant intactId="EBI-617403">
        <id>P16885</id>
        <label>PLCG2</label>
    </interactant>
    <organismsDiffer>false</organismsDiffer>
    <experiments>6</experiments>
</comment>
<comment type="interaction">
    <interactant intactId="EBI-608057">
        <id>P10275</id>
    </interactant>
    <interactant intactId="EBI-353193">
        <id>Q06830</id>
        <label>PRDX1</label>
    </interactant>
    <organismsDiffer>false</organismsDiffer>
    <experiments>3</experiments>
</comment>
<comment type="interaction">
    <interactant intactId="EBI-608057">
        <id>P10275</id>
    </interactant>
    <interactant intactId="EBI-352053">
        <id>P78527</id>
        <label>PRKDC</label>
    </interactant>
    <organismsDiffer>false</organismsDiffer>
    <experiments>3</experiments>
</comment>
<comment type="interaction">
    <interactant intactId="EBI-608057">
        <id>P10275</id>
    </interactant>
    <interactant intactId="EBI-297779">
        <id>Q06124</id>
        <label>PTPN11</label>
    </interactant>
    <organismsDiffer>false</organismsDiffer>
    <experiments>12</experiments>
</comment>
<comment type="interaction">
    <interactant intactId="EBI-608057">
        <id>P10275</id>
    </interactant>
    <interactant intactId="EBI-1026476">
        <id>P20936</id>
        <label>RASA1</label>
    </interactant>
    <organismsDiffer>false</organismsDiffer>
    <experiments>16</experiments>
</comment>
<comment type="interaction">
    <interactant intactId="EBI-608057">
        <id>P10275</id>
    </interactant>
    <interactant intactId="EBI-2130308">
        <id>Q9UBS8</id>
        <label>RNF14</label>
    </interactant>
    <organismsDiffer>false</organismsDiffer>
    <experiments>2</experiments>
</comment>
<comment type="interaction">
    <interactant intactId="EBI-608057">
        <id>P10275</id>
    </interactant>
    <interactant intactId="EBI-2341483">
        <id>Q9Y252</id>
        <label>RNF6</label>
    </interactant>
    <organismsDiffer>false</organismsDiffer>
    <experiments>10</experiments>
</comment>
<comment type="interaction">
    <interactant intactId="EBI-608057">
        <id>P10275</id>
    </interactant>
    <interactant intactId="EBI-3923013">
        <id>O14796</id>
        <label>SH2D1B</label>
    </interactant>
    <organismsDiffer>false</organismsDiffer>
    <experiments>3</experiments>
</comment>
<comment type="interaction">
    <interactant intactId="EBI-608057">
        <id>P10275</id>
    </interactant>
    <interactant intactId="EBI-490630">
        <id>Q9NP31</id>
        <label>SH2D2A</label>
    </interactant>
    <organismsDiffer>false</organismsDiffer>
    <experiments>6</experiments>
</comment>
<comment type="interaction">
    <interactant intactId="EBI-608057">
        <id>P10275</id>
    </interactant>
    <interactant intactId="EBI-78835">
        <id>P29353</id>
        <label>SHC1</label>
    </interactant>
    <organismsDiffer>false</organismsDiffer>
    <experiments>14</experiments>
</comment>
<comment type="interaction">
    <interactant intactId="EBI-608057">
        <id>P10275</id>
    </interactant>
    <interactant intactId="EBI-9453524">
        <id>Q6S5L8</id>
        <label>SHC4</label>
    </interactant>
    <organismsDiffer>false</organismsDiffer>
    <experiments>3</experiments>
</comment>
<comment type="interaction">
    <interactant intactId="EBI-608057">
        <id>P10275</id>
    </interactant>
    <interactant intactId="EBI-3956977">
        <id>Q5VZ18</id>
        <label>SHE</label>
    </interactant>
    <organismsDiffer>false</organismsDiffer>
    <experiments>3</experiments>
</comment>
<comment type="interaction">
    <interactant intactId="EBI-608057">
        <id>P10275</id>
    </interactant>
    <interactant intactId="EBI-1567153">
        <id>Q15797</id>
        <label>SMAD1</label>
    </interactant>
    <organismsDiffer>false</organismsDiffer>
    <experiments>6</experiments>
</comment>
<comment type="interaction">
    <interactant intactId="EBI-608057">
        <id>P10275</id>
    </interactant>
    <interactant intactId="EBI-3929549">
        <id>O14544</id>
        <label>SOCS6</label>
    </interactant>
    <organismsDiffer>false</organismsDiffer>
    <experiments>4</experiments>
</comment>
<comment type="interaction">
    <interactant intactId="EBI-608057">
        <id>P10275</id>
    </interactant>
    <interactant intactId="EBI-621482">
        <id>P12931</id>
        <label>SRC</label>
    </interactant>
    <organismsDiffer>false</organismsDiffer>
    <experiments>7</experiments>
</comment>
<comment type="interaction">
    <interactant intactId="EBI-608057">
        <id>P10275</id>
    </interactant>
    <interactant intactId="EBI-6083058">
        <id>Q9ULZ2</id>
        <label>STAP1</label>
    </interactant>
    <organismsDiffer>false</organismsDiffer>
    <experiments>2</experiments>
</comment>
<comment type="interaction">
    <interactant intactId="EBI-608057">
        <id>P10275</id>
    </interactant>
    <interactant intactId="EBI-80140">
        <id>P63165</id>
        <label>SUMO1</label>
    </interactant>
    <organismsDiffer>false</organismsDiffer>
    <experiments>7</experiments>
</comment>
<comment type="interaction">
    <interactant intactId="EBI-608057">
        <id>P10275</id>
    </interactant>
    <interactant intactId="EBI-3389814">
        <id>Q9HBL0</id>
        <label>TNS1</label>
    </interactant>
    <organismsDiffer>false</organismsDiffer>
    <experiments>3</experiments>
</comment>
<comment type="interaction">
    <interactant intactId="EBI-608057">
        <id>P10275</id>
    </interactant>
    <interactant intactId="EBI-515331">
        <id>P07947</id>
        <label>YES1</label>
    </interactant>
    <organismsDiffer>false</organismsDiffer>
    <experiments>5</experiments>
</comment>
<comment type="interaction">
    <interactant intactId="EBI-608057">
        <id>P10275</id>
    </interactant>
    <interactant intactId="EBI-1371343">
        <id>Q9R1E0</id>
        <label>Foxo1</label>
    </interactant>
    <organismsDiffer>true</organismsDiffer>
    <experiments>4</experiments>
</comment>
<comment type="interaction">
    <interactant intactId="EBI-608057">
        <id>P10275</id>
    </interactant>
    <interactant intactId="EBI-957413">
        <id>Q06986</id>
        <label>Siah2</label>
    </interactant>
    <organismsDiffer>true</organismsDiffer>
    <experiments>6</experiments>
</comment>
<comment type="subcellular location">
    <subcellularLocation>
        <location evidence="40 59 75 87 88 105">Nucleus</location>
    </subcellularLocation>
    <subcellularLocation>
        <location evidence="40 75 87">Cytoplasm</location>
    </subcellularLocation>
    <text evidence="40 75 105">Detected at the promoter of target genes (PubMed:25091737). Predominantly cytoplasmic in unligated form but translocates to the nucleus upon ligand-binding. Can also translocate to the nucleus in unligated form in the presence of RACK1.</text>
</comment>
<comment type="alternative products">
    <event type="alternative splicing"/>
    <isoform>
        <id>P10275-1</id>
        <name>1</name>
        <name>AR-B</name>
        <sequence type="displayed"/>
    </isoform>
    <isoform>
        <id>P10275-2</id>
        <name>2</name>
        <name>AR-A</name>
        <name>Variant AR45</name>
        <sequence type="described" ref="VSP_036889 VSP_036890"/>
    </isoform>
    <isoform>
        <id>P10275-3</id>
        <name>3</name>
        <name>AR3</name>
        <sequence type="described" ref="VSP_058166 VSP_058168"/>
    </isoform>
    <isoform>
        <id>P10275-4</id>
        <name>4</name>
        <name>AR4</name>
        <sequence type="described" ref="VSP_058167 VSP_058169"/>
    </isoform>
</comment>
<comment type="tissue specificity">
    <molecule>Isoform 2</molecule>
    <text evidence="59">Mainly expressed in heart and skeletal muscle.</text>
</comment>
<comment type="tissue specificity">
    <molecule>Isoform 3</molecule>
    <text evidence="87">Expressed in basal and stromal cells of the prostate (at protein level).</text>
</comment>
<comment type="domain">
    <text evidence="105">Composed of three domains: a modulating N-terminal domain, a DNA-binding domain and a C-terminal ligand-binding domain. In the presence of bound steroid the ligand-binding domain interacts with the N-terminal modulating domain, and thereby activates AR transcription factor activity. Agonist binding is required for dimerization and binding to target DNA. The transcription factor activity of the complex formed by ligand-activated AR and DNA is modulated by interactions with coactivator and corepressor proteins (PubMed:25091737). Interaction with RANBP9 is mediated by both the N-terminal domain and the DNA-binding domain. Interaction with EFCAB6/DJBP is mediated by the DNA-binding domain.</text>
</comment>
<comment type="PTM">
    <text evidence="32 88 92">Sumoylated on Lys-388 (major) and Lys-521. Ubiquitinated. Deubiquitinated by USP26. 'Lys-6' and 'Lys-27'-linked polyubiquitination by RNF6 modulates AR transcriptional activity and specificity.</text>
</comment>
<comment type="PTM">
    <text evidence="47 71 73 93 97 98">Phosphorylated in prostate cancer cells in response to several growth factors including EGF. Phosphorylation is induced by c-Src kinase (CSK). Tyr-535 is one of the major phosphorylation sites and an increase in phosphorylation and Src kinase activity is associated with prostate cancer progression. Phosphorylation by TNK2 enhances the DNA-binding and transcriptional activity and may be responsible for androgen-independent progression of prostate cancer. Phosphorylation at Ser-83 by CDK9 regulates AR promoter selectivity and cell growth. Phosphorylation by PAK6 leads to AR-mediated transcription inhibition.</text>
</comment>
<comment type="PTM">
    <text evidence="99">Palmitoylated by ZDHHC7 and ZDHHC21. Palmitoylation is required for plasma membrane targeting and for rapid intracellular signaling via ERK and AKT kinases and cAMP generation.</text>
</comment>
<comment type="polymorphism">
    <text evidence="57 94 108 143 169">The poly-Gln region of AR is highly polymorphic and the number of Gln varies in the population (from 17 to 26). A smaller size of the poly-Gln region may be associated with the development of prostate cancer. Long poly-Gln alleles (&gt;23) may be associated with higher testosterone levels and severe clinical outcome in COVID-19 disease (PubMed:33647767).</text>
</comment>
<comment type="polymorphism">
    <text evidence="33 62">The poly-Gly region of AR is polymorphic and ranges from 24 to 31 Gly. A poly-Gly region shorter or equal to 23 may be associated with the development of androgenetic alopecia.</text>
</comment>
<comment type="disease" evidence="6 9 10 12 16 17 18 23 24 28 31 34 35 42 43 45 46 50 52 53 54 60 65 66 68 78 90 96 104 106 110 111 113 114 115 117 121 122 123 124 125 126 128 129 131 134 138 139 142 145 146 147 148 151 154 155 156 157 158 162 163 164 166 167 168 170 171 174 175 176 177 179 182 183 186 187 188 191 192 193 195">
    <disease id="DI-00116">
        <name>Androgen insensitivity syndrome</name>
        <acronym>AIS</acronym>
        <description>An X-linked recessive form of pseudohermaphroditism due end-organ resistance to androgen. Affected males have female external genitalia, female breast development, blind vagina, absent uterus and female adnexa, and abdominal or inguinal testes, despite a normal 46,XY karyotype.</description>
        <dbReference type="MIM" id="300068"/>
    </disease>
    <text>The disease is caused by variants affecting the gene represented in this entry.</text>
</comment>
<comment type="disease" evidence="61">
    <disease id="DI-01053">
        <name>Spinal and bulbar muscular atrophy X-linked 1</name>
        <acronym>SMAX1</acronym>
        <description>An X-linked recessive form of spinal muscular atrophy. Spinal muscular atrophy refers to a group of neuromuscular disorders characterized by degeneration of the anterior horn cells of the spinal cord, leading to symmetrical muscle weakness and atrophy. SMAX1 occurs only in men. Age at onset is usually in the third to fifth decade of life, but earlier involvement has been reported. It is characterized by slowly progressive limb and bulbar muscle weakness with fasciculations, muscle atrophy, and gynecomastia. The disorder is clinically similar to classic forms of autosomal spinal muscular atrophy.</description>
        <dbReference type="MIM" id="313200"/>
    </disease>
    <text>The disease is caused by variants affecting the gene represented in this entry. Caused by trinucleotide CAG repeat expansion. In SMAX1 patients the number of Gln ranges from 38 to 62. Longer expansions result in earlier onset and more severe clinical manifestations of the disease.</text>
</comment>
<comment type="disease" evidence="149">
    <disease id="DI-06916">
        <name>Prostate cancer, hereditary, X-linked 3</name>
        <acronym>HPCX3</acronym>
        <description>A condition associated with familial predisposition to cancer of the prostate. Most prostate cancers are adenocarcinomas that develop in the acini of the prostatic ducts. Other rare histopathologic types of prostate cancer that occur in approximately 5% of patients include small cell carcinoma, mucinous carcinoma, prostatic ductal carcinoma, transitional cell carcinoma, squamous cell carcinoma, basal cell carcinoma, adenoid cystic carcinoma (basaloid), signet-ring cell carcinoma and neuroendocrine carcinoma.</description>
        <dbReference type="MIM" id="301120"/>
    </disease>
    <text>Disease susceptibility is associated with variants affecting the gene represented in this entry.</text>
</comment>
<comment type="disease">
    <text evidence="13 22 58 66 72 101 105 135 140 161">Defects in AR may play a role in metastatic prostate cancer. The mutated receptor stimulates prostate growth and metastases development despite of androgen ablation. This treatment can reduce primary and metastatic lesions probably by inducing apoptosis of tumor cells when they express the wild-type receptor.</text>
</comment>
<comment type="disease" evidence="6 9 19 20 21 28 34 36 41 42 43 44 46 48 52 91 111 116 117 119 120 121 123 124 127 130 132 136 141 144 145 146 148 150 156 158 159 160 168 173 176 178 181 185 187 189 192 194">
    <disease id="DI-00117">
        <name>Androgen insensitivity, partial</name>
        <acronym>PAIS</acronym>
        <description>A disorder that is characterized by hypospadias, hypogonadism, gynecomastia, genital ambiguity, normal XY karyotype, and a pedigree pattern consistent with X-linked recessive inheritance. Some patients present azoospermia or severe oligospermia without other clinical manifestations.</description>
        <dbReference type="MIM" id="312300"/>
    </disease>
    <text>The disease is caused by variants affecting the gene represented in this entry.</text>
</comment>
<comment type="disease" evidence="130">
    <disease id="DI-03834">
        <name>Hypospadias 1, X-linked</name>
        <acronym>HYSP1</acronym>
        <description>A common malformation in which the urethra opens on the ventral side of the penis, due to developmental arrest of urethral fusion. The opening can be located glandular, penile, or even more posterior in the scrotum or perineum. Hypospadias is a feature of several syndromic disorders, including the androgen insensitivity syndrome and Opitz syndrome.</description>
        <dbReference type="MIM" id="300633"/>
    </disease>
    <text>The disease is caused by variants affecting the gene represented in this entry.</text>
</comment>
<comment type="miscellaneous">
    <text>In the absence of ligand, steroid hormone receptors are thought to be weakly associated with nuclear components; hormone binding greatly increases receptor affinity. The hormone-receptor complex appears to recognize discrete DNA sequences upstream of transcriptional start sites.</text>
</comment>
<comment type="miscellaneous">
    <text>Transcriptional activity is enhanced by binding to RANBP9.</text>
</comment>
<comment type="miscellaneous">
    <text>The level of tyrosine phosphorylation may serve as a diagnostic tool to predict patient outcome in response to hormone-ablation therapy. Inhibition of tyrosine phosphorylation may be an effective intervention target for hormone-refractory prostate cancer.</text>
</comment>
<comment type="miscellaneous">
    <molecule>Isoform 3</molecule>
    <text evidence="87">Minor isoform up-regulated in prostate cancer cells.</text>
</comment>
<comment type="miscellaneous">
    <molecule>Isoform 4</molecule>
    <text evidence="87">Minor isoform identified in prostate cancer cells.</text>
</comment>
<comment type="similarity">
    <text evidence="196">Belongs to the nuclear hormone receptor family. NR3 subfamily.</text>
</comment>
<comment type="caution">
    <text evidence="197 198">Had previously been shown to interact with PELP1. However this paper was retracted as cell-based data was viewed as unreliable.</text>
</comment>
<comment type="online information" name="Androgen receptor gene mutations database">
    <link uri="https://androgendb.mcgill.ca"/>
</comment>
<comment type="online information" name="Atlas of Genetics and Cytogenetics in Oncology and Haematology">
    <link uri="https://atlasgeneticsoncology.org/gene/685/AR"/>
</comment>
<comment type="online information" name="Wikipedia">
    <link uri="https://en.wikipedia.org/wiki/Androgen_receptor"/>
    <text>Androgen receptor entry</text>
</comment>
<comment type="online information" name="X-chromosome gene database, androgen receptor (AR)">
    <link uri="https://databases.lovd.nl/shared/genes/AR"/>
    <text>Leiden Open Variation Database (LOVD)</text>
</comment>
<protein>
    <recommendedName>
        <fullName>Androgen receptor</fullName>
    </recommendedName>
    <alternativeName>
        <fullName>Dihydrotestosterone receptor</fullName>
    </alternativeName>
    <alternativeName>
        <fullName>Nuclear receptor subfamily 3 group C member 4</fullName>
    </alternativeName>
</protein>
<proteinExistence type="evidence at protein level"/>
<accession>P10275</accession>
<accession>A0A0B4J1T2</accession>
<accession>A2RUN2</accession>
<accession>B1AKD7</accession>
<accession>C0JKD3</accession>
<accession>C0JKD4</accession>
<accession>E7EVX6</accession>
<accession>Q9UD95</accession>
<feature type="chain" id="PRO_0000053704" description="Androgen receptor">
    <location>
        <begin position="1"/>
        <end position="920"/>
    </location>
</feature>
<feature type="domain" description="NR LBD" evidence="4">
    <location>
        <begin position="669"/>
        <end position="900"/>
    </location>
</feature>
<feature type="DNA-binding region" description="Nuclear receptor" evidence="3">
    <location>
        <begin position="560"/>
        <end position="632"/>
    </location>
</feature>
<feature type="zinc finger region" description="NR C4-type" evidence="3">
    <location>
        <begin position="560"/>
        <end position="580"/>
    </location>
</feature>
<feature type="zinc finger region" description="NR C4-type" evidence="3">
    <location>
        <begin position="596"/>
        <end position="620"/>
    </location>
</feature>
<feature type="region of interest" description="Interaction with ZNF318" evidence="2">
    <location>
        <begin position="1"/>
        <end position="587"/>
    </location>
</feature>
<feature type="region of interest" description="Modulating">
    <location>
        <begin position="1"/>
        <end position="559"/>
    </location>
</feature>
<feature type="region of interest" description="Disordered" evidence="5">
    <location>
        <begin position="36"/>
        <end position="167"/>
    </location>
</feature>
<feature type="region of interest" description="Disordered" evidence="5">
    <location>
        <begin position="195"/>
        <end position="228"/>
    </location>
</feature>
<feature type="region of interest" description="Interaction with LPXN" evidence="83">
    <location>
        <begin position="552"/>
        <end position="919"/>
    </location>
</feature>
<feature type="region of interest" description="Interaction with HIPK3" evidence="1">
    <location>
        <begin position="572"/>
        <end position="662"/>
    </location>
</feature>
<feature type="region of interest" description="Interaction with CCAR1" evidence="103">
    <location>
        <begin position="592"/>
        <end position="919"/>
    </location>
</feature>
<feature type="region of interest" description="Interaction with KAT7" evidence="30">
    <location>
        <begin position="625"/>
        <end position="919"/>
    </location>
</feature>
<feature type="compositionally biased region" description="Low complexity" evidence="5">
    <location>
        <begin position="44"/>
        <end position="91"/>
    </location>
</feature>
<feature type="compositionally biased region" description="Low complexity" evidence="5">
    <location>
        <begin position="195"/>
        <end position="217"/>
    </location>
</feature>
<feature type="compositionally biased region" description="Polar residues" evidence="5">
    <location>
        <begin position="218"/>
        <end position="228"/>
    </location>
</feature>
<feature type="binding site" evidence="56 69 76 105 199 200 201 202 203 204 205 206 207 209 210 211 212 213 214 215 216 217 218 219 220 221 222 223 224 226 227 228 229 230 231 232 233 234 235 236 241">
    <location>
        <position position="706"/>
    </location>
    <ligand>
        <name>17beta-hydroxy-5alpha-androstan-3-one</name>
        <dbReference type="ChEBI" id="CHEBI:16330"/>
    </ligand>
</feature>
<feature type="binding site" evidence="56 69 76 105 199 200 201 202 203 204 206 207 208 209 210 211 212 213 214 215 217 218 219 220 221 222 223 224 225 226 227 228 229 230 231 232 233 234 235 236 241">
    <location>
        <position position="753"/>
    </location>
    <ligand>
        <name>17beta-hydroxy-5alpha-androstan-3-one</name>
        <dbReference type="ChEBI" id="CHEBI:16330"/>
    </ligand>
</feature>
<feature type="binding site" evidence="56 69 76 105 199 200 201 202 203 204 206 207 208 209 210 211 212 213 214 215 217 218 219 220 221 222 223 224 225 226 227 228 229 230 231 232 233 234 235 236 241">
    <location>
        <position position="878"/>
    </location>
    <ligand>
        <name>17beta-hydroxy-5alpha-androstan-3-one</name>
        <dbReference type="ChEBI" id="CHEBI:16330"/>
    </ligand>
</feature>
<feature type="site" description="Interaction with coactivator LXXL and FXXFY motifs" evidence="105">
    <location>
        <position position="721"/>
    </location>
</feature>
<feature type="site" description="Interaction with coactivator FXXLF and FXXFY motifs" evidence="105">
    <location>
        <position position="898"/>
    </location>
</feature>
<feature type="modified residue" description="Phosphoserine; by CDK9" evidence="97">
    <location>
        <position position="83"/>
    </location>
</feature>
<feature type="modified residue" description="Phosphoserine" evidence="242 243">
    <location>
        <position position="96"/>
    </location>
</feature>
<feature type="modified residue" description="Phosphotyrosine; by CSK" evidence="71">
    <location>
        <position position="225"/>
    </location>
</feature>
<feature type="modified residue" description="Phosphoserine" evidence="243">
    <location>
        <position position="258"/>
    </location>
</feature>
<feature type="modified residue" description="Phosphotyrosine; by CSK and TNK2" evidence="71 73 93">
    <location>
        <position position="269"/>
    </location>
</feature>
<feature type="modified residue" description="Phosphotyrosine; by CSK" evidence="71">
    <location>
        <position position="309"/>
    </location>
</feature>
<feature type="modified residue" description="Phosphotyrosine; by CSK" evidence="71">
    <location>
        <position position="348"/>
    </location>
</feature>
<feature type="modified residue" description="Phosphotyrosine; by CSK" evidence="71">
    <location>
        <position position="359"/>
    </location>
</feature>
<feature type="modified residue" description="Phosphotyrosine; by CSK" evidence="71">
    <location>
        <position position="364"/>
    </location>
</feature>
<feature type="modified residue" description="Phosphotyrosine; by CSK and TNK2" evidence="71 73">
    <location>
        <position position="365"/>
    </location>
</feature>
<feature type="modified residue" description="Phosphotyrosine; by CSK" evidence="71">
    <location>
        <position position="395"/>
    </location>
</feature>
<feature type="modified residue" description="Phosphotyrosine; by CSK" evidence="71">
    <location>
        <position position="535"/>
    </location>
</feature>
<feature type="modified residue" description="Phosphotyrosine; by CSK" evidence="71">
    <location>
        <position position="552"/>
    </location>
</feature>
<feature type="modified residue" description="Phosphoserine; by STK4/MST1" evidence="98">
    <location>
        <position position="651"/>
    </location>
</feature>
<feature type="modified residue" description="Phosphotyrosine; by CSK" evidence="71">
    <location>
        <position position="916"/>
    </location>
</feature>
<feature type="cross-link" description="Glycyl lysine isopeptide (Lys-Gly) (interchain with G-Cter in SUMO)" evidence="32">
    <location>
        <position position="388"/>
    </location>
</feature>
<feature type="cross-link" description="Glycyl lysine isopeptide (Lys-Gly) (interchain with G-Cter in SUMO)" evidence="32">
    <location>
        <position position="521"/>
    </location>
</feature>
<feature type="cross-link" description="Glycyl lysine isopeptide (Lys-Gly) (interchain with G-Cter in ubiquitin)" evidence="88">
    <location>
        <position position="846"/>
    </location>
</feature>
<feature type="cross-link" description="Glycyl lysine isopeptide (Lys-Gly) (interchain with G-Cter in ubiquitin)" evidence="88">
    <location>
        <position position="848"/>
    </location>
</feature>
<feature type="splice variant" id="VSP_036889" description="In isoform 2." evidence="196">
    <location>
        <begin position="1"/>
        <end position="532"/>
    </location>
</feature>
<feature type="splice variant" id="VSP_036890" description="In isoform 2." evidence="196">
    <original>GPYGDMR</original>
    <variation>MILWLHS</variation>
    <location>
        <begin position="533"/>
        <end position="539"/>
    </location>
</feature>
<feature type="splice variant" id="VSP_058166" description="In isoform 3.">
    <original>ARKLKKLGNLKLQEEG</original>
    <variation>EKFRVGNCKHLKMTRP</variation>
    <location>
        <begin position="629"/>
        <end position="644"/>
    </location>
</feature>
<feature type="splice variant" id="VSP_058167" description="In isoform 4.">
    <original>RKLKKLGNLKLQEEGEASS</original>
    <variation>AVVVSERILRVFGVSEWLP</variation>
    <location>
        <begin position="630"/>
        <end position="648"/>
    </location>
</feature>
<feature type="splice variant" id="VSP_058168" description="In isoform 3.">
    <location>
        <begin position="645"/>
        <end position="920"/>
    </location>
</feature>
<feature type="splice variant" id="VSP_058169" description="In isoform 4.">
    <location>
        <begin position="649"/>
        <end position="920"/>
    </location>
</feature>
<feature type="sequence variant" id="VAR_004679" description="In PAIS; dbSNP:rs104894742." evidence="159">
    <original>E</original>
    <variation>K</variation>
    <location>
        <position position="2"/>
    </location>
</feature>
<feature type="sequence variant" id="VAR_004680" description="In prostate cancer.">
    <original>L</original>
    <variation>S</variation>
    <location>
        <position position="54"/>
    </location>
</feature>
<feature type="sequence variant" id="VAR_004681" description="In prostate cancer; dbSNP:rs78686797." evidence="87">
    <original>L</original>
    <variation>Q</variation>
    <location>
        <position position="57"/>
    </location>
</feature>
<feature type="sequence variant" id="VAR_009711" description="In prostate cancer.">
    <original>Q</original>
    <variation>R</variation>
    <location>
        <position position="64"/>
    </location>
</feature>
<feature type="sequence variant" id="VAR_009712" description="In prostate cancer.">
    <original>Q</original>
    <variation>H</variation>
    <location>
        <position position="114"/>
    </location>
</feature>
<feature type="sequence variant" id="VAR_009713" description="In prostate cancer.">
    <original>K</original>
    <variation>R</variation>
    <location>
        <position position="182"/>
    </location>
</feature>
<feature type="sequence variant" id="VAR_009224" description="In AIS." evidence="175">
    <original>Q</original>
    <variation>R</variation>
    <location>
        <position position="196"/>
    </location>
</feature>
<feature type="sequence variant" id="VAR_009714" description="In dbSNP:rs374549047." evidence="137">
    <original>S</original>
    <variation>R</variation>
    <location>
        <position position="207"/>
    </location>
</feature>
<feature type="sequence variant" id="VAR_009715" description="20% lower transactivation capacity; dbSNP:rs199554641." evidence="107 190">
    <original>G</original>
    <variation>R</variation>
    <location>
        <position position="216"/>
    </location>
</feature>
<feature type="sequence variant" id="VAR_009225" description="In AIS." evidence="186">
    <original>L</original>
    <variation>P</variation>
    <location>
        <position position="257"/>
    </location>
</feature>
<feature type="sequence variant" id="VAR_009716" description="In prostate cancer.">
    <original>M</original>
    <variation>T</variation>
    <location>
        <position position="268"/>
    </location>
</feature>
<feature type="sequence variant" id="VAR_009717" description="In prostate cancer.">
    <original>P</original>
    <variation>S</variation>
    <location>
        <position position="271"/>
    </location>
</feature>
<feature type="sequence variant" id="VAR_009718" description="In prostate cancer; dbSNP:rs138454018." evidence="109">
    <original>P</original>
    <variation>L</variation>
    <location>
        <position position="342"/>
    </location>
</feature>
<feature type="sequence variant" id="VAR_009226" description="In AIS; dbSNP:rs773996740." evidence="23">
    <original>P</original>
    <variation>R</variation>
    <location>
        <position position="392"/>
    </location>
</feature>
<feature type="sequence variant" id="VAR_009227" description="In AIS; dbSNP:rs201934623." evidence="31">
    <original>P</original>
    <variation>S</variation>
    <location>
        <position position="392"/>
    </location>
</feature>
<feature type="sequence variant" id="VAR_009228" description="In AIS; uncertain significance; dbSNP:rs1355285524." evidence="23">
    <original>Q</original>
    <variation>R</variation>
    <location>
        <position position="445"/>
    </location>
</feature>
<feature type="sequence variant" id="VAR_009719" description="In AIS." evidence="28">
    <original>G</original>
    <variation>S</variation>
    <location>
        <position position="492"/>
    </location>
</feature>
<feature type="sequence variant" id="VAR_009720" description="In prostate cancer.">
    <original>D</original>
    <variation>G</variation>
    <location>
        <position position="529"/>
    </location>
</feature>
<feature type="sequence variant" id="VAR_009721" description="In PAIS; dbSNP:rs139524801." evidence="36">
    <original>L</original>
    <variation>F</variation>
    <location>
        <position position="548"/>
    </location>
</feature>
<feature type="sequence variant" id="VAR_009722" description="In AIS; dbSNP:rs137852588." evidence="155">
    <original>P</original>
    <variation>S</variation>
    <location>
        <position position="549"/>
    </location>
</feature>
<feature type="sequence variant" id="VAR_009723" description="In AIS." evidence="43">
    <original>C</original>
    <variation>Y</variation>
    <location>
        <position position="560"/>
    </location>
</feature>
<feature type="sequence variant" id="VAR_009725" description="In a patient with isolated hypospadias." evidence="118">
    <original>G</original>
    <variation>V</variation>
    <location>
        <position position="569"/>
    </location>
</feature>
<feature type="sequence variant" id="VAR_009726" description="In PAIS; dbSNP:rs1555982864." evidence="120">
    <original>G</original>
    <variation>W</variation>
    <location>
        <position position="569"/>
    </location>
</feature>
<feature type="sequence variant" id="VAR_009727" description="In AIS." evidence="182">
    <original>Y</original>
    <variation>C</variation>
    <location>
        <position position="572"/>
    </location>
</feature>
<feature type="sequence variant" id="VAR_009728" description="In AIS." evidence="179">
    <original>A</original>
    <variation>D</variation>
    <location>
        <position position="574"/>
    </location>
</feature>
<feature type="sequence variant" id="VAR_009729" description="In prostate cancer.">
    <original>L</original>
    <variation>P</variation>
    <location>
        <position position="575"/>
    </location>
</feature>
<feature type="sequence variant" id="VAR_009730" description="In prostate cancer." evidence="29">
    <original>T</original>
    <variation>A</variation>
    <location>
        <position position="576"/>
    </location>
</feature>
<feature type="sequence variant" id="VAR_009731" description="In AIS." evidence="52">
    <original>C</original>
    <variation>F</variation>
    <location>
        <position position="577"/>
    </location>
</feature>
<feature type="sequence variant" id="VAR_009732" description="In AIS." evidence="43">
    <original>C</original>
    <variation>R</variation>
    <location>
        <position position="577"/>
    </location>
</feature>
<feature type="sequence variant" id="VAR_009733" description="In AIS; reduced transcription and DNA binding; dbSNP:rs137852586." evidence="158">
    <original>C</original>
    <variation>F</variation>
    <location>
        <position position="580"/>
    </location>
</feature>
<feature type="sequence variant" id="VAR_009734" description="In AIS; dbSNP:rs137852586.">
    <original>C</original>
    <variation>Y</variation>
    <location>
        <position position="580"/>
    </location>
</feature>
<feature type="sequence variant" id="VAR_009735" description="In prostate cancer." evidence="29">
    <original>K</original>
    <variation>R</variation>
    <location>
        <position position="581"/>
    </location>
</feature>
<feature type="sequence variant" id="VAR_009736" description="In AIS." evidence="138 193">
    <original>V</original>
    <variation>F</variation>
    <location>
        <position position="582"/>
    </location>
</feature>
<feature type="sequence variant" id="VAR_009737" description="In PAIS." evidence="124">
    <original>F</original>
    <variation>S</variation>
    <location>
        <position position="583"/>
    </location>
</feature>
<feature type="sequence variant" id="VAR_009738" description="In PAIS; dbSNP:rs137852587." evidence="158">
    <original>F</original>
    <variation>Y</variation>
    <location>
        <position position="583"/>
    </location>
</feature>
<feature type="sequence variant" id="VAR_009739" description="In AIS." evidence="134">
    <location>
        <position position="583"/>
    </location>
</feature>
<feature type="sequence variant" id="VAR_009740" description="In AIS." evidence="139">
    <original>R</original>
    <variation>K</variation>
    <location>
        <position position="586"/>
    </location>
</feature>
<feature type="sequence variant" id="VAR_009741" description="In prostate cancer; somatic mutation." evidence="29">
    <original>A</original>
    <variation>V</variation>
    <location>
        <position position="587"/>
    </location>
</feature>
<feature type="sequence variant" id="VAR_009742" description="In prostate cancer; somatic mutation.">
    <original>A</original>
    <variation>S</variation>
    <location>
        <position position="588"/>
    </location>
</feature>
<feature type="sequence variant" id="VAR_009743" description="In AIS; abolishes dimerization; dbSNP:rs137852569." evidence="24 116">
    <original>A</original>
    <variation>T</variation>
    <location>
        <position position="597"/>
    </location>
</feature>
<feature type="sequence variant" id="VAR_009744" description="In PAIS; normal androgen binding; does not activate transcription; impairs DNA binding; dbSNP:rs142280455." evidence="43">
    <original>S</original>
    <variation>G</variation>
    <location>
        <position position="598"/>
    </location>
</feature>
<feature type="sequence variant" id="VAR_009745" description="In a patient with severe hypospadias." evidence="8">
    <original>S</original>
    <variation>T</variation>
    <location>
        <position position="598"/>
    </location>
</feature>
<feature type="sequence variant" id="VAR_009746" description="In AIS." evidence="125">
    <original>C</original>
    <variation>F</variation>
    <location>
        <position position="602"/>
    </location>
</feature>
<feature type="sequence variant" id="VAR_009747" description="In PAIS." evidence="124">
    <original>D</original>
    <variation>Y</variation>
    <location>
        <position position="605"/>
    </location>
</feature>
<feature type="sequence variant" id="VAR_004684" description="In PAIS and breast cancer; dbSNP:rs137852573." evidence="9 41 168 181">
    <original>R</original>
    <variation>Q</variation>
    <location>
        <position position="608"/>
    </location>
</feature>
<feature type="sequence variant" id="VAR_004685" description="In PAIS and breast cancer; defective nuclear localization; dbSNP:rs137852576." evidence="44 141 173">
    <original>R</original>
    <variation>K</variation>
    <location>
        <position position="609"/>
    </location>
</feature>
<feature type="sequence variant" id="VAR_009748" description="In PAIS." evidence="168">
    <original>N</original>
    <variation>T</variation>
    <location>
        <position position="611"/>
    </location>
</feature>
<feature type="sequence variant" id="VAR_009749" description="In AIS.">
    <original>C</original>
    <variation>Y</variation>
    <location>
        <position position="612"/>
    </location>
</feature>
<feature type="sequence variant" id="VAR_009751" description="In AIS and PAIS; dbSNP:rs754201976." evidence="123 134 147 188">
    <original>R</original>
    <variation>H</variation>
    <location>
        <position position="616"/>
    </location>
</feature>
<feature type="sequence variant" id="VAR_009752" description="In AIS." evidence="90">
    <original>R</original>
    <variation>P</variation>
    <location>
        <position position="616"/>
    </location>
</feature>
<feature type="sequence variant" id="VAR_009750" description="In AIS." evidence="134">
    <location>
        <position position="616"/>
    </location>
</feature>
<feature type="sequence variant" id="VAR_009753" description="In AIS; dbSNP:rs1555990488." evidence="154">
    <original>L</original>
    <variation>P</variation>
    <location>
        <position position="617"/>
    </location>
</feature>
<feature type="sequence variant" id="VAR_009754" description="In PAIS." evidence="132">
    <original>L</original>
    <variation>R</variation>
    <location>
        <position position="617"/>
    </location>
</feature>
<feature type="sequence variant" id="VAR_009755" description="In AIS and PAIS; loss of DNA-binding activity." evidence="43 90">
    <original>R</original>
    <variation>P</variation>
    <location>
        <position position="618"/>
    </location>
</feature>
<feature type="sequence variant" id="VAR_009756" description="In prostate cancer; loss of DNA binding; somatic mutation." evidence="25 29">
    <original>C</original>
    <variation>Y</variation>
    <location>
        <position position="620"/>
    </location>
</feature>
<feature type="sequence variant" id="VAR_009757" description="In prostate cancer; dbSNP:rs868669253." evidence="172">
    <original>R</original>
    <variation>Q</variation>
    <location>
        <position position="630"/>
    </location>
</feature>
<feature type="sequence variant" id="VAR_009758" description="In prostate cancer.">
    <original>K</original>
    <variation>T</variation>
    <location>
        <position position="631"/>
    </location>
</feature>
<feature type="sequence variant" id="VAR_004686" description="In dbSNP:rs1800053." evidence="184">
    <original>A</original>
    <variation>D</variation>
    <location>
        <position position="646"/>
    </location>
</feature>
<feature type="sequence variant" id="VAR_009760" description="In prostate cancer; dbSNP:rs137852584.">
    <original>S</original>
    <variation>N</variation>
    <location>
        <position position="648"/>
    </location>
</feature>
<feature type="sequence variant" id="VAR_004687" description="In AIS and PAIS.">
    <original>I</original>
    <variation>N</variation>
    <location>
        <position position="665"/>
    </location>
</feature>
<feature type="sequence variant" id="VAR_009761" description="In prostate cancer.">
    <original>Q</original>
    <variation>R</variation>
    <location>
        <position position="671"/>
    </location>
</feature>
<feature type="sequence variant" id="VAR_009762" description="In PAIS.">
    <original>P</original>
    <variation>H</variation>
    <location>
        <position position="672"/>
    </location>
</feature>
<feature type="sequence variant" id="VAR_009763" description="In prostate cancer.">
    <original>I</original>
    <variation>T</variation>
    <location>
        <position position="673"/>
    </location>
</feature>
<feature type="sequence variant" id="VAR_004688" description="In AIS; dbSNP:rs137852579." evidence="110">
    <original>L</original>
    <variation>P</variation>
    <location>
        <position position="678"/>
    </location>
</feature>
<feature type="sequence variant" id="VAR_009764" description="In AIS; dbSNP:rs1555995816." evidence="9 145">
    <original>E</original>
    <variation>K</variation>
    <location>
        <position position="682"/>
    </location>
</feature>
<feature type="sequence variant" id="VAR_013474" description="In PAIS." evidence="34">
    <original>P</original>
    <variation>T</variation>
    <location>
        <position position="683"/>
    </location>
</feature>
<feature type="sequence variant" id="VAR_009765" description="Found in prostate cancer." evidence="27 165">
    <original>G</original>
    <variation>A</variation>
    <location>
        <position position="684"/>
    </location>
</feature>
<feature type="sequence variant" id="VAR_009766" description="In AIS; dbSNP:rs1555995822." evidence="17">
    <original>V</original>
    <variation>I</variation>
    <location>
        <position position="685"/>
    </location>
</feature>
<feature type="sequence variant" id="VAR_009767" description="In PAIS." evidence="156">
    <original>C</original>
    <variation>R</variation>
    <location>
        <position position="687"/>
    </location>
</feature>
<feature type="sequence variant" id="VAR_009768" description="In PAIS." evidence="156">
    <original>A</original>
    <variation>V</variation>
    <location>
        <position position="688"/>
    </location>
</feature>
<feature type="sequence variant" id="VAR_009769" description="In AIS." evidence="156">
    <original>G</original>
    <variation>E</variation>
    <location>
        <position position="689"/>
    </location>
</feature>
<feature type="sequence variant" id="VAR_009770" description="In PAIS." evidence="194">
    <location>
        <position position="691"/>
    </location>
</feature>
<feature type="sequence variant" id="VAR_004689" description="In AIS.">
    <location>
        <position position="693"/>
    </location>
</feature>
<feature type="sequence variant" id="VAR_004690" description="In AIS." evidence="78">
    <original>D</original>
    <variation>H</variation>
    <location>
        <position position="696"/>
    </location>
</feature>
<feature type="sequence variant" id="VAR_004691" description="In AIS; almost complete loss of androgen binding and transcription activation; dbSNP:rs1555995840." evidence="68 78">
    <original>D</original>
    <variation>N</variation>
    <location>
        <position position="696"/>
    </location>
</feature>
<feature type="sequence variant" id="VAR_004692" description="In AIS." evidence="183">
    <original>D</original>
    <variation>V</variation>
    <location>
        <position position="696"/>
    </location>
</feature>
<feature type="sequence variant" id="VAR_009771" description="In AIS." evidence="28">
    <original>L</original>
    <variation>M</variation>
    <location>
        <position position="701"/>
    </location>
</feature>
<feature type="sequence variant" id="VAR_009772" description="In AIS; dbSNP:rs1555995851.">
    <original>L</original>
    <variation>F</variation>
    <location>
        <position position="702"/>
    </location>
</feature>
<feature type="sequence variant" id="VAR_009773" description="Found in prostate cancer; dbSNP:rs864622007." evidence="22 140 180">
    <original>L</original>
    <variation>H</variation>
    <location>
        <position position="702"/>
    </location>
</feature>
<feature type="sequence variant" id="VAR_009774" description="In AIS.">
    <original>S</original>
    <variation>A</variation>
    <location>
        <position position="703"/>
    </location>
</feature>
<feature type="sequence variant" id="VAR_009775" description="In AIS." evidence="28">
    <original>S</original>
    <variation>C</variation>
    <location>
        <position position="704"/>
    </location>
</feature>
<feature type="sequence variant" id="VAR_004693" description="In PAIS and AIS." evidence="176">
    <original>S</original>
    <variation>G</variation>
    <location>
        <position position="704"/>
    </location>
</feature>
<feature type="sequence variant" id="VAR_009776" description="In AIS; dbSNP:rs925822435." evidence="53 117">
    <original>N</original>
    <variation>S</variation>
    <location>
        <position position="706"/>
    </location>
</feature>
<feature type="sequence variant" id="VAR_013475" description="In AIS." evidence="35">
    <original>N</original>
    <variation>Y</variation>
    <location>
        <position position="706"/>
    </location>
</feature>
<feature type="sequence variant" id="VAR_004694" description="In AIS; dbSNP:rs137852585." evidence="151">
    <original>L</original>
    <variation>R</variation>
    <location>
        <position position="708"/>
    </location>
</feature>
<feature type="sequence variant" id="VAR_009777" description="In PAIS." evidence="124 178">
    <original>G</original>
    <variation>A</variation>
    <location>
        <position position="709"/>
    </location>
</feature>
<feature type="sequence variant" id="VAR_009778" description="In AIS." evidence="17">
    <original>G</original>
    <variation>V</variation>
    <location>
        <position position="709"/>
    </location>
</feature>
<feature type="sequence variant" id="VAR_009779" description="In AIS." evidence="28">
    <original>R</original>
    <variation>T</variation>
    <location>
        <position position="711"/>
    </location>
</feature>
<feature type="sequence variant" id="VAR_013476" description="In PAIS." evidence="34">
    <original>Q</original>
    <variation>E</variation>
    <location>
        <position position="712"/>
    </location>
</feature>
<feature type="sequence variant" id="VAR_009780" description="In PAIS; dbSNP:rs137852595." evidence="156">
    <original>L</original>
    <variation>F</variation>
    <location>
        <position position="713"/>
    </location>
</feature>
<feature type="sequence variant" id="VAR_009781" description="In prostate cancer; gain in function; dbSNP:rs1340026226." evidence="133">
    <original>V</original>
    <variation>M</variation>
    <location>
        <position position="716"/>
    </location>
</feature>
<feature type="sequence variant" id="VAR_009782" description="In prostate cancer.">
    <original>K</original>
    <variation>E</variation>
    <location>
        <position position="718"/>
    </location>
</feature>
<feature type="sequence variant" id="VAR_009783" description="In prostate cancer; found in bone metastases.">
    <original>K</original>
    <variation>E</variation>
    <location>
        <position position="721"/>
    </location>
</feature>
<feature type="sequence variant" id="VAR_009784" description="In prostate cancer; somatic mutation; dbSNP:rs137852583.">
    <original>A</original>
    <variation>T</variation>
    <location>
        <position position="722"/>
    </location>
</feature>
<feature type="sequence variant" id="VAR_009785" description="In AIS." evidence="187">
    <original>L</original>
    <variation>F</variation>
    <location>
        <position position="723"/>
    </location>
</feature>
<feature type="sequence variant" id="VAR_009786" description="In AIS." evidence="28">
    <original>P</original>
    <variation>S</variation>
    <location>
        <position position="724"/>
    </location>
</feature>
<feature type="sequence variant" id="VAR_009787" description="In AIS and prostate cancer." evidence="28">
    <original>G</original>
    <variation>D</variation>
    <location>
        <position position="725"/>
    </location>
</feature>
<feature type="sequence variant" id="VAR_009788" description="In a patient with severe hypospadias; dbSNP:rs1555996810." evidence="8 117">
    <original>F</original>
    <variation>L</variation>
    <location>
        <position position="726"/>
    </location>
</feature>
<feature type="sequence variant" id="VAR_009789" description="In HPCX3; dbSNP:rs137852593." evidence="149">
    <original>R</original>
    <variation>L</variation>
    <location>
        <position position="727"/>
    </location>
</feature>
<feature type="sequence variant" id="VAR_009790" description="In AIS; dbSNP:rs768869912." evidence="126">
    <original>N</original>
    <variation>K</variation>
    <location>
        <position position="728"/>
    </location>
</feature>
<feature type="sequence variant" id="VAR_009791" description="In PAIS.">
    <original>L</original>
    <variation>S</variation>
    <location>
        <position position="729"/>
    </location>
</feature>
<feature type="sequence variant" id="VAR_004695" description="In prostate cancer; increases transcription activation; dbSNP:rs137852571." evidence="55 67 112">
    <original>V</original>
    <variation>M</variation>
    <location>
        <position position="731"/>
    </location>
</feature>
<feature type="sequence variant" id="VAR_004696" description="In AIS." evidence="174">
    <original>D</original>
    <variation>N</variation>
    <location>
        <position position="733"/>
    </location>
</feature>
<feature type="sequence variant" id="VAR_004697" description="In AIS.">
    <original>D</original>
    <variation>Y</variation>
    <location>
        <position position="733"/>
    </location>
</feature>
<feature type="sequence variant" id="VAR_009792" description="In PAIS." evidence="187">
    <original>Q</original>
    <variation>H</variation>
    <location>
        <position position="734"/>
    </location>
</feature>
<feature type="sequence variant" id="VAR_009793" description="In PAIS." evidence="117">
    <original>I</original>
    <variation>T</variation>
    <location>
        <position position="738"/>
    </location>
</feature>
<feature type="sequence variant" id="VAR_009794" description="In AIS." evidence="50">
    <original>W</original>
    <variation>R</variation>
    <location>
        <position position="742"/>
    </location>
</feature>
<feature type="sequence variant" id="VAR_004698" description="In PAIS." evidence="160">
    <original>M</original>
    <variation>I</variation>
    <location>
        <position position="743"/>
    </location>
</feature>
<feature type="sequence variant" id="VAR_009795" description="In PAIS." evidence="123">
    <original>M</original>
    <variation>V</variation>
    <location>
        <position position="743"/>
    </location>
</feature>
<feature type="sequence variant" id="VAR_013477" description="In AIS; dbSNP:rs137852600." evidence="34">
    <original>G</original>
    <variation>E</variation>
    <location>
        <position position="744"/>
    </location>
</feature>
<feature type="sequence variant" id="VAR_004699" description="In PAIS and AIS; dbSNP:rs137852600." evidence="129 144 189 193">
    <original>G</original>
    <variation>V</variation>
    <location>
        <position position="744"/>
    </location>
</feature>
<feature type="sequence variant" id="VAR_009796" description="In AIS and prostate cancer." evidence="113">
    <original>L</original>
    <variation>F</variation>
    <location>
        <position position="745"/>
    </location>
</feature>
<feature type="sequence variant" id="VAR_009797" description="In PAIS." evidence="123">
    <original>M</original>
    <variation>T</variation>
    <location>
        <position position="746"/>
    </location>
</feature>
<feature type="sequence variant" id="VAR_009798" description="In PAIS and AIS." evidence="156">
    <original>V</original>
    <variation>M</variation>
    <location>
        <position position="747"/>
    </location>
</feature>
<feature type="sequence variant" id="VAR_009799" description="In PAIS.">
    <original>A</original>
    <variation>D</variation>
    <location>
        <position position="749"/>
    </location>
</feature>
<feature type="sequence variant" id="VAR_009800" description="In prostate cancer.">
    <original>A</original>
    <variation>T</variation>
    <location>
        <position position="749"/>
    </location>
</feature>
<feature type="sequence variant" id="VAR_009801" description="In prostate cancer.">
    <original>A</original>
    <variation>V</variation>
    <location>
        <position position="749"/>
    </location>
</feature>
<feature type="sequence variant" id="VAR_009802" description="In prostate cancer.">
    <original>M</original>
    <variation>I</variation>
    <location>
        <position position="750"/>
    </location>
</feature>
<feature type="sequence variant" id="VAR_004700" description="In PAIS and AIS; dbSNP:rs1085307685." evidence="53 54 164">
    <original>M</original>
    <variation>V</variation>
    <location>
        <position position="750"/>
    </location>
</feature>
<feature type="sequence variant" id="VAR_004701" description="In AIS; loss of androgen binding." evidence="177">
    <original>G</original>
    <variation>D</variation>
    <location>
        <position position="751"/>
    </location>
</feature>
<feature type="sequence variant" id="VAR_009803" description="In prostate cancer.">
    <original>G</original>
    <variation>S</variation>
    <location>
        <position position="751"/>
    </location>
</feature>
<feature type="sequence variant" id="VAR_009804" description="In AIS." evidence="113">
    <original>W</original>
    <variation>R</variation>
    <location>
        <position position="752"/>
    </location>
</feature>
<feature type="sequence variant" id="VAR_004702" description="In AIS; dbSNP:rs1057523747." evidence="182 188">
    <original>R</original>
    <variation>Q</variation>
    <location>
        <position position="753"/>
    </location>
</feature>
<feature type="sequence variant" id="VAR_009805" description="In PAIS and prostate cancer." evidence="124 168">
    <original>F</original>
    <variation>L</variation>
    <location>
        <position position="755"/>
    </location>
</feature>
<feature type="sequence variant" id="VAR_004703" description="In AIS." evidence="131 193">
    <original>F</original>
    <variation>V</variation>
    <location>
        <position position="755"/>
    </location>
</feature>
<feature type="sequence variant" id="VAR_009806" description="In prostate cancer.">
    <original>T</original>
    <variation>A</variation>
    <location>
        <position position="756"/>
    </location>
</feature>
<feature type="sequence variant" id="VAR_009807" description="In PAIS; dbSNP:rs141425171." evidence="156">
    <original>N</original>
    <variation>S</variation>
    <location>
        <position position="757"/>
    </location>
</feature>
<feature type="sequence variant" id="VAR_009808" description="In prostate cancer." evidence="29">
    <original>V</original>
    <variation>A</variation>
    <location>
        <position position="758"/>
    </location>
</feature>
<feature type="sequence variant" id="VAR_009809" description="In PAIS; 50% reduction in transactivation." evidence="185">
    <original>N</original>
    <variation>T</variation>
    <location>
        <position position="759"/>
    </location>
</feature>
<feature type="sequence variant" id="VAR_009810" description="In AIS." evidence="53">
    <original>S</original>
    <variation>F</variation>
    <location>
        <position position="760"/>
    </location>
</feature>
<feature type="sequence variant" id="VAR_009811" description="In prostate cancer.">
    <original>S</original>
    <variation>P</variation>
    <location>
        <position position="760"/>
    </location>
</feature>
<feature type="sequence variant" id="VAR_004704" description="In AIS; loss of androgen binding." evidence="177">
    <original>L</original>
    <variation>F</variation>
    <location>
        <position position="763"/>
    </location>
</feature>
<feature type="sequence variant" id="VAR_004705" description="In PAIS and prostate cancer; partial loss of androgen binding; dbSNP:rs137852567." evidence="68 91 111">
    <original>Y</original>
    <variation>C</variation>
    <location>
        <position position="764"/>
    </location>
</feature>
<feature type="sequence variant" id="VAR_009812" description="In AIS." evidence="117">
    <original>Y</original>
    <variation>H</variation>
    <location>
        <position position="764"/>
    </location>
</feature>
<feature type="sequence variant" id="VAR_009813" description="In AIS." evidence="123">
    <original>F</original>
    <variation>L</variation>
    <location>
        <position position="765"/>
    </location>
</feature>
<feature type="sequence variant" id="VAR_004707" description="In AIS; loss of androgen binding; dbSNP:rs1555996863." evidence="45 174 177 192">
    <original>A</original>
    <variation>T</variation>
    <location>
        <position position="766"/>
    </location>
</feature>
<feature type="sequence variant" id="VAR_009814" description="In AIS.">
    <original>A</original>
    <variation>V</variation>
    <location>
        <position position="766"/>
    </location>
</feature>
<feature type="sequence variant" id="VAR_009815" description="In AIS." evidence="46">
    <original>P</original>
    <variation>S</variation>
    <location>
        <position position="767"/>
    </location>
</feature>
<feature type="sequence variant" id="VAR_009816" description="In AIS." evidence="193">
    <original>D</original>
    <variation>E</variation>
    <location>
        <position position="768"/>
    </location>
</feature>
<feature type="sequence variant" id="VAR_009817" description="In AIS." evidence="28">
    <original>L</original>
    <variation>P</variation>
    <location>
        <position position="769"/>
    </location>
</feature>
<feature type="sequence variant" id="VAR_009818" description="In PAIS; dbSNP:rs886041352." evidence="124">
    <original>N</original>
    <variation>H</variation>
    <location>
        <position position="772"/>
    </location>
</feature>
<feature type="sequence variant" id="VAR_009819" description="In PAIS." evidence="6">
    <original>E</original>
    <variation>A</variation>
    <location>
        <position position="773"/>
    </location>
</feature>
<feature type="sequence variant" id="VAR_009820" description="In PAIS." evidence="173">
    <original>E</original>
    <variation>G</variation>
    <location>
        <position position="773"/>
    </location>
</feature>
<feature type="sequence variant" id="VAR_004709" description="In AIS; frequent mutation; loss of androgen binding; dbSNP:rs137852562." evidence="65 85 96 164 182">
    <original>R</original>
    <variation>C</variation>
    <location>
        <position position="775"/>
    </location>
</feature>
<feature type="sequence variant" id="VAR_004708" description="In AIS and PAIS; almost complete loss of androgen binding; dbSNP:rs137852572." evidence="53 65 68 117">
    <original>R</original>
    <variation>H</variation>
    <location>
        <position position="775"/>
    </location>
</feature>
<feature type="sequence variant" id="VAR_004710" description="In AIS." evidence="111 124 167">
    <original>R</original>
    <variation>W</variation>
    <location>
        <position position="780"/>
    </location>
</feature>
<feature type="sequence variant" id="VAR_004711" description="In PAIS and AIS; dbSNP:rs137852589." evidence="157 160 164">
    <original>M</original>
    <variation>I</variation>
    <location>
        <position position="781"/>
    </location>
</feature>
<feature type="sequence variant" id="VAR_009821" description="In prostate cancer; somatic mutation.">
    <original>S</original>
    <variation>N</variation>
    <location>
        <position position="783"/>
    </location>
</feature>
<feature type="sequence variant" id="VAR_004712" description="In AIS; loss of androgen binding and of transactivation." evidence="192">
    <original>C</original>
    <variation>Y</variation>
    <location>
        <position position="785"/>
    </location>
</feature>
<feature type="sequence variant" id="VAR_004713" description="In AIS; dbSNP:rs137852570." evidence="60">
    <original>M</original>
    <variation>V</variation>
    <location>
        <position position="788"/>
    </location>
</feature>
<feature type="sequence variant" id="VAR_009822" description="In AIS; dbSNP:rs1254203917.">
    <original>R</original>
    <variation>S</variation>
    <location>
        <position position="789"/>
    </location>
</feature>
<feature type="sequence variant" id="VAR_009823" description="In AIS." evidence="122">
    <original>L</original>
    <variation>F</variation>
    <location>
        <position position="791"/>
    </location>
</feature>
<feature type="sequence variant" id="VAR_009824" description="In prostate cancer and AIS." evidence="28">
    <original>S</original>
    <variation>P</variation>
    <location>
        <position position="792"/>
    </location>
</feature>
<feature type="sequence variant" id="VAR_009825" description="In dbSNP:rs1414341563." evidence="137">
    <original>E</original>
    <variation>D</variation>
    <location>
        <position position="794"/>
    </location>
</feature>
<feature type="sequence variant" id="VAR_004714" description="In AIS." evidence="164">
    <original>F</original>
    <variation>S</variation>
    <location>
        <position position="795"/>
    </location>
</feature>
<feature type="sequence variant" id="VAR_004715" description="In PAIS, AIS and prostate cancer; reduced transcription activation; dbSNP:rs137852591." evidence="68 109 117 152 160 191">
    <original>Q</original>
    <variation>E</variation>
    <location>
        <position position="799"/>
    </location>
</feature>
<feature type="sequence variant" id="VAR_009826" description="In PAIS; dbSNP:rs1064793480." evidence="146">
    <original>C</original>
    <variation>Y</variation>
    <location>
        <position position="807"/>
    </location>
</feature>
<feature type="sequence variant" id="VAR_004716" description="In AIS; loss of transactivation." evidence="142">
    <original>M</original>
    <variation>R</variation>
    <location>
        <position position="808"/>
    </location>
</feature>
<feature type="sequence variant" id="VAR_009827" description="In PAIS; dbSNP:rs137852592." evidence="21">
    <original>M</original>
    <variation>T</variation>
    <location>
        <position position="808"/>
    </location>
</feature>
<feature type="sequence variant" id="VAR_004717" description="In AIS; 25% androgen binding." evidence="111">
    <original>M</original>
    <variation>V</variation>
    <location>
        <position position="808"/>
    </location>
</feature>
<feature type="sequence variant" id="VAR_009828" description="In AIS; dbSNP:rs1555997625." evidence="18">
    <original>L</original>
    <variation>F</variation>
    <location>
        <position position="813"/>
    </location>
</feature>
<feature type="sequence variant" id="VAR_004718" description="In AIS and PAIS.">
    <original>S</original>
    <variation>N</variation>
    <location>
        <position position="815"/>
    </location>
</feature>
<feature type="sequence variant" id="VAR_009829" description="In AIS." evidence="186">
    <original>G</original>
    <variation>A</variation>
    <location>
        <position position="821"/>
    </location>
</feature>
<feature type="sequence variant" id="VAR_009830" description="In PAIS." evidence="48">
    <original>L</original>
    <variation>V</variation>
    <location>
        <position position="822"/>
    </location>
</feature>
<feature type="sequence variant" id="VAR_013478" description="In PAIS." evidence="34">
    <original>F</original>
    <variation>V</variation>
    <location>
        <position position="828"/>
    </location>
</feature>
<feature type="sequence variant" id="VAR_009831" description="In prostate cancer.">
    <original>L</original>
    <variation>P</variation>
    <location>
        <position position="831"/>
    </location>
</feature>
<feature type="sequence variant" id="VAR_004719" description="In AIS." evidence="114">
    <original>R</original>
    <variation>L</variation>
    <location>
        <position position="832"/>
    </location>
</feature>
<feature type="sequence variant" id="VAR_004720" description="In AIS; loss of androgen binding; dbSNP:rs1386577803." evidence="18 96 114">
    <original>R</original>
    <variation>Q</variation>
    <location>
        <position position="832"/>
    </location>
</feature>
<feature type="sequence variant" id="VAR_009832" description="In AIS; loss of androgen binding; dbSNP:rs1057521122." evidence="50">
    <original>Y</original>
    <variation>C</variation>
    <location>
        <position position="835"/>
    </location>
</feature>
<feature type="sequence variant" id="VAR_004721" description="In AIS; dbSNP:rs137852577." evidence="128 160 189">
    <original>R</original>
    <variation>C</variation>
    <location>
        <position position="841"/>
    </location>
</feature>
<feature type="sequence variant" id="VAR_004722" description="In PAIS." evidence="192">
    <original>R</original>
    <variation>G</variation>
    <location>
        <position position="841"/>
    </location>
</feature>
<feature type="sequence variant" id="VAR_004723" description="In AIS; dbSNP:rs9332969." evidence="119 128 132 136 145 162 168">
    <original>R</original>
    <variation>H</variation>
    <location>
        <position position="841"/>
    </location>
</feature>
<feature type="sequence variant" id="VAR_009229" description="In PAIS." evidence="20">
    <original>R</original>
    <variation>S</variation>
    <location>
        <position position="841"/>
    </location>
</feature>
<feature type="sequence variant" id="VAR_009833" description="In PAIS." evidence="156">
    <original>I</original>
    <variation>S</variation>
    <location>
        <position position="842"/>
    </location>
</feature>
<feature type="sequence variant" id="VAR_004724" description="In AIS; dbSNP:rs9332970." evidence="145 168">
    <original>I</original>
    <variation>T</variation>
    <location>
        <position position="843"/>
    </location>
</feature>
<feature type="sequence variant" id="VAR_009834" description="In prostate cancer." evidence="29">
    <original>R</original>
    <variation>G</variation>
    <location>
        <position position="847"/>
    </location>
</feature>
<feature type="sequence variant" id="VAR_009835" description="In PAIS." evidence="46">
    <original>R</original>
    <variation>K</variation>
    <location>
        <position position="855"/>
    </location>
</feature>
<feature type="sequence variant" id="VAR_004725" description="In AIS; dbSNP:rs886041132." evidence="53 111 166 175 193">
    <original>R</original>
    <variation>C</variation>
    <location>
        <position position="856"/>
    </location>
</feature>
<feature type="sequence variant" id="VAR_004726" description="In AIS; strongly reduced transcription activation; dbSNP:rs9332971." evidence="68 130 160 168 170">
    <original>R</original>
    <variation>H</variation>
    <location>
        <position position="856"/>
    </location>
</feature>
<feature type="sequence variant" id="VAR_009836" description="In AIS; dbSNP:rs137852598." evidence="28 146">
    <original>F</original>
    <variation>L</variation>
    <location>
        <position position="857"/>
    </location>
</feature>
<feature type="sequence variant" id="VAR_009837" description="In AIS.">
    <original>L</original>
    <variation>R</variation>
    <location>
        <position position="864"/>
    </location>
</feature>
<feature type="sequence variant" id="VAR_009838" description="In AIS." evidence="53">
    <original>D</original>
    <variation>G</variation>
    <location>
        <position position="865"/>
    </location>
</feature>
<feature type="sequence variant" id="VAR_004727" description="In AIS; loss of androgen binding; dbSNP:rs1555997810." evidence="177">
    <original>D</original>
    <variation>N</variation>
    <location>
        <position position="865"/>
    </location>
</feature>
<feature type="sequence variant" id="VAR_009839" description="In AIS; dbSNP:rs137852597." evidence="28">
    <original>S</original>
    <variation>P</variation>
    <location>
        <position position="866"/>
    </location>
</feature>
<feature type="sequence variant" id="VAR_004728" description="In AIS.">
    <original>V</original>
    <variation>E</variation>
    <location>
        <position position="867"/>
    </location>
</feature>
<feature type="sequence variant" id="VAR_004729" description="In PAIS; dbSNP:rs137852564." evidence="44 145 148">
    <original>V</original>
    <variation>L</variation>
    <location>
        <position position="867"/>
    </location>
</feature>
<feature type="sequence variant" id="VAR_004730" description="In AIS and prostate cancer; dbSNP:rs137852564." evidence="96 106 148 168">
    <original>V</original>
    <variation>M</variation>
    <location>
        <position position="867"/>
    </location>
</feature>
<feature type="sequence variant" id="VAR_004731" description="In PAIS; dbSNP:rs137852574." evidence="130 160">
    <original>I</original>
    <variation>M</variation>
    <location>
        <position position="870"/>
    </location>
</feature>
<feature type="sequence variant" id="VAR_009840" description="In PAIS." evidence="178">
    <original>A</original>
    <variation>G</variation>
    <location>
        <position position="871"/>
    </location>
</feature>
<feature type="sequence variant" id="VAR_009841" description="In PAIS; dbSNP:rs143040492." evidence="127">
    <original>A</original>
    <variation>V</variation>
    <location>
        <position position="871"/>
    </location>
</feature>
<feature type="sequence variant" id="VAR_009842" description="In AIS." evidence="6">
    <original>R</original>
    <variation>G</variation>
    <location>
        <position position="872"/>
    </location>
</feature>
<feature type="sequence variant" id="VAR_013479" description="In AIS." evidence="34">
    <original>H</original>
    <variation>R</variation>
    <location>
        <position position="875"/>
    </location>
</feature>
<feature type="sequence variant" id="VAR_009843" description="In prostate cancer; increases affinity for testosterone and androgen sensitivity; increased transcription activation; dbSNP:rs137852581." evidence="76">
    <original>H</original>
    <variation>Y</variation>
    <location>
        <position position="875"/>
    </location>
</feature>
<feature type="sequence variant" id="VAR_004732" description="Found in prostate cancer; found in bone metastases; alters receptor specificity so that transcription is activated by antiandrogens such as cyproterone acetate; dbSNP:rs137852578." evidence="13 22 58 66 72 101 105 135 140 161">
    <original>T</original>
    <variation>A</variation>
    <location>
        <position position="878"/>
    </location>
</feature>
<feature type="sequence variant" id="VAR_009844" description="In prostate cancer; dbSNP:rs137852580.">
    <original>T</original>
    <variation>S</variation>
    <location>
        <position position="878"/>
    </location>
</feature>
<feature type="sequence variant" id="VAR_013480" description="In AIS." evidence="34">
    <original>D</original>
    <variation>Y</variation>
    <location>
        <position position="880"/>
    </location>
</feature>
<feature type="sequence variant" id="VAR_009845" description="In prostate cancer.">
    <original>L</original>
    <variation>Q</variation>
    <location>
        <position position="881"/>
    </location>
</feature>
<feature type="sequence variant" id="VAR_009846" description="In AIS." evidence="115">
    <original>L</original>
    <variation>V</variation>
    <location>
        <position position="882"/>
    </location>
</feature>
<feature type="sequence variant" id="VAR_009847" description="In AIS; dbSNP:rs755226547." evidence="12">
    <original>M</original>
    <variation>V</variation>
    <location>
        <position position="887"/>
    </location>
</feature>
<feature type="sequence variant" id="VAR_009848" description="In AIS and PAIS; dbSNP:rs886041133." evidence="132 171">
    <original>V</original>
    <variation>M</variation>
    <location>
        <position position="890"/>
    </location>
</feature>
<feature type="sequence variant" id="VAR_009849" description="In prostate cancer." evidence="13">
    <original>D</original>
    <variation>N</variation>
    <location>
        <position position="891"/>
    </location>
</feature>
<feature type="sequence variant" id="VAR_009850" description="In prostate cancer and AIS." evidence="104">
    <original>F</original>
    <variation>L</variation>
    <location>
        <position position="892"/>
    </location>
</feature>
<feature type="sequence variant" id="VAR_004733" description="In AIS." evidence="10 16 195">
    <original>P</original>
    <variation>L</variation>
    <location>
        <position position="893"/>
    </location>
</feature>
<feature type="sequence variant" id="VAR_004734" description="In AIS; low androgen binding and transactivation." evidence="66 192">
    <original>M</original>
    <variation>T</variation>
    <location>
        <position position="896"/>
    </location>
</feature>
<feature type="sequence variant" id="VAR_009851" description="In prostate cancer.">
    <original>A</original>
    <variation>T</variation>
    <location>
        <position position="897"/>
    </location>
</feature>
<feature type="sequence variant" id="VAR_009852" description="In AIS; dbSNP:rs1555998105." evidence="156">
    <original>I</original>
    <variation>T</variation>
    <location>
        <position position="899"/>
    </location>
</feature>
<feature type="sequence variant" id="VAR_009853" description="In prostate cancer; dbSNP:rs137852582.">
    <original>Q</original>
    <variation>R</variation>
    <location>
        <position position="903"/>
    </location>
</feature>
<feature type="sequence variant" id="VAR_009854" description="In PAIS." evidence="46">
    <original>V</original>
    <variation>M</variation>
    <location>
        <position position="904"/>
    </location>
</feature>
<feature type="sequence variant" id="VAR_009855" description="In AIS." evidence="46">
    <original>P</original>
    <variation>H</variation>
    <location>
        <position position="905"/>
    </location>
</feature>
<feature type="sequence variant" id="VAR_009856" description="In AIS.">
    <original>P</original>
    <variation>S</variation>
    <location>
        <position position="905"/>
    </location>
</feature>
<feature type="sequence variant" id="VAR_004735" description="In AIS; almost complete loss of transcription activation." evidence="68 177">
    <original>L</original>
    <variation>F</variation>
    <location>
        <position position="908"/>
    </location>
</feature>
<feature type="sequence variant" id="VAR_009857" description="In prostate cancer.">
    <original>G</original>
    <variation>E</variation>
    <location>
        <position position="910"/>
    </location>
</feature>
<feature type="sequence variant" id="VAR_009858" description="In PAIS." evidence="150">
    <original>G</original>
    <variation>R</variation>
    <location>
        <position position="910"/>
    </location>
</feature>
<feature type="sequence variant" id="VAR_009859" description="In prostate cancer." evidence="180">
    <original>K</original>
    <variation>R</variation>
    <location>
        <position position="911"/>
    </location>
</feature>
<feature type="sequence variant" id="VAR_009860" description="In PAIS." evidence="19">
    <original>V</original>
    <variation>L</variation>
    <location>
        <position position="912"/>
    </location>
</feature>
<feature type="sequence variant" id="VAR_004736" description="In PAIS.">
    <original>P</original>
    <variation>S</variation>
    <location>
        <position position="914"/>
    </location>
</feature>
<feature type="sequence variant" id="VAR_009861" description="In AIS." evidence="176">
    <original>F</original>
    <variation>L</variation>
    <location>
        <position position="917"/>
    </location>
</feature>
<feature type="sequence variant" id="VAR_009862" description="In AIS." evidence="28">
    <original>H</original>
    <variation>R</variation>
    <location>
        <position position="918"/>
    </location>
</feature>
<feature type="sequence variant" id="VAR_009863" description="In prostate cancer.">
    <original>Q</original>
    <variation>R</variation>
    <location>
        <position position="920"/>
    </location>
</feature>
<feature type="mutagenesis site" description="Reduced cell growth." evidence="97">
    <original>S</original>
    <variation>A</variation>
    <location>
        <position position="83"/>
    </location>
</feature>
<feature type="mutagenesis site" description="Decrease of CSK-induced phosphorylation." evidence="71">
    <original>Y</original>
    <variation>F</variation>
    <location>
        <position position="225"/>
    </location>
</feature>
<feature type="mutagenesis site" description="Decrease of CSK-induced phosphorylation and phosphorylation by TNK2. Complete loss of TNK2-dependent phosphorylation; when associated with F-365." evidence="71 73">
    <original>Y</original>
    <variation>F</variation>
    <location>
        <position position="269"/>
    </location>
</feature>
<feature type="mutagenesis site" description="Decrease of CSK-induced phosphorylation." evidence="71">
    <original>Y</original>
    <variation>F</variation>
    <location>
        <position position="309"/>
    </location>
</feature>
<feature type="mutagenesis site" description="Decrease of CSK-induced phosphorylation." evidence="71">
    <original>Y</original>
    <variation>F</variation>
    <location>
        <position position="348"/>
    </location>
</feature>
<feature type="mutagenesis site" description="Decrease of CSK-induced phosphorylation." evidence="71">
    <original>Y</original>
    <variation>F</variation>
    <location>
        <position position="359"/>
    </location>
</feature>
<feature type="mutagenesis site" description="Decrease of CSK-induced phosphorylation." evidence="71">
    <original>Y</original>
    <variation>F</variation>
    <location>
        <position position="364"/>
    </location>
</feature>
<feature type="mutagenesis site" description="Decrease of CSK-induced phosphorylation and phosphorylation by TNK2. Complete loss of TNK2-dependent phosphorylation; when associated with F-269." evidence="71 73">
    <original>Y</original>
    <variation>F</variation>
    <location>
        <position position="365"/>
    </location>
</feature>
<feature type="mutagenesis site" description="Decrease of CSK-induced phosphorylation." evidence="71">
    <original>Y</original>
    <variation>F</variation>
    <location>
        <position position="395"/>
    </location>
</feature>
<feature type="mutagenesis site" description="Greatest decrease of CSK-induced phosphorylation and inhibition of transcriptional activity induced by EGF." evidence="71">
    <original>Y</original>
    <variation>F</variation>
    <location>
        <position position="535"/>
    </location>
</feature>
<feature type="mutagenesis site" description="Decrease in CSK-induced phosphorylation." evidence="71">
    <original>Y</original>
    <variation>F</variation>
    <location>
        <position position="552"/>
    </location>
</feature>
<feature type="mutagenesis site" description="Alters receptor specificity, so that transcription is activated by the antiandrogen cyproterone acetate." evidence="72">
    <original>L</original>
    <variation>A</variation>
    <location>
        <position position="702"/>
    </location>
</feature>
<feature type="mutagenesis site" description="Loss of transcription activation in the presence of androgen and of interaction with NCOA2." evidence="56 76">
    <original>K</original>
    <variation>A</variation>
    <location>
        <position position="721"/>
    </location>
</feature>
<feature type="mutagenesis site" description="Strongly decreased transcription activation in the presence of androgen." evidence="66">
    <original>W</original>
    <variation>L</variation>
    <location>
        <position position="742"/>
    </location>
</feature>
<feature type="mutagenesis site" description="Prevents ubiquitination by RNF6. Prevents AR transcriptional activation by RNF14 in absence of hormone." evidence="88">
    <original>K</original>
    <variation>R</variation>
    <location>
        <position position="846"/>
    </location>
</feature>
<feature type="mutagenesis site" description="Partially prevents ubiquitination by RNF6." evidence="88">
    <original>K</original>
    <variation>R</variation>
    <location>
        <position position="848"/>
    </location>
</feature>
<feature type="mutagenesis site" description="Reduced transcription activation in the presence of androgen." evidence="56 76">
    <original>E</original>
    <variation>A</variation>
    <variation>Q</variation>
    <location>
        <position position="898"/>
    </location>
</feature>
<feature type="mutagenesis site" description="Loss of transcription activation in the presence of androgen." evidence="56 76">
    <original>E</original>
    <variation>K</variation>
    <variation>R</variation>
    <location>
        <position position="898"/>
    </location>
</feature>
<feature type="mutagenesis site" description="Decrease in CSK-induced phosphorylation." evidence="71">
    <original>Y</original>
    <variation>F</variation>
    <location>
        <position position="916"/>
    </location>
</feature>
<feature type="sequence conflict" description="In Ref. 5; AAA51780." evidence="196" ref="5">
    <original>G</original>
    <variation>A</variation>
    <location>
        <position position="168"/>
    </location>
</feature>
<feature type="sequence conflict" description="In Ref. 3 and 6; AAA51771/AAA51772." evidence="196" ref="3 6">
    <original>A</original>
    <variation>R</variation>
    <location>
        <position position="214"/>
    </location>
</feature>
<feature type="sequence conflict" description="In Ref. 2; AAA51775 and 13; AAA51770." evidence="196" ref="2 13">
    <original>G</original>
    <variation>E</variation>
    <location>
        <position position="476"/>
    </location>
</feature>
<feature type="sequence conflict" description="In Ref. 15; AAA51774." evidence="196" ref="15">
    <original>E</original>
    <variation>K</variation>
    <location>
        <position position="566"/>
    </location>
</feature>
<feature type="sequence conflict" description="In Ref. 19; AAB21256/AAB21257." evidence="196" ref="19">
    <original>L</original>
    <variation>P</variation>
    <location>
        <position position="635"/>
    </location>
</feature>
<feature type="sequence conflict" description="In Ref. 19; AAB21256/AAB21257." evidence="196" ref="19">
    <original>N</original>
    <variation>I</variation>
    <location>
        <position position="676"/>
    </location>
</feature>
<feature type="sequence conflict" description="In Ref. 5; AAA51780." evidence="196" ref="5">
    <original>L</original>
    <variation>M</variation>
    <location>
        <position position="811"/>
    </location>
</feature>
<feature type="helix" evidence="245">
    <location>
        <begin position="22"/>
        <end position="29"/>
    </location>
</feature>
<feature type="strand" evidence="244">
    <location>
        <begin position="667"/>
        <end position="669"/>
    </location>
</feature>
<feature type="helix" evidence="247">
    <location>
        <begin position="673"/>
        <end position="681"/>
    </location>
</feature>
<feature type="strand" evidence="246">
    <location>
        <begin position="692"/>
        <end position="694"/>
    </location>
</feature>
<feature type="helix" evidence="247">
    <location>
        <begin position="698"/>
        <end position="721"/>
    </location>
</feature>
<feature type="helix" evidence="247">
    <location>
        <begin position="726"/>
        <end position="728"/>
    </location>
</feature>
<feature type="helix" evidence="247">
    <location>
        <begin position="731"/>
        <end position="758"/>
    </location>
</feature>
<feature type="strand" evidence="247">
    <location>
        <begin position="761"/>
        <end position="766"/>
    </location>
</feature>
<feature type="strand" evidence="247">
    <location>
        <begin position="769"/>
        <end position="771"/>
    </location>
</feature>
<feature type="helix" evidence="247">
    <location>
        <begin position="773"/>
        <end position="778"/>
    </location>
</feature>
<feature type="helix" evidence="247">
    <location>
        <begin position="782"/>
        <end position="797"/>
    </location>
</feature>
<feature type="helix" evidence="247">
    <location>
        <begin position="802"/>
        <end position="813"/>
    </location>
</feature>
<feature type="strand" evidence="247">
    <location>
        <begin position="815"/>
        <end position="818"/>
    </location>
</feature>
<feature type="helix" evidence="247">
    <location>
        <begin position="825"/>
        <end position="844"/>
    </location>
</feature>
<feature type="helix" evidence="247">
    <location>
        <begin position="850"/>
        <end position="883"/>
    </location>
</feature>
<feature type="helix" evidence="247">
    <location>
        <begin position="885"/>
        <end position="888"/>
    </location>
</feature>
<feature type="helix" evidence="247">
    <location>
        <begin position="894"/>
        <end position="902"/>
    </location>
</feature>
<feature type="helix" evidence="247">
    <location>
        <begin position="904"/>
        <end position="908"/>
    </location>
</feature>
<feature type="strand" evidence="247">
    <location>
        <begin position="911"/>
        <end position="914"/>
    </location>
</feature>
<name>ANDR_HUMAN</name>
<reference key="1">
    <citation type="journal article" date="1988" name="Mol. Endocrinol.">
        <title>The human androgen receptor: complementary deoxyribonucleic acid cloning, sequence analysis and gene expression in prostate.</title>
        <authorList>
            <person name="Lubahn D.B."/>
            <person name="Joseph D.R."/>
            <person name="Sar M."/>
            <person name="Tan J."/>
            <person name="Higgs H.N."/>
            <person name="Larson R.E."/>
            <person name="French F.S."/>
            <person name="Wilson E.M."/>
        </authorList>
    </citation>
    <scope>NUCLEOTIDE SEQUENCE [MRNA] (ISOFORM 1)</scope>
</reference>
<reference key="2">
    <citation type="journal article" date="1988" name="Proc. Natl. Acad. Sci. U.S.A.">
        <title>Structural analysis of complementary DNA and amino acid sequences of human and rat androgen receptors.</title>
        <authorList>
            <person name="Chang C."/>
            <person name="Kokontis J."/>
            <person name="Liao S."/>
        </authorList>
    </citation>
    <scope>NUCLEOTIDE SEQUENCE [MRNA] (ISOFORM 1)</scope>
    <source>
        <tissue>Prostate</tissue>
    </source>
</reference>
<reference key="3">
    <citation type="journal article" date="1989" name="Proc. Natl. Acad. Sci. U.S.A.">
        <title>Characterization and expression of a cDNA encoding the human androgen receptor.</title>
        <authorList>
            <person name="Tilley W.D."/>
            <person name="Marcelli M."/>
            <person name="Wilson J.D."/>
            <person name="McPhaul M.J."/>
        </authorList>
    </citation>
    <scope>NUCLEOTIDE SEQUENCE [MRNA] (ISOFORM 1)</scope>
    <source>
        <tissue>Prostate</tissue>
    </source>
</reference>
<reference key="4">
    <citation type="journal article" date="1989" name="Proc. Natl. Acad. Sci. U.S.A.">
        <title>Sequence of the intron/exon junctions of the coding region of the human androgen receptor gene and identification of a point mutation in a family with complete androgen insensitivity.</title>
        <authorList>
            <person name="Lubahn D.B."/>
            <person name="Brown T.R."/>
            <person name="Simental J.A."/>
            <person name="Higgs H.N."/>
            <person name="Migeon C.J."/>
            <person name="Wilson E.M."/>
            <person name="French F.S."/>
        </authorList>
    </citation>
    <scope>NUCLEOTIDE SEQUENCE [GENOMIC DNA]</scope>
    <scope>VARIANT AIS MET-867</scope>
</reference>
<reference key="5">
    <citation type="journal article" date="1990" name="Mol. Endocrinol.">
        <title>Specific region in hormone binding domain is essential for hormone binding and trans-activation by human androgen receptor.</title>
        <authorList>
            <person name="Govindan M.V."/>
        </authorList>
    </citation>
    <scope>NUCLEOTIDE SEQUENCE [MRNA] (ISOFORM 1)</scope>
</reference>
<reference key="6">
    <citation type="journal article" date="1990" name="Mol. Endocrinol.">
        <title>Definition of the human androgen receptor gene structure permits the identification of mutations that cause androgen resistance: premature termination of the receptor protein at amino acid residue 588 causes complete androgen resistance.</title>
        <authorList>
            <person name="Marcelli M."/>
            <person name="Tilley W.D."/>
            <person name="Wilson C.M."/>
            <person name="Griffin J.E."/>
            <person name="Wilson J.D."/>
            <person name="McPhaul M.J."/>
        </authorList>
    </citation>
    <scope>NUCLEOTIDE SEQUENCE [GENOMIC DNA]</scope>
    <scope>NUCLEOTIDE SEQUENCE [MRNA] (ISOFORM 1)</scope>
    <source>
        <tissue>Prostate</tissue>
    </source>
</reference>
<reference key="7">
    <citation type="journal article" date="2005" name="FEBS J.">
        <title>Androgen receptor function is modulated by the tissue-specific AR45 variant.</title>
        <authorList>
            <person name="Ahrens-Fath I."/>
            <person name="Politz O."/>
            <person name="Geserick C."/>
            <person name="Haendler B."/>
        </authorList>
    </citation>
    <scope>NUCLEOTIDE SEQUENCE [GENOMIC DNA]</scope>
    <scope>ALTERNATIVE SPLICING (ISOFORM 2)</scope>
    <scope>TISSUE SPECIFICITY</scope>
    <scope>SUBCELLULAR LOCATION</scope>
</reference>
<reference key="8">
    <citation type="journal article" date="2009" name="Cancer Res.">
        <title>A novel androgen receptor splice variant is up-regulated during prostate cancer progression and promotes androgen depletion-resistant growth.</title>
        <authorList>
            <person name="Guo Z."/>
            <person name="Yang X."/>
            <person name="Sun F."/>
            <person name="Jiang R."/>
            <person name="Linn D.E."/>
            <person name="Chen H."/>
            <person name="Chen H."/>
            <person name="Kong X."/>
            <person name="Melamed J."/>
            <person name="Tepper C.G."/>
            <person name="Kung H.J."/>
            <person name="Brodie A.M."/>
            <person name="Edwards J."/>
            <person name="Qiu Y."/>
        </authorList>
    </citation>
    <scope>NUCLEOTIDE SEQUENCE [MRNA] (ISOFORMS 3 AND 4)</scope>
    <scope>VARIANT GLN-57</scope>
    <scope>FUNCTION (ISOFORMS 3 AND 4)</scope>
    <scope>SUBCELLULAR LOCATION (ISOFORM 3)</scope>
</reference>
<reference key="9">
    <citation type="journal article" date="2005" name="Nature">
        <title>The DNA sequence of the human X chromosome.</title>
        <authorList>
            <person name="Ross M.T."/>
            <person name="Grafham D.V."/>
            <person name="Coffey A.J."/>
            <person name="Scherer S."/>
            <person name="McLay K."/>
            <person name="Muzny D."/>
            <person name="Platzer M."/>
            <person name="Howell G.R."/>
            <person name="Burrows C."/>
            <person name="Bird C.P."/>
            <person name="Frankish A."/>
            <person name="Lovell F.L."/>
            <person name="Howe K.L."/>
            <person name="Ashurst J.L."/>
            <person name="Fulton R.S."/>
            <person name="Sudbrak R."/>
            <person name="Wen G."/>
            <person name="Jones M.C."/>
            <person name="Hurles M.E."/>
            <person name="Andrews T.D."/>
            <person name="Scott C.E."/>
            <person name="Searle S."/>
            <person name="Ramser J."/>
            <person name="Whittaker A."/>
            <person name="Deadman R."/>
            <person name="Carter N.P."/>
            <person name="Hunt S.E."/>
            <person name="Chen R."/>
            <person name="Cree A."/>
            <person name="Gunaratne P."/>
            <person name="Havlak P."/>
            <person name="Hodgson A."/>
            <person name="Metzker M.L."/>
            <person name="Richards S."/>
            <person name="Scott G."/>
            <person name="Steffen D."/>
            <person name="Sodergren E."/>
            <person name="Wheeler D.A."/>
            <person name="Worley K.C."/>
            <person name="Ainscough R."/>
            <person name="Ambrose K.D."/>
            <person name="Ansari-Lari M.A."/>
            <person name="Aradhya S."/>
            <person name="Ashwell R.I."/>
            <person name="Babbage A.K."/>
            <person name="Bagguley C.L."/>
            <person name="Ballabio A."/>
            <person name="Banerjee R."/>
            <person name="Barker G.E."/>
            <person name="Barlow K.F."/>
            <person name="Barrett I.P."/>
            <person name="Bates K.N."/>
            <person name="Beare D.M."/>
            <person name="Beasley H."/>
            <person name="Beasley O."/>
            <person name="Beck A."/>
            <person name="Bethel G."/>
            <person name="Blechschmidt K."/>
            <person name="Brady N."/>
            <person name="Bray-Allen S."/>
            <person name="Bridgeman A.M."/>
            <person name="Brown A.J."/>
            <person name="Brown M.J."/>
            <person name="Bonnin D."/>
            <person name="Bruford E.A."/>
            <person name="Buhay C."/>
            <person name="Burch P."/>
            <person name="Burford D."/>
            <person name="Burgess J."/>
            <person name="Burrill W."/>
            <person name="Burton J."/>
            <person name="Bye J.M."/>
            <person name="Carder C."/>
            <person name="Carrel L."/>
            <person name="Chako J."/>
            <person name="Chapman J.C."/>
            <person name="Chavez D."/>
            <person name="Chen E."/>
            <person name="Chen G."/>
            <person name="Chen Y."/>
            <person name="Chen Z."/>
            <person name="Chinault C."/>
            <person name="Ciccodicola A."/>
            <person name="Clark S.Y."/>
            <person name="Clarke G."/>
            <person name="Clee C.M."/>
            <person name="Clegg S."/>
            <person name="Clerc-Blankenburg K."/>
            <person name="Clifford K."/>
            <person name="Cobley V."/>
            <person name="Cole C.G."/>
            <person name="Conquer J.S."/>
            <person name="Corby N."/>
            <person name="Connor R.E."/>
            <person name="David R."/>
            <person name="Davies J."/>
            <person name="Davis C."/>
            <person name="Davis J."/>
            <person name="Delgado O."/>
            <person name="Deshazo D."/>
            <person name="Dhami P."/>
            <person name="Ding Y."/>
            <person name="Dinh H."/>
            <person name="Dodsworth S."/>
            <person name="Draper H."/>
            <person name="Dugan-Rocha S."/>
            <person name="Dunham A."/>
            <person name="Dunn M."/>
            <person name="Durbin K.J."/>
            <person name="Dutta I."/>
            <person name="Eades T."/>
            <person name="Ellwood M."/>
            <person name="Emery-Cohen A."/>
            <person name="Errington H."/>
            <person name="Evans K.L."/>
            <person name="Faulkner L."/>
            <person name="Francis F."/>
            <person name="Frankland J."/>
            <person name="Fraser A.E."/>
            <person name="Galgoczy P."/>
            <person name="Gilbert J."/>
            <person name="Gill R."/>
            <person name="Gloeckner G."/>
            <person name="Gregory S.G."/>
            <person name="Gribble S."/>
            <person name="Griffiths C."/>
            <person name="Grocock R."/>
            <person name="Gu Y."/>
            <person name="Gwilliam R."/>
            <person name="Hamilton C."/>
            <person name="Hart E.A."/>
            <person name="Hawes A."/>
            <person name="Heath P.D."/>
            <person name="Heitmann K."/>
            <person name="Hennig S."/>
            <person name="Hernandez J."/>
            <person name="Hinzmann B."/>
            <person name="Ho S."/>
            <person name="Hoffs M."/>
            <person name="Howden P.J."/>
            <person name="Huckle E.J."/>
            <person name="Hume J."/>
            <person name="Hunt P.J."/>
            <person name="Hunt A.R."/>
            <person name="Isherwood J."/>
            <person name="Jacob L."/>
            <person name="Johnson D."/>
            <person name="Jones S."/>
            <person name="de Jong P.J."/>
            <person name="Joseph S.S."/>
            <person name="Keenan S."/>
            <person name="Kelly S."/>
            <person name="Kershaw J.K."/>
            <person name="Khan Z."/>
            <person name="Kioschis P."/>
            <person name="Klages S."/>
            <person name="Knights A.J."/>
            <person name="Kosiura A."/>
            <person name="Kovar-Smith C."/>
            <person name="Laird G.K."/>
            <person name="Langford C."/>
            <person name="Lawlor S."/>
            <person name="Leversha M."/>
            <person name="Lewis L."/>
            <person name="Liu W."/>
            <person name="Lloyd C."/>
            <person name="Lloyd D.M."/>
            <person name="Loulseged H."/>
            <person name="Loveland J.E."/>
            <person name="Lovell J.D."/>
            <person name="Lozado R."/>
            <person name="Lu J."/>
            <person name="Lyne R."/>
            <person name="Ma J."/>
            <person name="Maheshwari M."/>
            <person name="Matthews L.H."/>
            <person name="McDowall J."/>
            <person name="McLaren S."/>
            <person name="McMurray A."/>
            <person name="Meidl P."/>
            <person name="Meitinger T."/>
            <person name="Milne S."/>
            <person name="Miner G."/>
            <person name="Mistry S.L."/>
            <person name="Morgan M."/>
            <person name="Morris S."/>
            <person name="Mueller I."/>
            <person name="Mullikin J.C."/>
            <person name="Nguyen N."/>
            <person name="Nordsiek G."/>
            <person name="Nyakatura G."/>
            <person name="O'dell C.N."/>
            <person name="Okwuonu G."/>
            <person name="Palmer S."/>
            <person name="Pandian R."/>
            <person name="Parker D."/>
            <person name="Parrish J."/>
            <person name="Pasternak S."/>
            <person name="Patel D."/>
            <person name="Pearce A.V."/>
            <person name="Pearson D.M."/>
            <person name="Pelan S.E."/>
            <person name="Perez L."/>
            <person name="Porter K.M."/>
            <person name="Ramsey Y."/>
            <person name="Reichwald K."/>
            <person name="Rhodes S."/>
            <person name="Ridler K.A."/>
            <person name="Schlessinger D."/>
            <person name="Schueler M.G."/>
            <person name="Sehra H.K."/>
            <person name="Shaw-Smith C."/>
            <person name="Shen H."/>
            <person name="Sheridan E.M."/>
            <person name="Shownkeen R."/>
            <person name="Skuce C.D."/>
            <person name="Smith M.L."/>
            <person name="Sotheran E.C."/>
            <person name="Steingruber H.E."/>
            <person name="Steward C.A."/>
            <person name="Storey R."/>
            <person name="Swann R.M."/>
            <person name="Swarbreck D."/>
            <person name="Tabor P.E."/>
            <person name="Taudien S."/>
            <person name="Taylor T."/>
            <person name="Teague B."/>
            <person name="Thomas K."/>
            <person name="Thorpe A."/>
            <person name="Timms K."/>
            <person name="Tracey A."/>
            <person name="Trevanion S."/>
            <person name="Tromans A.C."/>
            <person name="d'Urso M."/>
            <person name="Verduzco D."/>
            <person name="Villasana D."/>
            <person name="Waldron L."/>
            <person name="Wall M."/>
            <person name="Wang Q."/>
            <person name="Warren J."/>
            <person name="Warry G.L."/>
            <person name="Wei X."/>
            <person name="West A."/>
            <person name="Whitehead S.L."/>
            <person name="Whiteley M.N."/>
            <person name="Wilkinson J.E."/>
            <person name="Willey D.L."/>
            <person name="Williams G."/>
            <person name="Williams L."/>
            <person name="Williamson A."/>
            <person name="Williamson H."/>
            <person name="Wilming L."/>
            <person name="Woodmansey R.L."/>
            <person name="Wray P.W."/>
            <person name="Yen J."/>
            <person name="Zhang J."/>
            <person name="Zhou J."/>
            <person name="Zoghbi H."/>
            <person name="Zorilla S."/>
            <person name="Buck D."/>
            <person name="Reinhardt R."/>
            <person name="Poustka A."/>
            <person name="Rosenthal A."/>
            <person name="Lehrach H."/>
            <person name="Meindl A."/>
            <person name="Minx P.J."/>
            <person name="Hillier L.W."/>
            <person name="Willard H.F."/>
            <person name="Wilson R.K."/>
            <person name="Waterston R.H."/>
            <person name="Rice C.M."/>
            <person name="Vaudin M."/>
            <person name="Coulson A."/>
            <person name="Nelson D.L."/>
            <person name="Weinstock G."/>
            <person name="Sulston J.E."/>
            <person name="Durbin R.M."/>
            <person name="Hubbard T."/>
            <person name="Gibbs R.A."/>
            <person name="Beck S."/>
            <person name="Rogers J."/>
            <person name="Bentley D.R."/>
        </authorList>
    </citation>
    <scope>NUCLEOTIDE SEQUENCE [LARGE SCALE GENOMIC DNA]</scope>
</reference>
<reference key="10">
    <citation type="submission" date="2005-09" db="EMBL/GenBank/DDBJ databases">
        <authorList>
            <person name="Mural R.J."/>
            <person name="Istrail S."/>
            <person name="Sutton G.G."/>
            <person name="Florea L."/>
            <person name="Halpern A.L."/>
            <person name="Mobarry C.M."/>
            <person name="Lippert R."/>
            <person name="Walenz B."/>
            <person name="Shatkay H."/>
            <person name="Dew I."/>
            <person name="Miller J.R."/>
            <person name="Flanigan M.J."/>
            <person name="Edwards N.J."/>
            <person name="Bolanos R."/>
            <person name="Fasulo D."/>
            <person name="Halldorsson B.V."/>
            <person name="Hannenhalli S."/>
            <person name="Turner R."/>
            <person name="Yooseph S."/>
            <person name="Lu F."/>
            <person name="Nusskern D.R."/>
            <person name="Shue B.C."/>
            <person name="Zheng X.H."/>
            <person name="Zhong F."/>
            <person name="Delcher A.L."/>
            <person name="Huson D.H."/>
            <person name="Kravitz S.A."/>
            <person name="Mouchard L."/>
            <person name="Reinert K."/>
            <person name="Remington K.A."/>
            <person name="Clark A.G."/>
            <person name="Waterman M.S."/>
            <person name="Eichler E.E."/>
            <person name="Adams M.D."/>
            <person name="Hunkapiller M.W."/>
            <person name="Myers E.W."/>
            <person name="Venter J.C."/>
        </authorList>
    </citation>
    <scope>NUCLEOTIDE SEQUENCE [LARGE SCALE GENOMIC DNA]</scope>
</reference>
<reference key="11">
    <citation type="journal article" date="2004" name="Genome Res.">
        <title>The status, quality, and expansion of the NIH full-length cDNA project: the Mammalian Gene Collection (MGC).</title>
        <authorList>
            <consortium name="The MGC Project Team"/>
        </authorList>
    </citation>
    <scope>NUCLEOTIDE SEQUENCE [LARGE SCALE MRNA] (ISOFORM 1)</scope>
</reference>
<reference key="12">
    <citation type="journal article" date="1989" name="Mol. Cell. Endocrinol.">
        <title>The N-terminal domain of the human androgen receptor is encoded by one, large exon.</title>
        <authorList>
            <person name="Faber P.W."/>
            <person name="Kuiper G.G.J.M."/>
            <person name="van Rooij H.C.J."/>
            <person name="van der Korput J.A.G.M."/>
            <person name="Brinkmann A.O."/>
            <person name="Trapman J."/>
        </authorList>
    </citation>
    <scope>NUCLEOTIDE SEQUENCE [GENOMIC DNA] OF 1-539</scope>
</reference>
<reference key="13">
    <citation type="journal article" date="1988" name="Science">
        <title>Molecular cloning of human and rat complementary DNA encoding androgen receptors.</title>
        <authorList>
            <person name="Chang C."/>
            <person name="Kokontis J."/>
            <person name="Liao S."/>
        </authorList>
    </citation>
    <scope>NUCLEOTIDE SEQUENCE [MRNA] OF 191-920 (ISOFORM 1)</scope>
</reference>
<reference key="14">
    <citation type="submission" date="1995-02" db="EMBL/GenBank/DDBJ databases">
        <authorList>
            <person name="Lu J."/>
            <person name="Danielsen M."/>
        </authorList>
    </citation>
    <scope>NUCLEOTIDE SEQUENCE [GENOMIC DNA] OF 448-476</scope>
    <source>
        <tissue>Blood</tissue>
    </source>
</reference>
<reference key="15">
    <citation type="journal article" date="1988" name="Biochem. Biophys. Res. Commun.">
        <title>Cloning, structure and expression of a cDNA encoding the human androgen receptor.</title>
        <authorList>
            <person name="Trapman J."/>
            <person name="Klaassen P."/>
            <person name="Kuiper G.G.J.M."/>
            <person name="van der Korput J.A.G.M."/>
            <person name="Faber P.W."/>
            <person name="van Rooij H.C.J."/>
            <person name="Geurts van Kessel A."/>
            <person name="Voorhorst M.M."/>
            <person name="Mulder E."/>
            <person name="Brinkmann A.O."/>
        </authorList>
    </citation>
    <scope>NUCLEOTIDE SEQUENCE [MRNA] OF 470-920 (ISOFORM 1)</scope>
</reference>
<reference key="16">
    <citation type="journal article" date="1989" name="J. Mol. Endocrinol.">
        <title>Structural organization of the human androgen receptor gene.</title>
        <authorList>
            <person name="Kuiper G.G."/>
            <person name="Faber P.W."/>
            <person name="van Rooij H.C."/>
            <person name="van der Korput J.A."/>
            <person name="Ris-Stalpers C."/>
            <person name="Klaassen P."/>
            <person name="Trapman J."/>
            <person name="Brinkmann A.O."/>
        </authorList>
    </citation>
    <scope>NUCLEOTIDE SEQUENCE [GENOMIC DNA] OF 537-541; 587-591; 626-630; 722-726; 770-774; 814-817 AND 866-870</scope>
</reference>
<reference key="17">
    <citation type="journal article" date="1993" name="Mol. Endocrinol.">
        <title>A point mutation in the second zinc finger of the DNA-binding domain of the androgen receptor gene causes complete androgen insensitivity in two siblings with receptor-positive androgen resistance.</title>
        <authorList>
            <person name="Mowszowicz I."/>
            <person name="Lee H.-J."/>
            <person name="Chen H.-T."/>
            <person name="Mestayer C."/>
            <person name="Portois M.-C."/>
            <person name="Cabrol S."/>
            <person name="Mauvais-Jarvis P."/>
            <person name="Chang C."/>
        </authorList>
    </citation>
    <scope>NUCLEOTIDE SEQUENCE [MRNA] OF 558-625 (ISOFORMS 1/2)</scope>
    <scope>VARIANT AIS HIS-616</scope>
    <source>
        <tissue>Fibroblast</tissue>
    </source>
</reference>
<reference key="18">
    <citation type="journal article" date="1988" name="Science">
        <title>Cloning of human androgen receptor complementary DNA and localization to the X chromosome.</title>
        <authorList>
            <person name="Lubahn D.B."/>
            <person name="Joseph D.R."/>
            <person name="Sullivan P.M."/>
            <person name="Willard H.F."/>
            <person name="French F.S."/>
            <person name="Wilson E.M."/>
        </authorList>
    </citation>
    <scope>NUCLEOTIDE SEQUENCE [MRNA] OF 560-625 (ISOFORMS 1/2)</scope>
</reference>
<reference key="19">
    <citation type="journal article" date="1991" name="Mol. Endocrinol.">
        <title>Substitution of aspartic acid-686 by histidine or asparagine in the human androgen receptor leads to a functionally inactive protein with altered hormone-binding characteristics.</title>
        <authorList>
            <person name="Ris-Stalpers C."/>
            <person name="Trifiro M.A."/>
            <person name="Kuiper G.G.J.M."/>
            <person name="Jenster G."/>
            <person name="Romalo G."/>
            <person name="Sai T."/>
            <person name="van Rooij H.C.J."/>
            <person name="Kaufman M."/>
            <person name="Rosenfield R.L."/>
            <person name="Liao S."/>
            <person name="Schweikert H.-U."/>
            <person name="Trapman J."/>
            <person name="Pinsky L."/>
            <person name="Brinkmann A.O."/>
        </authorList>
    </citation>
    <scope>NUCLEOTIDE SEQUENCE [GENOMIC DNA] OF 630-724</scope>
    <scope>VARIANTS AIS ASN-696 AND HIS-696</scope>
</reference>
<reference key="20">
    <citation type="journal article" date="1992" name="Nucleic Acids Res.">
        <title>Trinucleotide repeat polymorphism in the androgen receptor gene (AR).</title>
        <authorList>
            <person name="Sleddens H.F.B.M."/>
            <person name="Oostra B.A."/>
            <person name="Brinkmann A.O."/>
            <person name="Trapman J."/>
        </authorList>
    </citation>
    <scope>POLYMORPHISM OF POLY-GLN REGION</scope>
</reference>
<reference key="21">
    <citation type="journal article" date="1996" name="Proc. Natl. Acad. Sci. U.S.A.">
        <title>Cloning and characterization of a specific coactivator, ARA70, for the androgen receptor in human prostate cells.</title>
        <authorList>
            <person name="Yeh S."/>
            <person name="Chang C."/>
        </authorList>
    </citation>
    <scope>INTERACTION WITH NCOA4</scope>
    <source>
        <tissue>Prostatic carcinoma</tissue>
    </source>
</reference>
<reference key="22">
    <citation type="journal article" date="1997" name="Proc. Natl. Acad. Sci. U.S.A.">
        <title>The CAG repeat within the androgen receptor gene and its relationship to prostate cancer.</title>
        <authorList>
            <person name="Giovannucci E."/>
            <person name="Stampfer M.J."/>
            <person name="Krithivas K."/>
            <person name="Brown M."/>
            <person name="Dahl D."/>
            <person name="Brufsky A."/>
            <person name="Talcott J."/>
            <person name="Hennekens C.H."/>
            <person name="Kantoff P.W."/>
        </authorList>
    </citation>
    <scope>POLYMORPHISM OF POLY-GLN REGION</scope>
</reference>
<reference key="23">
    <citation type="journal article" date="1997" name="Proc. Natl. Acad. Sci. U.S.A.">
        <authorList>
            <person name="Giovannucci E."/>
            <person name="Stampfer M.J."/>
            <person name="Krithivas K."/>
            <person name="Brown M."/>
            <person name="Dahl D."/>
            <person name="Brufsky A."/>
            <person name="Talcott J."/>
            <person name="Hennekens C.H."/>
            <person name="Kantoff P.W."/>
        </authorList>
    </citation>
    <scope>ERRATUM OF PUBMED:9096391</scope>
</reference>
<reference key="24">
    <citation type="journal article" date="1999" name="Hum. Mol. Genet.">
        <title>PQBP-1, a novel polyglutamine tract binding protein, inhibits transcription activation by Brn-2 and affects cell survival.</title>
        <authorList>
            <person name="Waragai M."/>
            <person name="Lammers C.-H."/>
            <person name="Takeuchi S."/>
            <person name="Imafuku I."/>
            <person name="Udagawa Y."/>
            <person name="Kanazawa I."/>
            <person name="Kawabata M."/>
            <person name="Mouradian M.M."/>
            <person name="Okazawa H."/>
        </authorList>
    </citation>
    <scope>INTERACTION WITH PQBP1</scope>
    <source>
        <tissue>Brain</tissue>
    </source>
</reference>
<reference key="25">
    <citation type="journal article" date="1999" name="J. Biol. Chem.">
        <title>Cloning and characterization of androgen receptor coactivator, ARA55, in human prostate.</title>
        <authorList>
            <person name="Fujimoto N."/>
            <person name="Yeh S."/>
            <person name="Kang H.-Y."/>
            <person name="Inui S."/>
            <person name="Chang H.-C."/>
            <person name="Mizokami A."/>
            <person name="Chang C."/>
        </authorList>
    </citation>
    <scope>INTERACTION WITH TGFB1I1</scope>
</reference>
<reference key="26">
    <citation type="journal article" date="1999" name="J. Biol. Chem.">
        <title>Ubc9 interacts with the androgen receptor and activates receptor-dependent transcription.</title>
        <authorList>
            <person name="Poukka H."/>
            <person name="Aarnisalo P."/>
            <person name="Karvonen U."/>
            <person name="Palvimo J.J."/>
            <person name="Jaenne O.A."/>
        </authorList>
    </citation>
    <scope>INTERACTION WITH UBE2I</scope>
</reference>
<reference key="27">
    <citation type="journal article" date="1999" name="J. Biol. Chem.">
        <title>The linkage of Kennedy's neuron disease to ARA24, the first identified androgen receptor polyglutamine region-associated coactivator.</title>
        <authorList>
            <person name="Hsiao P.-W."/>
            <person name="Lin D.-L."/>
            <person name="Nakao R."/>
            <person name="Chang C."/>
        </authorList>
    </citation>
    <scope>INTERACTION WITH RAN</scope>
</reference>
<reference key="28">
    <citation type="journal article" date="2000" name="J. Biol. Chem.">
        <title>PDEF, a novel prostate epithelium-specific ets transcription factor, interacts with the androgen receptor and activates prostate-specific antigen gene expression.</title>
        <authorList>
            <person name="Oettgen P."/>
            <person name="Finger E."/>
            <person name="Sun Z."/>
            <person name="Akbarali Y."/>
            <person name="Thamrongsak U."/>
            <person name="Boltax J."/>
            <person name="Grall F."/>
            <person name="Dube A."/>
            <person name="Weiss A."/>
            <person name="Brown L."/>
            <person name="Quinn G."/>
            <person name="Kas K."/>
            <person name="Endress G."/>
            <person name="Kunsch C."/>
            <person name="Libermann T.A."/>
        </authorList>
    </citation>
    <scope>INTERACTION WITH SPDEF</scope>
</reference>
<reference key="29">
    <citation type="journal article" date="2000" name="J. Biol. Chem.">
        <title>Androgen receptor interacts with a novel MYST protein, HBO1.</title>
        <authorList>
            <person name="Sharma M."/>
            <person name="Zarnegar M."/>
            <person name="Li X."/>
            <person name="Lim B."/>
            <person name="Sun Z."/>
        </authorList>
    </citation>
    <scope>INTERACTION WITH KAT7</scope>
</reference>
<reference key="30">
    <citation type="journal article" date="2000" name="Proc. Natl. Acad. Sci. U.S.A.">
        <title>Covalent modification of the androgen receptor by small ubiquitin-like modifier 1 (SUMO-1).</title>
        <authorList>
            <person name="Poukka H."/>
            <person name="Karvonen U."/>
            <person name="Jaenne O.A."/>
            <person name="Palvimo J.J."/>
        </authorList>
    </citation>
    <scope>SUMOYLATION AT LYS-388 AND LYS-521</scope>
</reference>
<reference key="31">
    <citation type="journal article" date="2002" name="J. Biol. Chem.">
        <title>RanBPM, a nuclear protein that interacts with and regulates transcriptional activity of androgen receptor and glucocorticoid receptor.</title>
        <authorList>
            <person name="Rao M.A."/>
            <person name="Cheng H."/>
            <person name="Quayle A.N."/>
            <person name="Nishitani H."/>
            <person name="Nelson C.C."/>
            <person name="Rennie P.S."/>
        </authorList>
    </citation>
    <scope>INTERACTION WITH RANBP9</scope>
</reference>
<reference key="32">
    <citation type="journal article" date="2002" name="J. Biol. Chem.">
        <title>Activation function-1 domain of androgen receptor contributes to the interaction between subnuclear splicing factor compartment and nuclear receptor compartment. Identification of the p102 U5 small nuclear ribonucleoprotein particle-binding protein as a coactivator for the receptor.</title>
        <authorList>
            <person name="Zhao Y."/>
            <person name="Goto K."/>
            <person name="Saitoh M."/>
            <person name="Yanase T."/>
            <person name="Nomura M."/>
            <person name="Okabe T."/>
            <person name="Takayanagi R."/>
            <person name="Nawata H."/>
        </authorList>
    </citation>
    <scope>INTERACTION WITH PRPF6</scope>
</reference>
<reference key="33">
    <citation type="journal article" date="2002" name="Proc. Natl. Acad. Sci. U.S.A.">
        <title>Estrogen receptor-interacting protein that modulates its nongenomic activity-crosstalk with Src/Erk phosphorylation cascade.</title>
        <authorList>
            <person name="Wong C.-W."/>
            <person name="McNally C."/>
            <person name="Nickbarg E."/>
            <person name="Komm B.S."/>
            <person name="Cheskis B.J."/>
        </authorList>
    </citation>
    <scope>RETRACTED PAPER</scope>
</reference>
<reference key="34">
    <citation type="journal article" date="2009" name="Proc. Natl. Acad. Sci. U.S.A.">
        <authorList>
            <person name="Wong C.W."/>
            <person name="McNally C."/>
            <person name="Nickbarg E."/>
            <person name="Komm B.S."/>
            <person name="Cheskis B.J."/>
        </authorList>
    </citation>
    <scope>RETRACTION NOTICE OF PUBMED:12415108</scope>
</reference>
<reference key="35">
    <citation type="journal article" date="2003" name="EMBO J.">
        <title>hZimp10 is an androgen receptor co-activator and forms a complex with SUMO-1 at replication foci.</title>
        <authorList>
            <person name="Sharma M."/>
            <person name="Li X."/>
            <person name="Wang Y."/>
            <person name="Zarnegar M."/>
            <person name="Huang C.-Y."/>
            <person name="Palvimo J.J."/>
            <person name="Lim B."/>
            <person name="Sun Z."/>
        </authorList>
    </citation>
    <scope>INTERACTION WITH ZMIZ1</scope>
</reference>
<reference key="36">
    <citation type="journal article" date="2003" name="J. Biol. Chem.">
        <title>The scaffolding protein RACK1 interacts with androgen receptor and promotes cross-talk through a protein kinase C signaling pathway.</title>
        <authorList>
            <person name="Rigas A.C."/>
            <person name="Ozanne D.M."/>
            <person name="Neal D.E."/>
            <person name="Robson C.N."/>
        </authorList>
    </citation>
    <scope>INTERACTION WITH RACK1</scope>
    <scope>SUBCELLULAR LOCATION</scope>
</reference>
<reference key="37">
    <citation type="journal article" date="2003" name="J. Mol. Endocrinol.">
        <title>The retinoblastoma protein-associated transcription repressor RBaK interacts with the androgen receptor and enhances its transcriptional activity.</title>
        <authorList>
            <person name="Hofman K."/>
            <person name="Swinnen J.V."/>
            <person name="Claessens F."/>
            <person name="Verhoeven G."/>
            <person name="Heyns W."/>
        </authorList>
    </citation>
    <scope>FUNCTION</scope>
    <scope>INTERACTION WITH RBAK</scope>
</reference>
<reference key="38">
    <citation type="journal article" date="2003" name="Mol. Cancer Res.">
        <title>DJBP: a novel DJ-1-binding protein, negatively regulates the androgen receptor by recruiting histone deacetylase complex, and DJ-1 antagonizes this inhibition by abrogation of this complex.</title>
        <authorList>
            <person name="Niki T."/>
            <person name="Takahashi-Niki K."/>
            <person name="Taira T."/>
            <person name="Iguchi-Ariga S.M.M."/>
            <person name="Ariga H."/>
        </authorList>
    </citation>
    <scope>INTERACTION WITH EFCAB6</scope>
</reference>
<reference key="39">
    <citation type="journal article" date="2004" name="J. Biol. Chem.">
        <title>Mechanism of p21-activated kinase 6-mediated inhibition of androgen receptor signaling.</title>
        <authorList>
            <person name="Schrantz N."/>
            <person name="da Silva Correia J."/>
            <person name="Fowler B."/>
            <person name="Ge Q."/>
            <person name="Sun Z."/>
            <person name="Bokoch G.M."/>
        </authorList>
    </citation>
    <scope>PHOSPHORYLATION BY PAK6</scope>
</reference>
<reference key="40">
    <citation type="journal article" date="2005" name="J. Cell Biol.">
        <title>Huntingtin interacting protein 1 modulates the transcriptional activity of nuclear hormone receptors.</title>
        <authorList>
            <person name="Mills I.G."/>
            <person name="Gaughan L."/>
            <person name="Robson C."/>
            <person name="Ross T."/>
            <person name="McCracken S."/>
            <person name="Kelly J."/>
            <person name="Neal D.E."/>
        </authorList>
    </citation>
    <scope>INTERACTION WITH HIP1</scope>
</reference>
<reference key="41">
    <citation type="journal article" date="2005" name="Mol. Endocrinol.">
        <title>hZimp7, a novel PIAS-like protein, enhances androgen receptor-mediated transcription and interacts with SWI/SNF-like BAF complexes.</title>
        <authorList>
            <person name="Huang C.-Y."/>
            <person name="Beliakoff J."/>
            <person name="Li X."/>
            <person name="Lee J."/>
            <person name="Li X."/>
            <person name="Sharma M."/>
            <person name="Lim B."/>
            <person name="Sun Z."/>
        </authorList>
    </citation>
    <scope>INTERACTION WITH ZMIZ2</scope>
</reference>
<reference key="42">
    <citation type="journal article" date="2006" name="Cancer Cell">
        <title>Regulation of androgen receptor activity by tyrosine phosphorylation.</title>
        <authorList>
            <person name="Guo Z."/>
            <person name="Dai B."/>
            <person name="Jiang T."/>
            <person name="Xu K."/>
            <person name="Xie Y."/>
            <person name="Kim O."/>
            <person name="Nesheiwat I."/>
            <person name="Kong X."/>
            <person name="Melamed J."/>
            <person name="Handratta V.D."/>
            <person name="Njar V.C."/>
            <person name="Brodie A.M."/>
            <person name="Yu L.-R."/>
            <person name="Veenstra T.D."/>
            <person name="Chen H."/>
            <person name="Qiu Y."/>
        </authorList>
    </citation>
    <scope>PHOSPHORYLATION AT TYR-225; TYR-269; TYR-309; TYR-348; TYR-359; TYR-364; TYR-365; TYR-395; TYR-535; TYR-552 AND TYR-916</scope>
    <scope>MUTAGENESIS OF TYR-225; TYR-269; TYR-309; TYR-348; TYR-359; TYR-364; TYR-365; TYR-395; TYR-535; TYR-552 AND TYR-916</scope>
    <scope>IDENTIFICATION BY MASS SPECTROMETRY</scope>
</reference>
<reference key="43">
    <citation type="journal article" date="2007" name="Cancer Cell">
        <authorList>
            <person name="Guo Z."/>
            <person name="Dai B."/>
            <person name="Jiang T."/>
            <person name="Xu K."/>
            <person name="Xie Y."/>
            <person name="Kim O."/>
            <person name="Nesheiwat I."/>
            <person name="Kong X."/>
            <person name="Melamed J."/>
            <person name="Handratta V.D."/>
            <person name="Njar V.C."/>
            <person name="Brodie A.M."/>
            <person name="Yu L.-R."/>
            <person name="Veenstra T.D."/>
            <person name="Chen H."/>
            <person name="Qiu Y."/>
        </authorList>
    </citation>
    <scope>ERRATUM OF PUBMED:17045208</scope>
</reference>
<reference key="44">
    <citation type="journal article" date="2006" name="Cancer Res.">
        <title>Male germ cell-associated kinase, a male-specific kinase regulated by androgen, is a coactivator of androgen receptor in prostate cancer cells.</title>
        <authorList>
            <person name="Ma A.H."/>
            <person name="Xia L."/>
            <person name="Desai S.J."/>
            <person name="Boucher D.L."/>
            <person name="Guan Y."/>
            <person name="Shih H.M."/>
            <person name="Shi X.B."/>
            <person name="deVere White R.W."/>
            <person name="Chen H.W."/>
            <person name="Tepper C.G."/>
            <person name="Kung H.J."/>
        </authorList>
    </citation>
    <scope>INTERACTION WITH MAK</scope>
    <scope>SUBUNIT</scope>
</reference>
<reference key="45">
    <citation type="journal article" date="2007" name="J. Steroid Biochem. Mol. Biol.">
        <title>PRMT2, a member of the protein arginine methyltransferase family, is a coactivator of the androgen receptor.</title>
        <authorList>
            <person name="Meyer R."/>
            <person name="Wolf S.S."/>
            <person name="Obendorf M."/>
        </authorList>
    </citation>
    <scope>INTERACTION WITH PRMT2</scope>
    <scope>SUBCELLULAR LOCATION</scope>
</reference>
<reference key="46">
    <citation type="journal article" date="2007" name="Mol. Endocrinol.">
        <title>The zinc finger protein Ras-responsive element binding protein-1 is a coregulator of the androgen receptor: implications for the role of the Ras pathway in enhancing androgenic signaling in prostate cancer.</title>
        <authorList>
            <person name="Mukhopadhyay N.K."/>
            <person name="Cinar B."/>
            <person name="Mukhopadhyay L."/>
            <person name="Lutchman M."/>
            <person name="Ferdinand A.S."/>
            <person name="Kim J."/>
            <person name="Chung L.W.K."/>
            <person name="Adam R.M."/>
            <person name="Ray S.K."/>
            <person name="Leiter A.B."/>
            <person name="Richie J.P."/>
            <person name="Liu B.C.-S."/>
            <person name="Freeman M.R."/>
        </authorList>
    </citation>
    <scope>INTERACTION WITH RREB1</scope>
</reference>
<reference key="47">
    <citation type="journal article" date="2008" name="Biochem. Biophys. Res. Commun.">
        <title>RanBP10 acts as a novel coactivator for the androgen receptor.</title>
        <authorList>
            <person name="Harada N."/>
            <person name="Yokoyama T."/>
            <person name="Yamaji R."/>
            <person name="Nakano Y."/>
            <person name="Inui H."/>
        </authorList>
    </citation>
    <scope>INTERACTION WITH RANBP10</scope>
</reference>
<reference key="48">
    <citation type="journal article" date="2007" name="Proc. Natl. Acad. Sci. U.S.A.">
        <title>Activated Cdc42-associated kinase Ack1 promotes prostate cancer progression via androgen receptor tyrosine phosphorylation.</title>
        <authorList>
            <person name="Mahajan N.P."/>
            <person name="Liu Y."/>
            <person name="Majumder S."/>
            <person name="Warren M.R."/>
            <person name="Parker C.E."/>
            <person name="Mohler J.L."/>
            <person name="Earp H.S."/>
            <person name="Whang Y.E."/>
        </authorList>
    </citation>
    <scope>INTERACTION WITH TNK2</scope>
    <scope>PHOSPHORYLATION AT TYR-269 AND TYR-365 BY TNK2</scope>
    <scope>MUTAGENESIS OF TYR-269 AND TYR-365</scope>
</reference>
<reference key="49">
    <citation type="journal article" date="2008" name="Cancer Res.">
        <title>TRIM68 regulates ligand-dependent transcription of androgen receptor in prostate cancer cells.</title>
        <authorList>
            <person name="Miyajima N."/>
            <person name="Maruyama S."/>
            <person name="Bohgaki M."/>
            <person name="Kano S."/>
            <person name="Shigemura M."/>
            <person name="Shinohara N."/>
            <person name="Nonomura K."/>
            <person name="Hatakeyama S."/>
        </authorList>
    </citation>
    <scope>INTERACTION WITH TRIM68</scope>
</reference>
<reference key="50">
    <citation type="journal article" date="2008" name="Mol. Endocrinol.">
        <title>Leupaxin, a novel coactivator of the androgen receptor, is expressed in prostate cancer and plays a role in adhesion and invasion of prostate carcinoma cells.</title>
        <authorList>
            <person name="Kaulfuss S."/>
            <person name="Grzmil M."/>
            <person name="Hemmerlein B."/>
            <person name="Thelen P."/>
            <person name="Schweyer S."/>
            <person name="Neesen J."/>
            <person name="Bubendorf L."/>
            <person name="Glass A.G."/>
            <person name="Jarry H."/>
            <person name="Auber B."/>
            <person name="Burfeind P."/>
        </authorList>
    </citation>
    <scope>INTERACTION WITH LPXN</scope>
</reference>
<reference key="51">
    <citation type="journal article" date="2008" name="Oncogene">
        <title>ZIP kinase plays a crucial role in androgen receptor-mediated transcription.</title>
        <authorList>
            <person name="Leister P."/>
            <person name="Felten A."/>
            <person name="Chasan A.I."/>
            <person name="Scheidtmann K.H."/>
        </authorList>
    </citation>
    <scope>FUNCTION</scope>
    <scope>INTERACTION WITH ZIPK/DAPK3</scope>
</reference>
<reference key="52">
    <citation type="journal article" date="2009" name="Biochim. Biophys. Acta">
        <title>TRIM24 mediates ligand-dependent activation of androgen receptor and is repressed by a bromodomain-containing protein, BRD7, in prostate cancer cells.</title>
        <authorList>
            <person name="Kikuchi M."/>
            <person name="Okumura F."/>
            <person name="Tsukiyama T."/>
            <person name="Watanabe M."/>
            <person name="Miyajima N."/>
            <person name="Tanaka J."/>
            <person name="Imamura M."/>
            <person name="Hatakeyama S."/>
        </authorList>
    </citation>
    <scope>INTERACTION WITH TRIM24</scope>
</reference>
<reference key="53">
    <citation type="journal article" date="2009" name="Cancer Cell">
        <title>Regulation of androgen receptor transcriptional activity and specificity by RNF6-induced ubiquitination.</title>
        <authorList>
            <person name="Xu K."/>
            <person name="Shimelis H."/>
            <person name="Linn D.E."/>
            <person name="Jiang R."/>
            <person name="Yang X."/>
            <person name="Sun F."/>
            <person name="Guo Z."/>
            <person name="Chen H."/>
            <person name="Li W."/>
            <person name="Chen H."/>
            <person name="Kong X."/>
            <person name="Melamed J."/>
            <person name="Fang S."/>
            <person name="Xiao Z."/>
            <person name="Veenstra T.D."/>
            <person name="Qiu Y."/>
        </authorList>
    </citation>
    <scope>FUNCTION</scope>
    <scope>IDENTIFICATION BY MASS SPECTROMETRY</scope>
    <scope>POLYUBIQUITINATION AT LYS-846 AND LYS-848 BY RNF6</scope>
    <scope>MUTAGENESIS OF LYS-846 AND LYS-848</scope>
    <scope>INTERACTION WITH RNF14 AND RNF6</scope>
    <scope>SUBCELLULAR LOCATION</scope>
</reference>
<reference key="54">
    <citation type="journal article" date="2009" name="Endocr. Relat. Cancer">
        <title>The single-macro domain protein LRP16 is an essential cofactor of androgen receptor.</title>
        <authorList>
            <person name="Yang J."/>
            <person name="Zhao Y.-L."/>
            <person name="Wu Z.-Q."/>
            <person name="Si Y.-L."/>
            <person name="Meng Y.G."/>
            <person name="Fu X.B."/>
            <person name="Mu Y.-M."/>
            <person name="Han W.-D."/>
        </authorList>
    </citation>
    <scope>FUNCTION</scope>
    <scope>INTERACTION WITH MACROD1</scope>
</reference>
<reference key="55">
    <citation type="journal article" date="2010" name="Mol. Endocrinol.">
        <title>CDK9 regulates AR promoter selectivity and cell growth through serine 81 phosphorylation.</title>
        <authorList>
            <person name="Gordon V."/>
            <person name="Bhadel S."/>
            <person name="Wunderlich W."/>
            <person name="Zhang J."/>
            <person name="Ficarro S.B."/>
            <person name="Mollah S.A."/>
            <person name="Shabanowitz J."/>
            <person name="Hunt D.F."/>
            <person name="Xenarios I."/>
            <person name="Hahn W.C."/>
            <person name="Conaway M."/>
            <person name="Carey M.F."/>
            <person name="Gioeli D."/>
        </authorList>
    </citation>
    <scope>FUNCTION IN AR KINASE</scope>
    <scope>PHOSPHORYLATION AT SER-83 BY CDK9</scope>
    <scope>MUTAGENESIS OF SER-83</scope>
    <scope>INTERACTION WITH CDK9</scope>
</reference>
<reference key="56">
    <citation type="journal article" date="2010" name="Mol. Cancer Res.">
        <title>The deubiquitinating enzyme USP26 is a regulator of androgen receptor signaling.</title>
        <authorList>
            <person name="Dirac A.M."/>
            <person name="Bernards R."/>
        </authorList>
    </citation>
    <scope>UBIQUITINATION</scope>
    <scope>DEUBIQUITINATION</scope>
    <scope>INTERACTION WITH USP26</scope>
</reference>
<reference key="57">
    <citation type="journal article" date="2010" name="Prostate">
        <title>Effect of Ack1 tyrosine kinase inhibitor on ligand-independent androgen receptor activity.</title>
        <authorList>
            <person name="Mahajan K."/>
            <person name="Challa S."/>
            <person name="Coppola D."/>
            <person name="Lawrence H."/>
            <person name="Luo Y."/>
            <person name="Gevariya H."/>
            <person name="Zhu W."/>
            <person name="Chen Y.A."/>
            <person name="Lawrence N.J."/>
            <person name="Mahajan N.P."/>
        </authorList>
    </citation>
    <scope>PHOSPHORYLATION AT TYR-269</scope>
    <scope>ACTIVITY REGULATION</scope>
</reference>
<reference key="58">
    <citation type="journal article" date="2011" name="Cancer Res.">
        <title>MST1 is a multifunctional caspase-independent inhibitor of androgenic signaling.</title>
        <authorList>
            <person name="Cinar B."/>
            <person name="Collak F.K."/>
            <person name="Lopez D."/>
            <person name="Akgul S."/>
            <person name="Mukhopadhyay N.K."/>
            <person name="Kilicarslan M."/>
            <person name="Gioeli D.G."/>
            <person name="Freeman M.R."/>
        </authorList>
    </citation>
    <scope>PHOSPHORYLATION AT SER-651</scope>
    <scope>INTERACTION WITH STK4/MST1</scope>
</reference>
<reference key="59">
    <citation type="journal article" date="2011" name="Cell. Mol. Life Sci.">
        <title>FBI-1 functions as a novel AR co-repressor in prostate cancer cells.</title>
        <authorList>
            <person name="Cui J."/>
            <person name="Yang Y."/>
            <person name="Zhang C."/>
            <person name="Hu P."/>
            <person name="Kan W."/>
            <person name="Bai X."/>
            <person name="Liu X."/>
            <person name="Song H."/>
        </authorList>
    </citation>
    <scope>FUNCTION</scope>
    <scope>INTERACTION WITH NCOR1; NCOR2 AND ZBTB7A</scope>
</reference>
<reference key="60">
    <citation type="journal article" date="2011" name="Nature">
        <title>Cryptochromes mediate rhythmic repression of the glucocorticoid receptor.</title>
        <authorList>
            <person name="Lamia K.A."/>
            <person name="Papp S.J."/>
            <person name="Yu R.T."/>
            <person name="Barish G.D."/>
            <person name="Uhlenhaut N.H."/>
            <person name="Jonker J.W."/>
            <person name="Downes M."/>
            <person name="Evans R.M."/>
        </authorList>
    </citation>
    <scope>INTERACTION WITH CRY1</scope>
</reference>
<reference key="61">
    <citation type="journal article" date="2011" name="Sci. Signal.">
        <title>System-wide temporal characterization of the proteome and phosphoproteome of human embryonic stem cell differentiation.</title>
        <authorList>
            <person name="Rigbolt K.T."/>
            <person name="Prokhorova T.A."/>
            <person name="Akimov V."/>
            <person name="Henningsen J."/>
            <person name="Johansen P.T."/>
            <person name="Kratchmarova I."/>
            <person name="Kassem M."/>
            <person name="Mann M."/>
            <person name="Olsen J.V."/>
            <person name="Blagoev B."/>
        </authorList>
    </citation>
    <scope>PHOSPHORYLATION [LARGE SCALE ANALYSIS] AT SER-96</scope>
    <scope>IDENTIFICATION BY MASS SPECTROMETRY [LARGE SCALE ANALYSIS]</scope>
</reference>
<reference key="62">
    <citation type="journal article" date="2012" name="Mol. Biol. Cell">
        <title>DHHC-7 and -21 are palmitoylacyltransferases for sex steroid receptors.</title>
        <authorList>
            <person name="Pedram A."/>
            <person name="Razandi M."/>
            <person name="Deschenes R.J."/>
            <person name="Levin E.R."/>
        </authorList>
    </citation>
    <scope>PALMITOYLATION</scope>
</reference>
<reference key="63">
    <citation type="journal article" date="2013" name="Nucleic Acids Res.">
        <title>CCAR1 promotes chromatin loading of androgen receptor (AR) transcription complex by stabilizing the association between AR and GATA2.</title>
        <authorList>
            <person name="Seo W.Y."/>
            <person name="Jeong B.C."/>
            <person name="Yu E.J."/>
            <person name="Kim H.J."/>
            <person name="Kim S.H."/>
            <person name="Lim J.E."/>
            <person name="Kwon G.Y."/>
            <person name="Lee H.M."/>
            <person name="Kim J.H."/>
        </authorList>
    </citation>
    <scope>INTERACTION WITH CCAR1 AND GATA2</scope>
</reference>
<reference key="64">
    <citation type="journal article" date="2013" name="Proc. Natl. Acad. Sci. U.S.A.">
        <title>ARID4A and ARID4B regulate male fertility, a functional link to the AR and RB pathways.</title>
        <authorList>
            <person name="Wu R.C."/>
            <person name="Jiang M."/>
            <person name="Beaudet A.L."/>
            <person name="Wu M.Y."/>
        </authorList>
    </citation>
    <scope>INTERACTION WITH ARID4A</scope>
</reference>
<reference key="65">
    <citation type="journal article" date="2014" name="J. Proteomics">
        <title>An enzyme assisted RP-RPLC approach for in-depth analysis of human liver phosphoproteome.</title>
        <authorList>
            <person name="Bian Y."/>
            <person name="Song C."/>
            <person name="Cheng K."/>
            <person name="Dong M."/>
            <person name="Wang F."/>
            <person name="Huang J."/>
            <person name="Sun D."/>
            <person name="Wang L."/>
            <person name="Ye M."/>
            <person name="Zou H."/>
        </authorList>
    </citation>
    <scope>PHOSPHORYLATION [LARGE SCALE ANALYSIS] AT SER-96 AND SER-258</scope>
    <scope>IDENTIFICATION BY MASS SPECTROMETRY [LARGE SCALE ANALYSIS]</scope>
    <source>
        <tissue>Liver</tissue>
    </source>
</reference>
<reference key="66">
    <citation type="journal article" date="2000" name="J. Biol. Chem.">
        <title>Structural evidence for ligand specificity in the binding domain of the human androgen receptor. Implications for pathogenic gene mutations.</title>
        <authorList>
            <person name="Matias P.M."/>
            <person name="Donner P."/>
            <person name="Coelho R."/>
            <person name="Thomaz M."/>
            <person name="Peixoto C."/>
            <person name="Macedo S."/>
            <person name="Otto N."/>
            <person name="Joschko S."/>
            <person name="Scholz P."/>
            <person name="Wegg A."/>
            <person name="Baesler S."/>
            <person name="Schaefer M."/>
            <person name="Egner U."/>
            <person name="Carrondo M.A."/>
        </authorList>
    </citation>
    <scope>X-RAY CRYSTALLOGRAPHY (2.4 ANGSTROMS) OF 658-920</scope>
</reference>
<reference key="67">
    <citation type="journal article" date="2002" name="J. Med. Chem.">
        <title>Structural basis for the glucocorticoid response in a mutant human androgen receptor (AR(ccr)) derived from an androgen-independent prostate cancer.</title>
        <authorList>
            <person name="Matias P.M."/>
            <person name="Carrondo M.A."/>
            <person name="Coelho R."/>
            <person name="Thomaz M."/>
            <person name="Zhao X.Y."/>
            <person name="Wegg A."/>
            <person name="Crusius K."/>
            <person name="Egner U."/>
            <person name="Donner P."/>
        </authorList>
    </citation>
    <scope>X-RAY CRYSTALLOGRAPHY (1.95 ANGSTROMS) OF 671-918</scope>
</reference>
<reference key="68">
    <citation type="journal article" date="2004" name="Mol. Cell">
        <title>Structural basis for androgen receptor interdomain and coactivator interactions suggests a transition in nuclear receptor activation function dominance.</title>
        <authorList>
            <person name="He B."/>
            <person name="Gampe R.T. Jr."/>
            <person name="Kole A.J."/>
            <person name="Hnat A.T."/>
            <person name="Stanley T.B."/>
            <person name="An G."/>
            <person name="Stewart E.L."/>
            <person name="Kalman R.I."/>
            <person name="Minges J.T."/>
            <person name="Wilson E.M."/>
        </authorList>
    </citation>
    <scope>X-RAY CRYSTALLOGRAPHY (1.89 ANGSTROMS) OF 672-920 IN COMPLEXES WITH N-TERMINAL MODULATING DOMAIN AND NCOA2</scope>
    <scope>INTERACTION WITH NCOA1</scope>
    <scope>CHARACTERIZATION OF VARIANT PROSTATE CANCER MET-731</scope>
</reference>
<reference key="69">
    <citation type="journal article" date="2005" name="J. Biol. Chem.">
        <title>The molecular mechanisms of coactivator utilization in ligand-dependent transactivation by the androgen receptor.</title>
        <authorList>
            <person name="Estebanez-Perpina E."/>
            <person name="Moore J.M.R."/>
            <person name="Mar E."/>
            <person name="Delgado-Rodrigues E."/>
            <person name="Nguyen P."/>
            <person name="Baxter J.D."/>
            <person name="Buehrer B.M."/>
            <person name="Webb P."/>
            <person name="Fletterick R.J."/>
            <person name="Guy R.K."/>
        </authorList>
    </citation>
    <scope>X-RAY CRYSTALLOGRAPHY (1.66 ANGSTROMS) OF 670-920 IN COMPLEXES WITH DIHYDROTESTOSTERONE AND NCOA1; NCOA2; NCOA3 AND NCOA4</scope>
    <scope>FUNCTION</scope>
    <scope>INTERACTION WITH NCOA1; NCOA2; NCOA3 AND NCOA4</scope>
    <scope>MUTAGENESIS OF LYS-721 AND GLU-898</scope>
</reference>
<reference key="70">
    <citation type="journal article" date="2005" name="J. Biol. Chem.">
        <title>Structural basis for accommodation of nonsteroidal ligands in the androgen receptor.</title>
        <authorList>
            <person name="Bohl C.E."/>
            <person name="Miller D.D."/>
            <person name="Chen J."/>
            <person name="Bell C.E."/>
            <person name="Dalton J.T."/>
        </authorList>
    </citation>
    <scope>X-RAY CRYSTALLOGRAPHY (1.5 ANGSTROMS) OF 665-920 IN COMPLEXES WITH NONSTEROIDAL LIGANDS</scope>
    <scope>MUTAGENESIS OF TRP-742</scope>
    <scope>CHARACTERIZATION OF VARIANT PROSTATE CANCER ALA-878</scope>
    <scope>CHARACTERIZATION OF VARIANT AIS THR-896</scope>
</reference>
<reference key="71">
    <citation type="journal article" date="2006" name="Protein Sci.">
        <title>Comparison of crystal structures of human androgen receptor ligand-binding domain complexed with various agonists reveals molecular determinants responsible for binding affinity.</title>
        <authorList>
            <person name="Pereira de Jesus-Tran K."/>
            <person name="Cote P.-L."/>
            <person name="Cantin L."/>
            <person name="Blanchet J."/>
            <person name="Labrie F."/>
            <person name="Breton R."/>
        </authorList>
    </citation>
    <scope>X-RAY CRYSTALLOGRAPHY (1.64 ANGSTROMS) OF 655-920 IN COMPLEXES WITH TESTOSTERONE; DIHYDROTESTOSTERONE AND TETRAHYDROGESTRINONE</scope>
</reference>
<reference key="72">
    <citation type="journal article" date="2007" name="Acta Crystallogr. D">
        <title>Interaction between the androgen receptor and a segment of its corepressor SHP.</title>
        <authorList>
            <person name="Jouravel N."/>
            <person name="Sablin E."/>
            <person name="Arnold L.A."/>
            <person name="Guy R.K."/>
            <person name="Fletterick R.J."/>
        </authorList>
    </citation>
    <scope>X-RAY CRYSTALLOGRAPHY (2.6 ANGSTROMS) OF 672-919 IN COMPLEX WITH NR0B2</scope>
</reference>
<reference key="73">
    <citation type="journal article" date="2007" name="J. Biol. Chem.">
        <title>Crystal structure of the T877A human androgen receptor ligand-binding domain complexed to cyproterone acetate provides insight for ligand-induced conformational changes and structure-based drug design.</title>
        <authorList>
            <person name="Bohl C.E."/>
            <person name="Wu Z."/>
            <person name="Miller D.D."/>
            <person name="Bell C.E."/>
            <person name="Dalton J.T."/>
        </authorList>
    </citation>
    <scope>X-RAY CRYSTALLOGRAPHY (1.8 ANGSTROMS) OF 671-919 OF MUTANT ALA-878 IN COMPLEX WITH THE ANTIANDROGEN CYPROTERONE ACETATE</scope>
    <scope>CHARACTERIZATION OF VARIANT PROSTATE CANCER ALA-878</scope>
    <scope>MUTAGENESIS OF LEU-702</scope>
</reference>
<reference key="74">
    <citation type="journal article" date="2007" name="J. Biol. Chem.">
        <title>Modulation of androgen receptor activation function 2 by testosterone and dihydrotestosterone.</title>
        <authorList>
            <person name="Askew E.B."/>
            <person name="Gampe R.T. Jr."/>
            <person name="Stanley T.B."/>
            <person name="Faggart J.L."/>
            <person name="Wilson E.M."/>
        </authorList>
    </citation>
    <scope>X-RAY CRYSTALLOGRAPHY (1.8 ANGSTROMS) OF 663-919 OF WILD-TYPE AND MUTANT TYR-875 IN COMPLEX WITH TESTOSTERONE AND NCOA2</scope>
    <scope>ACTIVATION BY THE N-TERMINAL MODULATING DOMAIN</scope>
    <scope>INTERACTION WITH NCOA2 AND MAGEA11</scope>
    <scope>FUNCTION</scope>
    <scope>MUTAGENESIS OF LYS-721 AND GLU-898</scope>
    <scope>CHARACTERIZATION OF VARIANT PROSTATE CANCER TYR-875</scope>
</reference>
<reference key="75">
    <citation type="journal article" date="2007" name="J. Biol. Chem.">
        <title>Structural characterization of the human androgen receptor ligand-binding domain complexed with EM5744, a rationally designed steroidal ligand bearing a bulky chain directed toward helix 12.</title>
        <authorList>
            <person name="Cantin L."/>
            <person name="Faucher F."/>
            <person name="Couture J.-F."/>
            <person name="de Jesus-Tran K.P."/>
            <person name="Legrand P."/>
            <person name="Ciobanu L.C."/>
            <person name="Frechette Y."/>
            <person name="Labrecque R."/>
            <person name="Singh S.M."/>
            <person name="Labrie F."/>
            <person name="Breton R."/>
        </authorList>
    </citation>
    <scope>X-RAY CRYSTALLOGRAPHY (1.65 ANGSTROMS) OF 655-920 IN COMPLEX WITH EM5744</scope>
</reference>
<reference key="76">
    <citation type="journal article" date="2007" name="Proc. Natl. Acad. Sci. U.S.A.">
        <title>A surface on the androgen receptor that allosterically regulates coactivator binding.</title>
        <authorList>
            <person name="Estebanez-Perpina E."/>
            <person name="Arnold L.A."/>
            <person name="Nguyen P."/>
            <person name="Rodrigues E.D."/>
            <person name="Mar E."/>
            <person name="Bateman R."/>
            <person name="Pallai P."/>
            <person name="Shokat K.M."/>
            <person name="Baxter J.D."/>
            <person name="Guy R.K."/>
            <person name="Webb P."/>
            <person name="Fletterick R.J."/>
        </authorList>
    </citation>
    <scope>X-RAY CRYSTALLOGRAPHY (1.76 ANGSTROMS) OF 670-920 IN COMPLEXES WITH SYNTHETIC LIGANDS</scope>
    <scope>FUNCTION</scope>
    <scope>INTERACTION WITH NCOA2</scope>
</reference>
<reference evidence="231 232 233 234 235 236 237 238 239 240" key="77">
    <citation type="journal article" date="2014" name="Mol. Oncol.">
        <title>Identification of a new androgen receptor (AR) co-regulator BUD31 and related peptides to suppress wild-type and mutated AR-mediated prostate cancer growth via peptide screening and X-ray structure analysis.</title>
        <authorList>
            <person name="Hsu C.L."/>
            <person name="Liu J.S."/>
            <person name="Wu P.L."/>
            <person name="Guan H.H."/>
            <person name="Chen Y.L."/>
            <person name="Lin A.C."/>
            <person name="Ting H.J."/>
            <person name="Pang S.T."/>
            <person name="Yeh S.D."/>
            <person name="Ma W.L."/>
            <person name="Chen C.J."/>
            <person name="Wu W.G."/>
            <person name="Chang C."/>
        </authorList>
    </citation>
    <scope>X-RAY CRYSTALLOGRAPHY (1.42 ANGSTROMS) OF 671-920 OF VARIANT PROSTATE CANCER ALA-878 AND WILD-TYPE IN COMPLEX WITH DIHYDROTESTOSTERONE AND BUD31 PEPTIDES</scope>
    <scope>INTERACTION WITH BUD31</scope>
    <scope>FUNCTION</scope>
    <scope>SUBCELLULAR LOCATION</scope>
    <scope>DOMAIN</scope>
</reference>
<reference key="78">
    <citation type="journal article" date="1992" name="Clin. Invest. Med.">
        <title>Androgen resistance due to mutation of the androgen receptor.</title>
        <authorList>
            <person name="Pinsky L."/>
            <person name="Trifiro M.A."/>
            <person name="Kaufman M."/>
            <person name="Beitel L.K."/>
            <person name="Mhatre A."/>
            <person name="Kazemi-Esfarjani P."/>
            <person name="Sabbaghian N."/>
            <person name="Lumbroso R."/>
            <person name="Alvarado C."/>
            <person name="Vasiliou M."/>
            <person name="Gottlieb B."/>
        </authorList>
    </citation>
    <scope>VARIANT PAIS VAL-822</scope>
</reference>
<reference key="79">
    <citation type="journal article" date="1993" name="Eur. J. Pediatr. 152 Suppl.">
        <title>Molecular genetics of human androgen insensitivity.</title>
        <authorList>
            <person name="Brown T.R."/>
            <person name="Scherer P.A."/>
            <person name="Chang Y.-T."/>
            <person name="Migeon C.J."/>
            <person name="Ghirri P."/>
            <person name="Murono K."/>
            <person name="Zhou Z."/>
        </authorList>
    </citation>
    <scope>VARIANT PAIS TYR-807</scope>
    <scope>VARIANT AIS LEU-857</scope>
</reference>
<reference key="80">
    <citation type="journal article" date="1993" name="J. Steroid Biochem. Mol. Biol.">
        <title>Mutations of androgen receptor gene in androgen insensitivity syndromes.</title>
        <authorList>
            <person name="Sultan C."/>
            <person name="Lumbroso S."/>
            <person name="Poujol N."/>
            <person name="Belon C."/>
            <person name="Boudon C."/>
            <person name="Lobaccaro J.-M."/>
        </authorList>
    </citation>
    <scope>VARIANT AIS LYS-586</scope>
</reference>
<reference key="81">
    <citation type="journal article" date="1994" name="Nucleic Acids Res.">
        <title>The androgen receptor gene mutations database.</title>
        <authorList>
            <person name="Patterson M.N."/>
            <person name="Hughes I.A."/>
            <person name="Gottlieb B."/>
            <person name="Pinsky L."/>
        </authorList>
    </citation>
    <scope>REVIEW ON VARIANTS</scope>
</reference>
<reference key="82">
    <citation type="journal article" date="1995" name="J. Steroid Biochem. Mol. Biol.">
        <title>Androgen receptor mutations.</title>
        <authorList>
            <person name="Brinkmann A.O."/>
            <person name="Jenster G."/>
            <person name="Ris-Stalpers C."/>
            <person name="van der Korput J.A.G.M."/>
            <person name="Bruggenwirth H.T."/>
            <person name="Boehmer A.L.M."/>
            <person name="Trapman J."/>
        </authorList>
    </citation>
    <scope>VARIANTS AIS PHE-745 AND ARG-752</scope>
</reference>
<reference key="83">
    <citation type="journal article" date="1997" name="Nucleic Acids Res.">
        <title>The androgen receptor gene mutations database.</title>
        <authorList>
            <person name="Gottlieb B."/>
            <person name="Trifiro M.A."/>
            <person name="Lumbroso R."/>
            <person name="Vasiliou D.M."/>
            <person name="Pinsky L."/>
        </authorList>
    </citation>
    <scope>REVIEW ON VARIANTS</scope>
</reference>
<reference key="84">
    <citation type="journal article" date="2012" name="Hum. Mutat.">
        <title>The androgen receptor gene mutations database: 2012 update.</title>
        <authorList>
            <person name="Gottlieb B."/>
            <person name="Beitel L.K."/>
            <person name="Nadarajah A."/>
            <person name="Paliouras M."/>
            <person name="Trifiro M."/>
        </authorList>
    </citation>
    <scope>REVIEW ON VARIANTS</scope>
</reference>
<reference key="85">
    <citation type="journal article" date="1990" name="Biochem. Biophys. Res. Commun.">
        <title>A mutation in the ligand binding domain of the androgen receptor of human LNCaP cells affects steroid binding characteristics and response to anti-androgens.</title>
        <authorList>
            <person name="Veldscholte J."/>
            <person name="Ris-Stalpers C."/>
            <person name="Kuiper G.G.J.M."/>
            <person name="Jenster G."/>
            <person name="Berrevoets C.A."/>
            <person name="Claassen E."/>
            <person name="van Rooij H.C.J."/>
            <person name="Trapman J."/>
            <person name="Brinkmann A.O."/>
            <person name="Mulder E."/>
        </authorList>
    </citation>
    <scope>VARIANT LNCAP ALA-878</scope>
</reference>
<reference key="86">
    <citation type="journal article" date="1990" name="Mol. Endocrinol.">
        <title>Functional characterization of naturally occurring mutant androgen receptors from subjects with complete androgen insensitivity.</title>
        <authorList>
            <person name="Brown T.R."/>
            <person name="Lubahn D.B."/>
            <person name="Wilson E.M."/>
            <person name="French F.S."/>
            <person name="Migeon C.J."/>
            <person name="Corfen J.L."/>
        </authorList>
    </citation>
    <scope>VARIANTS AIS CYS-775; GLN-832 AND MET-867</scope>
</reference>
<reference key="87">
    <citation type="journal article" date="1991" name="J. Clin. Endocrinol. Metab.">
        <title>Androgen resistance associated with a mutation of the androgen receptor at amino acid 772 (Arg--&gt;Cys) results from a combination of decreased messenger ribonucleic acid levels and impairment of receptor function.</title>
        <authorList>
            <person name="Marcelli M."/>
            <person name="Tilley W.D."/>
            <person name="Zoppi S."/>
            <person name="Griffin J.E."/>
            <person name="Wilson J.D."/>
            <person name="McPhaul M.J."/>
        </authorList>
    </citation>
    <scope>VARIANT CYS-775</scope>
</reference>
<reference key="88">
    <citation type="journal article" date="1991" name="J. Clin. Invest.">
        <title>A mutation in the DNA-binding domain of the androgen receptor gene causes complete testicular feminization in a patient with receptor-positive androgen resistance.</title>
        <authorList>
            <person name="Marcelli M."/>
            <person name="Zoppi S."/>
            <person name="Grino P.B."/>
            <person name="Griffin J.E."/>
            <person name="Wilson J.D."/>
            <person name="McPhaul M.J."/>
        </authorList>
    </citation>
    <scope>VARIANTS AIS PRO-616 AND PRO-618</scope>
</reference>
<reference key="89">
    <citation type="journal article" date="1991" name="J. Clin. Invest.">
        <title>Molecular basis of androgen resistance in a family with a qualitative abnormality of the androgen receptor and responsive to high-dose androgen therapy.</title>
        <authorList>
            <person name="McPhaul M.J."/>
            <person name="Marcelli M."/>
            <person name="Tilley W.D."/>
            <person name="Griffin J.E."/>
            <person name="Isidro-Gutierrez R.F."/>
            <person name="Wilson J.D."/>
        </authorList>
    </citation>
    <scope>VARIANT PAIS CYS-764</scope>
</reference>
<reference key="90">
    <citation type="journal article" date="1991" name="Nature">
        <title>Androgen receptor gene mutations in X-linked spinal and bulbar muscular atrophy.</title>
        <authorList>
            <person name="la Spada A.R."/>
            <person name="Wilson E.M."/>
            <person name="Lubahn D.B."/>
            <person name="Harding A.E."/>
            <person name="Fischbeck K.H."/>
        </authorList>
    </citation>
    <scope>POLY-GLN REGION EXPANSION</scope>
    <scope>INVOLVEMENT IN SPINAL AND BULBAR MUSCULAR ATROPHY</scope>
</reference>
<reference key="91">
    <citation type="journal article" date="1992" name="Am. J. Hum. Genet.">
        <title>Replacement of arginine 773 by cysteine or histidine in the human androgen receptor causes complete androgen insensitivity with different receptor phenotypes.</title>
        <authorList>
            <person name="Prior L."/>
            <person name="Bordet S."/>
            <person name="Trifiro M.A."/>
            <person name="Mhatre A."/>
            <person name="Kaufman M."/>
            <person name="Pinsky L."/>
            <person name="Wrogemann K."/>
            <person name="Belsham D.D."/>
            <person name="Pereira F."/>
            <person name="Greenberg C.R."/>
            <person name="Trapman J."/>
            <person name="Brinkmann A.O."/>
            <person name="Chang C."/>
            <person name="Liao S."/>
        </authorList>
    </citation>
    <scope>VARIANTS AIS CYS-775 AND HIS-775</scope>
</reference>
<reference key="92">
    <citation type="journal article" date="1992" name="Clin. Endocrinol. (Oxf.)">
        <title>Point mutations detected in the androgen receptor gene of three men with partial androgen insensitivity syndrome.</title>
        <authorList>
            <person name="Saunders P.T."/>
            <person name="Padayachi T."/>
            <person name="Tincello D.G."/>
            <person name="Shalet S.M."/>
            <person name="Wu F.C."/>
        </authorList>
    </citation>
    <scope>VARIANTS PAIS LYS-609 AND LEU-867</scope>
</reference>
<reference key="93">
    <citation type="journal article" date="1992" name="Fertil. Steril.">
        <title>A unique point mutation in the androgen receptor gene in a family with complete androgen insensitivity syndrome.</title>
        <authorList>
            <person name="Sweet C.R."/>
            <person name="Behzadian M.A."/>
            <person name="McDonough P.G."/>
        </authorList>
    </citation>
    <scope>VARIANT AIS THR-766</scope>
</reference>
<reference key="94">
    <citation type="journal article" date="1992" name="Hum. Genet.">
        <title>Point mutation in the steroid-binding domain of the androgen receptor gene in a family with complete androgen insensitivity syndrome (CAIS).</title>
        <authorList>
            <person name="Jakubiczka S."/>
            <person name="Werder E.A."/>
            <person name="Wieacker P."/>
        </authorList>
    </citation>
    <scope>VARIANT AIS VAL-750</scope>
</reference>
<reference key="95">
    <citation type="journal article" date="1992" name="Hum. Mol. Genet.">
        <title>Androgen receptor gene mutations identified by SSCP in fourteen subjects with androgen insensitivity syndrome.</title>
        <authorList>
            <person name="Batch J.A."/>
            <person name="Williams D.M."/>
            <person name="Davies H.R."/>
            <person name="Brown B.D."/>
            <person name="Evans B.A.J."/>
            <person name="Hughes I.A."/>
            <person name="Patterson M.N."/>
        </authorList>
    </citation>
    <scope>VARIANTS AIS</scope>
    <scope>VARIANTS PAIS</scope>
</reference>
<reference key="96">
    <citation type="journal article" date="1992" name="J. Clin. Endocrinol. Metab.">
        <title>A single amino acid substitution (Met-786--&gt;Val) in the steroid-binding domain of human androgen receptor leads to complete androgen insensitivity syndrome.</title>
        <authorList>
            <person name="Nakao R."/>
            <person name="Haji M."/>
            <person name="Yanase T."/>
            <person name="Ogo A."/>
            <person name="Takayanagi R."/>
            <person name="Katsube T."/>
            <person name="Fukumaki Y."/>
            <person name="Nawata H."/>
        </authorList>
    </citation>
    <scope>VARIANT AIS VAL-788</scope>
</reference>
<reference key="97">
    <citation type="journal article" date="1992" name="J. Clin. Endocrinol. Metab.">
        <title>Immunoreactive androgen receptor expression in subjects with androgen resistance.</title>
        <authorList>
            <person name="Wilson C.M."/>
            <person name="Griffin J.E."/>
            <person name="Wilson J.D."/>
            <person name="Marcelli M."/>
            <person name="Zoppi S."/>
            <person name="McPhaul M.J."/>
        </authorList>
    </citation>
    <scope>VARIANTS AIS ARG-742 AND CYS-835</scope>
</reference>
<reference key="98">
    <citation type="journal article" date="1992" name="J. Clin. Invest.">
        <title>Mutations in the ligand-binding domain of the androgen receptor gene cluster in two regions of the gene.</title>
        <authorList>
            <person name="McPhaul M.J."/>
            <person name="Marcelli M."/>
            <person name="Zoppi S."/>
            <person name="Wilson C.M."/>
            <person name="Griffin J.E."/>
            <person name="Wilson J.D."/>
        </authorList>
    </citation>
    <scope>VARIANTS AIS</scope>
    <scope>VARIANTS PAIS</scope>
    <scope>VARIANTS AIS SER-767 AND HIS-905</scope>
    <scope>VARIANTS PAIS LYS-855 AND MET-904</scope>
</reference>
<reference key="99">
    <citation type="journal article" date="1992" name="J. Steroid Biochem. Mol. Biol.">
        <title>The androgen receptor in LNCaP cells contains a mutation in the ligand binding domain which affects steroid binding characteristics and response to antiandrogens.</title>
        <authorList>
            <person name="Veldscholte J."/>
            <person name="Berrevoets C.A."/>
            <person name="Ris-Stalpers C."/>
            <person name="Kuiper G.G.J.M."/>
            <person name="Jenster G."/>
            <person name="Trapman J."/>
            <person name="Brinkmann A.O."/>
            <person name="Mulder E."/>
        </authorList>
    </citation>
    <scope>VARIANT PROSTATE CANCER ALA-878</scope>
</reference>
<reference key="100">
    <citation type="journal article" date="1992" name="Mol. Endocrinol.">
        <title>Amino acid substitutions in the DNA-binding domain of the human androgen receptor are a frequent cause of receptor-binding positive androgen resistance.</title>
        <authorList>
            <person name="Zoppi S."/>
            <person name="Marcelli M."/>
            <person name="Deslypere J.-P."/>
            <person name="Griffin J.E."/>
            <person name="Wilson J.D."/>
            <person name="McPhaul M.J."/>
        </authorList>
    </citation>
    <scope>VARIANTS AIS TYR-560 AND ARG-577</scope>
    <scope>VARIANTS PAIS GLY-598 AND PRO-618</scope>
</reference>
<reference key="101">
    <citation type="journal article" date="1992" name="Mol. Endocrinol.">
        <title>Single base mutations in the human androgen receptor gene causing complete androgen insensitivity: rapid detection by a modified denaturing gradient gel electrophoresis technique.</title>
        <authorList>
            <person name="De Bellis A."/>
            <person name="Quigley C.A."/>
            <person name="Cariello N.F."/>
            <person name="el-Awady M.K."/>
            <person name="Sar M."/>
            <person name="Lane M.V."/>
            <person name="Wilson E.M."/>
            <person name="French F.S."/>
        </authorList>
    </citation>
    <scope>VARIANTS AIS SER-706; VAL-750; PHE-760; HIS-775; CYS-856 AND GLY-865</scope>
</reference>
<reference key="102">
    <citation type="journal article" date="1992" name="Nat. Genet.">
        <title>A germline mutation in the androgen receptor gene in two brothers with breast cancer and Reifenstein syndrome.</title>
        <authorList>
            <person name="Wooster R."/>
            <person name="Mangion J."/>
            <person name="Eeles R."/>
            <person name="Smith S."/>
            <person name="Dowsett M."/>
            <person name="Averill D."/>
            <person name="Barrett-Lee P."/>
            <person name="Easton D.F."/>
            <person name="Ponder B.A."/>
            <person name="Stratton M.R."/>
        </authorList>
    </citation>
    <scope>VARIANT PAIS/BREAST CANCER GLN-608</scope>
</reference>
<reference key="103">
    <citation type="journal article" date="1992" name="Proc. Natl. Acad. Sci. U.S.A.">
        <title>Androgen receptor gene mutations in human prostate cancer.</title>
        <authorList>
            <person name="Newmark J.R."/>
            <person name="Hardy D.O."/>
            <person name="Tonb D.C."/>
            <person name="Carter B.S."/>
            <person name="Epstein J.I."/>
            <person name="Isaacs W.B."/>
            <person name="Brown T.R."/>
            <person name="Barrack E.R."/>
        </authorList>
    </citation>
    <scope>VARIANT MET-731</scope>
</reference>
<reference key="104">
    <citation type="journal article" date="1993" name="Am. J. Hum. Genet.">
        <title>Sequence variation in the androgen receptor gene is not a common determinant of male sexual orientation.</title>
        <authorList>
            <person name="Macke J.P."/>
            <person name="Hu N."/>
            <person name="Hu S."/>
            <person name="Bailey M."/>
            <person name="King V.L."/>
            <person name="Brown T."/>
            <person name="Hamer D."/>
            <person name="Nathans J."/>
        </authorList>
    </citation>
    <scope>VARIANTS ARG-207 AND ASP-794</scope>
</reference>
<reference key="105">
    <citation type="journal article" date="1993" name="Fertil. Steril.">
        <title>A new mutation within the deoxyribonucleic acid-binding domain of the androgen receptor gene in a family with complete androgen insensitivity syndrome.</title>
        <authorList>
            <person name="Lumbroso S."/>
            <person name="Lobaccaro J.-M."/>
            <person name="Belon C."/>
            <person name="Martin D."/>
            <person name="Chaussain J.-L."/>
            <person name="Sultan C."/>
        </authorList>
    </citation>
    <scope>VARIANT AIS PHE-582</scope>
</reference>
<reference key="106">
    <citation type="journal article" date="1993" name="Hum. Mol. Genet.">
        <title>An exonic point mutation creates a MaeIII site in the androgen receptor gene of a family with complete androgen insensitivity syndrome.</title>
        <authorList>
            <person name="Lobaccaro J.-M."/>
            <person name="Lumbroso S."/>
            <person name="Ktari R."/>
            <person name="Dumas R."/>
            <person name="Sultan C."/>
        </authorList>
    </citation>
    <scope>VARIANT AIS VAL-755</scope>
</reference>
<reference key="107">
    <citation type="journal article" date="1993" name="Hum. Mol. Genet.">
        <title>Androgen receptor gene mutation in male breast cancer.</title>
        <authorList>
            <person name="Lobaccaro J.-M."/>
            <person name="Lumbroso S."/>
            <person name="Belon C."/>
            <person name="Galtier-Dereure F."/>
            <person name="Bringer J."/>
            <person name="Lesimple T."/>
            <person name="Namer M."/>
            <person name="Cutuli B.F."/>
            <person name="Pujol H."/>
            <person name="Sultan C."/>
        </authorList>
    </citation>
    <scope>VARIANT PAIS/BREAST CANCER LYS-609</scope>
</reference>
<reference key="108">
    <citation type="journal article" date="1993" name="Hum. Mol. Genet.">
        <title>A single-base substitution in exon 6 of the androgen receptor gene causing complete androgen insensitivity: the mutated receptor fails to transactivate but binds to DNA in vitro.</title>
        <authorList>
            <person name="Adeyemo O."/>
            <person name="Kallio P.J."/>
            <person name="Palvimo J.J."/>
            <person name="Kontula K."/>
            <person name="Jaenne O.A."/>
        </authorList>
    </citation>
    <scope>VARIANT AIS ARG-808</scope>
</reference>
<reference key="109">
    <citation type="journal article" date="1993" name="J. Clin. Endocrinol. Metab.">
        <title>A single amino acid substitution (Gly743 --&gt; Val) in the steroid-binding domain of the human androgen receptor leads to Reifenstein syndrome.</title>
        <authorList>
            <person name="Nakao R."/>
            <person name="Yanase T."/>
            <person name="Sakai Y."/>
            <person name="Haji M."/>
            <person name="Nawata H."/>
        </authorList>
    </citation>
    <scope>VARIANT PAIS VAL-744</scope>
</reference>
<reference key="110">
    <citation type="journal article" date="1993" name="J. Clin. Endocrinol. Metab.">
        <title>Single strand conformation polymorphism analysis of androgen receptor gene mutations in patients with androgen insensitivity syndromes: application for diagnosis, genetic counseling, and therapy.</title>
        <authorList>
            <person name="Hiort O."/>
            <person name="Huang Q."/>
            <person name="Sinnecker G.H."/>
            <person name="Sadeghi-Nejad A."/>
            <person name="Kruse K."/>
            <person name="Wolfe H.J."/>
            <person name="Yandell D.W."/>
        </authorList>
    </citation>
    <scope>VARIANTS AIS LYS-682 AND THR-843</scope>
    <scope>VARIANTS PAIS HIS-841 AND LEU-867</scope>
</reference>
<reference key="111">
    <citation type="journal article" date="1993" name="J. Med. Genet.">
        <title>Mutations of the androgen receptor gene identified in perineal hypospadias.</title>
        <authorList>
            <person name="Batch J.A."/>
            <person name="Evans B.A.J."/>
            <person name="Hughes I.A."/>
            <person name="Patterson M.N."/>
        </authorList>
    </citation>
    <scope>INVOLVEMENT IN PAIS</scope>
    <scope>INVOLVEMENT IN HYSP1</scope>
    <scope>VARIANTS PAIS HIS-856 AND MET-870</scope>
</reference>
<reference key="112">
    <citation type="journal article" date="1993" name="J. Steroid Biochem. Mol. Biol.">
        <title>Complete androgen insensitivity syndrome associated with a de novo mutation of the androgen receptor gene detected by single strand conformation polymorphism.</title>
        <authorList>
            <person name="Lobaccaro J.-M."/>
            <person name="Lumbroso S."/>
            <person name="Berta P."/>
            <person name="Chaussain J.-L."/>
            <person name="Sultan C."/>
        </authorList>
    </citation>
    <scope>VARIANT AIS VAL-744</scope>
</reference>
<reference key="113">
    <citation type="journal article" date="1993" name="J. Steroid Biochem. Mol. Biol.">
        <title>Androgen receptor gene mutations in human prostate cancer.</title>
        <authorList>
            <person name="Suzuki H."/>
            <person name="Sato N."/>
            <person name="Watabe Y."/>
            <person name="Masai M."/>
            <person name="Seino S."/>
            <person name="Shimazaki J."/>
        </authorList>
    </citation>
    <scope>VARIANTS HIS-702 AND ALA-878</scope>
</reference>
<reference key="114">
    <citation type="journal article" date="1993" name="Mol. Endocrinol.">
        <title>Substitution of valine-865 by methionine or leucine in the human androgen receptor causes complete or partial androgen insensitivity, respectively with distinct androgen receptor phenotypes.</title>
        <authorList>
            <person name="Kazemi-Esfarjani P."/>
            <person name="Beitel L.K."/>
            <person name="Trifiro M.A."/>
            <person name="Kaufman M."/>
            <person name="Rennie P."/>
            <person name="Sheppard P."/>
            <person name="Matusik R."/>
            <person name="Pinsky L."/>
        </authorList>
    </citation>
    <scope>VARIANT AIS MET-867</scope>
    <scope>VARIANT PAIS LEU-867</scope>
</reference>
<reference key="115">
    <citation type="journal article" date="1993" name="Mol. Endocrinol.">
        <title>Mutant androgen receptor detected in an advanced-stage prostatic carcinoma is activated by adrenal androgens and progesterone.</title>
        <authorList>
            <person name="Culig Z."/>
            <person name="Hobisch A."/>
            <person name="Cronauer M.V."/>
            <person name="Cato A.C.B."/>
            <person name="Hittmair A."/>
            <person name="Radmayr C."/>
            <person name="Eberle J."/>
            <person name="Bartsch G."/>
            <person name="Klocker H."/>
        </authorList>
    </citation>
    <scope>VARIANT PROSTATE CANCER MET-716</scope>
</reference>
<reference key="116">
    <citation type="journal article" date="1993" name="Pediatr. Res. Suppl.">
        <title>Androgen receptor (AR) gene mutations in 6 families with androgen insensitivity syndrome (Abstract #114).</title>
        <authorList>
            <person name="Lobaccaro J.-M."/>
            <person name="Lumbroso S."/>
            <person name="Belon C."/>
            <person name="Chaussain J.L."/>
            <person name="Toublanc J.E."/>
            <person name="Leheup B."/>
            <person name="Sultan C."/>
        </authorList>
    </citation>
    <scope>VARIANTS AIS PHE-582; VAL-744; VAL-755; GLU-768 AND CYS-856</scope>
</reference>
<reference key="117">
    <citation type="journal article" date="1993" name="Verh. Dtsch. Ges. Pathol.">
        <title>Androgen receptor gene mutations and p53 gene analysis in advanced prostate cancer.</title>
        <authorList>
            <person name="Castagnaro M."/>
            <person name="Yandell D.W."/>
            <person name="Dockhorn-Dworniczak B."/>
            <person name="Wolfe H.J."/>
            <person name="Poremba C."/>
        </authorList>
    </citation>
    <scope>VARIANTS PROSTATE CANCER LEU-342 AND GLU-799</scope>
</reference>
<reference key="118">
    <citation type="journal article" date="1994" name="Biochem. Biophys. Res. Commun.">
        <title>Microsatellite mutation (CAG24--&gt;18) in the androgen receptor gene in human prostate cancer.</title>
        <authorList>
            <person name="Schoenberg M.P."/>
            <person name="Hakimi J.M."/>
            <person name="Wang S."/>
            <person name="Bova G.S."/>
            <person name="Epstein J.I."/>
            <person name="Fischbeck K.H."/>
            <person name="Isaacs W.B."/>
            <person name="Walsh P.C."/>
            <person name="Barrack E.R."/>
        </authorList>
    </citation>
    <scope>POLY-GLN REGION CONTRACTION</scope>
    <scope>INVOLVEMENT IN PROSTATE CANCER</scope>
</reference>
<reference key="119">
    <citation type="journal article" date="1994" name="Cancer Res.">
        <title>Frequent detection of codon 877 mutation in the androgen receptor gene in advanced prostate cancers.</title>
        <authorList>
            <person name="Gaddipati J.P."/>
            <person name="McLeod D.G."/>
            <person name="Heidenberg H.B."/>
            <person name="Sesterhenn I.A."/>
            <person name="Finger M.J."/>
            <person name="Moul J.W."/>
            <person name="Srivastava S."/>
        </authorList>
    </citation>
    <scope>VARIANT PROSTATE CANCER ALA-878</scope>
</reference>
<reference key="120">
    <citation type="journal article" date="1994" name="Clin. Endocrinol. (Oxf.)">
        <title>Molecular prenatal diagnosis of partial androgen insensitivity syndrome based on the Hind III polymorphism of the androgen receptor gene.</title>
        <authorList>
            <person name="Lobaccaro J.-M."/>
            <person name="Belon C."/>
            <person name="Lumbroso S."/>
            <person name="Olewniczack G."/>
            <person name="Carre-Pigeon F."/>
            <person name="Job J.C."/>
            <person name="Chaussain J.L."/>
            <person name="Toublanc J.E."/>
            <person name="Sultan C."/>
        </authorList>
    </citation>
    <scope>VARIANT PAIS TRP-569</scope>
</reference>
<reference key="121">
    <citation type="journal article" date="1994" name="Eur. J. Endocrinol.">
        <title>Molecular prenatal exclusion of familial partial androgen insensitivity (Reifenstein syndrome).</title>
        <authorList>
            <person name="Lumbroso S."/>
            <person name="Lobaccaro J.-M."/>
            <person name="Belon C."/>
            <person name="Amram S."/>
            <person name="Bachelard B."/>
            <person name="Garandeau P."/>
            <person name="Sultan C."/>
        </authorList>
    </citation>
    <scope>VARIANT PAIS HIS-841</scope>
</reference>
<reference key="122">
    <citation type="journal article" date="1994" name="Eur. J. Endocrinol.">
        <title>Single amino acid substitution (840Arg--&gt;His) in the hormone-binding domain of the androgen receptor leads to incomplete androgen insensitivity syndrome associated with a thermolabile androgen receptor.</title>
        <authorList>
            <person name="Imasaki K."/>
            <person name="Hasegawa T."/>
            <person name="Okabe T."/>
            <person name="Sakai Y."/>
            <person name="Haji M."/>
            <person name="Takayanagi R."/>
            <person name="Nawata H."/>
        </authorList>
    </citation>
    <scope>VARIANT PAIS HIS-841</scope>
</reference>
<reference key="123">
    <citation type="journal article" date="1994" name="Eur. J. Pediatr.">
        <title>Molecular characterization of the androgen receptor gene in boys with hypospadias.</title>
        <authorList>
            <person name="Hiort O."/>
            <person name="Klauber G."/>
            <person name="Cendron M."/>
            <person name="Sinnecker G.H."/>
            <person name="Keim L."/>
            <person name="Schwinger E."/>
            <person name="Wolfe H.J."/>
            <person name="Yandell D.W."/>
        </authorList>
    </citation>
    <scope>VARIANT PAIS VAL-871</scope>
</reference>
<reference key="124">
    <citation type="journal article" date="1994" name="Horm. Res.">
        <title>Partial androgen insensitivity (PAIS) in a large eskimo kindred caused by a delD690 mutation in the androgen receptor (AR) gene (Abstract #244).</title>
        <authorList>
            <person name="Schwartz M."/>
            <person name="Skovby F."/>
            <person name="Mueller J."/>
            <person name="Nielsen O."/>
            <person name="Skakkebaek N.E."/>
        </authorList>
    </citation>
    <scope>VARIANT PAIS ASP-691 DEL</scope>
</reference>
<reference key="125">
    <citation type="journal article" date="1994" name="Hum. Mol. Genet.">
        <title>Complete androgen insensitivity due to mutations in the probable alpha-helical segments of the DNA-binding domain in the human androgen receptor.</title>
        <authorList>
            <person name="Beitel L.K."/>
            <person name="Prior L."/>
            <person name="Vasiliou D.M."/>
            <person name="Gottlieb B."/>
            <person name="Kaufman M."/>
            <person name="Lumbroso R."/>
            <person name="Alvarado C."/>
            <person name="McGillivray B."/>
            <person name="Trifiro M.A."/>
            <person name="Pinsky L."/>
        </authorList>
    </citation>
    <scope>VARIANTS AIS PHE-583 DEL; ARG-616 DEL AND HIS-616</scope>
</reference>
<reference key="126">
    <citation type="journal article" date="1994" name="Hum. Mol. Genet.">
        <title>Detection of point mutations in the androgen receptor gene using non-isotopic single strand conformation polymorphism analysis.</title>
        <authorList>
            <person name="Hiort O."/>
            <person name="Wodtke A."/>
            <person name="Struve D."/>
            <person name="Zoellner A."/>
            <person name="Sinnecker G.H."/>
        </authorList>
    </citation>
    <scope>VARIANTS PAIS SER-583; TYR-605; ALA-709; LEU-755 AND HIS-772</scope>
    <scope>VARIANT AIS TRP-780</scope>
</reference>
<reference key="127">
    <citation type="journal article" date="1994" name="Hum. Mol. Genet.">
        <title>Two mutations causing complete androgen insensitivity: a frame-shift in the steroid binding domain and a Cys--&gt;Phe substitution in the second zinc finger of the androgen receptor.</title>
        <authorList>
            <person name="Baldazzi L."/>
            <person name="Baroncini C."/>
            <person name="Pirazzoli P."/>
            <person name="Balsamo A."/>
            <person name="Capelli M."/>
            <person name="Marchetti G."/>
            <person name="Bernardi F."/>
            <person name="Cacciari E."/>
        </authorList>
    </citation>
    <scope>VARIANT AIS PHE-602</scope>
</reference>
<reference key="128">
    <citation type="journal article" date="1994" name="J. Clin. Endocrinol. Metab.">
        <title>Characterization of mutant androgen receptors causing partial androgen insensitivity syndrome.</title>
        <authorList>
            <person name="De Bellis A."/>
            <person name="Quigley C.A."/>
            <person name="Marschke K.B."/>
            <person name="el-Awady M.K."/>
            <person name="Lane M.V."/>
            <person name="Smith E.P."/>
            <person name="Sar M."/>
            <person name="Wilson E.M."/>
            <person name="French F.S."/>
        </authorList>
    </citation>
    <scope>VARIANTS PAIS ARG-617; HIS-841 AND MET-890</scope>
</reference>
<reference key="129">
    <citation type="journal article" date="1994" name="J. Clin. Endocrinol. Metab.">
        <title>An androgen receptor mutation causing androgen resistance in undervirilized male syndrome.</title>
        <authorList>
            <person name="Tsukada T."/>
            <person name="Inoue M."/>
            <person name="Tachibana S."/>
            <person name="Nakai Y."/>
            <person name="Takebe H."/>
        </authorList>
    </citation>
    <scope>VARIANT AIS PHE-791</scope>
</reference>
<reference key="130">
    <citation type="journal article" date="1994" name="J. Clin. Invest.">
        <title>Substitution of arginine-839 by cysteine or histidine in the androgen receptor causes different receptor phenotypes in cultured cells and coordinate degrees of clinical androgen resistance.</title>
        <authorList>
            <person name="Beitel L.K."/>
            <person name="Kazemi-Esfarjani P."/>
            <person name="Kaufman M."/>
            <person name="Lumbroso R."/>
            <person name="DiGeorge A.M."/>
            <person name="Killinger D.W."/>
            <person name="Trifiro M.A."/>
            <person name="Pinsky L."/>
        </authorList>
    </citation>
    <scope>VARIANTS AIS CYS-841 AND HIS-841</scope>
</reference>
<reference key="131">
    <citation type="journal article" date="1994" name="J. Clin. Invest.">
        <title>Amino acid substitutions in the hormone-binding domain of the human androgen receptor alter the stability of the hormone receptor complex.</title>
        <authorList>
            <person name="Marcelli M."/>
            <person name="Zoppi S."/>
            <person name="Wilson C.M."/>
            <person name="Griffin J.E."/>
            <person name="McPhaul M.J."/>
        </authorList>
    </citation>
    <scope>VARIANTS AIS</scope>
    <scope>VARIANTS PAIS</scope>
</reference>
<reference key="132">
    <citation type="journal article" date="1994" name="Lancet">
        <title>Pregnancy after hormonal correction of severe spermatogenic defect due to mutation in androgen receptor gene.</title>
        <authorList>
            <person name="Yong E.L."/>
            <person name="Ng S.C."/>
            <person name="Roy A.C."/>
            <person name="Yun G."/>
            <person name="Ratnam S.S."/>
        </authorList>
    </citation>
    <scope>VARIANT AIS LYS-728</scope>
</reference>
<reference key="133">
    <citation type="journal article" date="1994" name="Pediatr. Res.">
        <title>A practical approach to the detection of androgen receptor gene mutations and pedigree analysis in families with X-linked androgen insensitivity.</title>
        <authorList>
            <person name="Ris-Stalpers C."/>
            <person name="Hoogenboezem T."/>
            <person name="Sleddens H.F.B.M."/>
            <person name="Verleun-Mooijman M.C.T."/>
            <person name="Degenhart H.J."/>
            <person name="Drop S.L.S."/>
            <person name="Halley D.J.J."/>
            <person name="Oosterwijk J.C."/>
            <person name="Hodgins M.B."/>
            <person name="Trapman J."/>
            <person name="Brinkmann A.O."/>
        </authorList>
    </citation>
    <scope>VARIANTS AIS HIS-616 AND LEU-765</scope>
    <scope>VARIANTS PAIS VAL-743 AND THR-746</scope>
</reference>
<reference key="134">
    <citation type="journal article" date="1995" name="Ann. Clin. Biochem.">
        <title>A frame-shift mutation of the androgen receptor gene in a patient with receptor-negative complete testicular feminization: comparison with a single base substitution in a receptor-reduced incomplete form.</title>
        <authorList>
            <person name="Imai A."/>
            <person name="Ohno T."/>
            <person name="Iida K."/>
            <person name="Ohsuye K."/>
            <person name="Okano Y."/>
            <person name="Tamaya T."/>
        </authorList>
    </citation>
    <scope>VARIANT AIS HIS-841</scope>
</reference>
<reference key="135">
    <citation type="journal article" date="1995" name="Cancer Res.">
        <title>Prevalence of androgen receptor gene mutations in latent prostatic carcinomas from Japanese men.</title>
        <authorList>
            <person name="Takahashi H."/>
            <person name="Furusato M."/>
            <person name="Allsbrook W.C. Jr."/>
            <person name="Nishii H."/>
            <person name="Wakui S."/>
            <person name="Barrett J.C."/>
            <person name="Boyd J."/>
        </authorList>
    </citation>
    <scope>VARIANTS PROSTATE CANCER</scope>
</reference>
<reference key="136">
    <citation type="journal article" date="1995" name="Clin. Endocrinol. (Oxf.)">
        <title>Genetic counselling in complete androgen insensitivity syndrome: trinucleotide repeat polymorphisms, single-strand conformation polymorphism and direct detection of two novel mutations in the androgen receptor gene.</title>
        <authorList>
            <person name="Davies H.R."/>
            <person name="Hughes I.A."/>
            <person name="Patterson M.N."/>
        </authorList>
    </citation>
    <scope>VARIANT AIS VAL-882</scope>
</reference>
<reference key="137">
    <citation type="journal article" date="1995" name="Endocr. Rev.">
        <title>Androgen receptor defects: historical, clinical, and molecular perspectives.</title>
        <authorList>
            <person name="Quigley C.A."/>
            <person name="De Bellis A."/>
            <person name="Marschke K.B."/>
            <person name="el-Awady M.K."/>
            <person name="Wilson E.M."/>
            <person name="French F.S."/>
        </authorList>
    </citation>
    <scope>VARIANTS AIS SER-706 AND HIS-764</scope>
    <scope>VARIANTS PAIS LEU-726; THR-738; HIS-775 AND GLU-799</scope>
</reference>
<reference key="138">
    <citation type="journal article" date="1995" name="Endocr. Rev.">
        <authorList>
            <person name="Quigley C.A."/>
            <person name="De Bellis A."/>
            <person name="Marschke K.B."/>
            <person name="el-Awady M.K."/>
            <person name="Wilson E.M."/>
            <person name="French F.S."/>
        </authorList>
    </citation>
    <scope>ERRATUM OF PUBMED:7671849</scope>
</reference>
<reference key="139">
    <citation type="journal article" date="1995" name="Hum. Mol. Genet.">
        <title>Characterization of alternative amino acid substitutions at arginine 830 of the androgen receptor that cause complete androgen insensitivity in three families.</title>
        <authorList>
            <person name="Shkolny D.L."/>
            <person name="Brown T.R."/>
            <person name="Punnett H.H."/>
            <person name="Kaufman M."/>
            <person name="Trifiro M.A."/>
            <person name="Pinsky L."/>
        </authorList>
    </citation>
    <scope>VARIANTS AIS LEU-832 AND GLN-832</scope>
</reference>
<reference key="140">
    <citation type="journal article" date="1995" name="Hum. Mutat.">
        <title>Leu-676-Pro mutation of the androgen receptor causes complete androgen insensitivity syndrome in a large Hutterite kindred.</title>
        <authorList>
            <person name="Belsham D.D."/>
            <person name="Pereira F."/>
            <person name="Greenberg C.R."/>
            <person name="Liao S."/>
            <person name="Wrogemann K."/>
        </authorList>
    </citation>
    <scope>VARIANT AIS PRO-678</scope>
</reference>
<reference key="141">
    <citation type="journal article" date="1995" name="Hum. Mutat.">
        <title>Human androgen insensitivity due to point mutations encoding amino acid substitutions in the androgen receptor steroid-binding domain.</title>
        <authorList>
            <person name="Murono K."/>
            <person name="Mendonca B.B."/>
            <person name="Arnhold I.J.P."/>
            <person name="Rigon A.C.M.M."/>
            <person name="Migeon C.J."/>
            <person name="Brown T.R."/>
        </authorList>
    </citation>
    <scope>VARIANT PAIS CYS-764</scope>
    <scope>VARIANTS AIS TRP-780; VAL-808 AND CYS-856</scope>
</reference>
<reference key="142">
    <citation type="journal article" date="1995" name="Int. J. Cancer">
        <title>Mutant androgen receptors in prostatic tumors distinguish between amino-acid-sequence requirements for transactivation and ligand binding.</title>
        <authorList>
            <person name="Peterziel H."/>
            <person name="Culig Z."/>
            <person name="Stober J."/>
            <person name="Hobisch A."/>
            <person name="Radmayr C."/>
            <person name="Bartsch G."/>
            <person name="Klocker H."/>
            <person name="Cato A.C.B."/>
        </authorList>
    </citation>
    <scope>VARIANT PROSTATE CANCER MET-731</scope>
</reference>
<reference key="143">
    <citation type="journal article" date="1995" name="J. Clin. Endocrinol. Metab.">
        <title>Mutations of the androgen receptor coding sequence are infrequent in patients with isolated hypospadias.</title>
        <authorList>
            <person name="Allera A."/>
            <person name="Herbst M.A."/>
            <person name="Griffin J.E."/>
            <person name="Wilson J.D."/>
            <person name="Schweikert H.-U."/>
            <person name="McPhaul M.J."/>
        </authorList>
    </citation>
    <scope>VARIANT VAL-569</scope>
</reference>
<reference key="144">
    <citation type="journal article" date="1995" name="J. Clin. Endocrinol. Metab.">
        <title>Mutated human androgen receptor gene detected in a prostatic cancer patient is also activated by estradiol.</title>
        <authorList>
            <person name="Elo J.P."/>
            <person name="Kvist L."/>
            <person name="Leinonen K."/>
            <person name="Isomaa V."/>
            <person name="Henttu P."/>
            <person name="Lukkarinen O."/>
            <person name="Vihko P."/>
        </authorList>
    </citation>
    <scope>INVOLVEMENT IN HPCX3</scope>
    <scope>VARIANT HPCX3 LEU-727</scope>
</reference>
<reference key="145">
    <citation type="journal article" date="1995" name="Mol. Cell. Endocrinol.">
        <title>A single amino acid exchange abolishes dimerization of the androgen receptor and causes Reifenstein syndrome.</title>
        <authorList>
            <person name="Gast A."/>
            <person name="Neuschmid-Kaspar F."/>
            <person name="Klocker H."/>
            <person name="Cato A.C.B."/>
        </authorList>
    </citation>
    <scope>VARIANT PAIS THR-597</scope>
</reference>
<reference key="146">
    <citation type="journal article" date="1995" name="N. Engl. J. Med.">
        <title>Mutation of the androgen-receptor gene in metastatic androgen-independent prostate cancer.</title>
        <authorList>
            <person name="Taplin M.-E."/>
            <person name="Bubley G.J."/>
            <person name="Shuster T.D."/>
            <person name="Frantz M.E."/>
            <person name="Spooner A.E."/>
            <person name="Ogata G.K."/>
            <person name="Keer H.N."/>
            <person name="Balk S.P."/>
        </authorList>
    </citation>
    <scope>VARIANTS PROSTATE CANCER</scope>
</reference>
<reference key="147">
    <citation type="journal article" date="1996" name="Am. J. Med. Genet.">
        <title>The clinical and molecular spectrum of androgen insensitivity syndromes.</title>
        <authorList>
            <person name="Hiort O."/>
            <person name="Sinnecker G.H."/>
            <person name="Holterhus P.M."/>
            <person name="Nitsche E.M."/>
            <person name="Kruse K."/>
        </authorList>
    </citation>
    <scope>VARIANTS AIS AND PAIS</scope>
    <scope>VARIANTS PAIS ARG-687; VAL-688; PHE-713; MET-747; SER-757 AND SER-842</scope>
    <scope>VARIANTS AIS GLU-689; MET-747 AND THR-899</scope>
</reference>
<reference key="148">
    <citation type="journal article" date="1996" name="Clin. Cancer Res.">
        <title>Mutations in the androgen receptor gene are associated with progression of human prostate cancer to androgen independence.</title>
        <authorList>
            <person name="Tilley W.D."/>
            <person name="Buchanan G."/>
            <person name="Hickey T.E."/>
            <person name="Bentel J.M."/>
        </authorList>
    </citation>
    <scope>VARIANTS PROSTATE CANCER</scope>
</reference>
<reference key="149">
    <citation type="journal article" date="1996" name="Clin. Endocrinol. (Oxf.)">
        <title>Clinical and biochemical investigations and molecular analysis of subjects with mutations in the androgen receptor gene.</title>
        <authorList>
            <person name="Weidemann W."/>
            <person name="Linck B."/>
            <person name="Haupt H."/>
            <person name="Mentrup B."/>
            <person name="Romalo G."/>
            <person name="Stockklauser K."/>
            <person name="Brinkmann A.O."/>
            <person name="Schweikert H.-U."/>
            <person name="Spindler K.D."/>
        </authorList>
    </citation>
    <scope>VARIANTS PAIS GLN-608; THR-611; LEU-755; HIS-841; THR-843 AND HIS-856</scope>
    <scope>VARIANT AIS MET-867</scope>
</reference>
<reference key="150">
    <citation type="journal article" date="1996" name="Clin. Genet.">
        <title>Rapid detection of a mutation hot-spot in the human androgen receptor.</title>
        <authorList>
            <person name="Malmgren H."/>
            <person name="Gustavsson J."/>
            <person name="Tuvemo T."/>
            <person name="Dahl N."/>
        </authorList>
    </citation>
    <scope>VARIANT AIS CYS-856</scope>
</reference>
<reference key="151">
    <citation type="journal article" date="1996" name="Hum. Mol. Genet.">
        <title>Functional analysis of six androgen receptor mutations identified in patients with partial androgen insensitivity syndrome.</title>
        <authorList>
            <person name="Bevan C.L."/>
            <person name="Brown B.B."/>
            <person name="Davies H.R."/>
            <person name="Evans B.A.J."/>
            <person name="Hughes I.A."/>
            <person name="Patterson M.N."/>
        </authorList>
    </citation>
    <scope>VARIANTS PAIS ILE-743; ILE-781; GLU-799; CYS-841; HIS-856 AND MET-870</scope>
</reference>
<reference key="152">
    <citation type="journal article" date="1996" name="J. Clin. Endocrinol. Metab.">
        <title>Partial androgen insensitivity caused by an androgen receptor mutation at amino acid 907 (Gly--&gt;Arg) that results in decreased ligand binding affinity and reduced androgen receptor messenger ribonucleic acid levels.</title>
        <authorList>
            <person name="Choong C.S."/>
            <person name="Sturm M.J."/>
            <person name="Strophair J.A."/>
            <person name="McCulloch R.K."/>
            <person name="Tilley W.D."/>
            <person name="Leedman P.J."/>
            <person name="Hurley D.M."/>
        </authorList>
    </citation>
    <scope>VARIANT PAIS ARG-910</scope>
</reference>
<reference key="153">
    <citation type="journal article" date="1996" name="J. Clin. Endocrinol. Metab.">
        <title>A novel substitution (Leu707Arg) in exon 4 of the androgen receptor gene causes complete androgen resistance.</title>
        <authorList>
            <person name="Lumbroso S."/>
            <person name="Lobaccaro J.-M."/>
            <person name="Georget V."/>
            <person name="Leger J."/>
            <person name="Poujol N."/>
            <person name="Terouanne B."/>
            <person name="Evain-Brion D."/>
            <person name="Czernichow P."/>
            <person name="Sultan C."/>
        </authorList>
    </citation>
    <scope>VARIANT AIS ARG-708</scope>
</reference>
<reference key="154">
    <citation type="journal article" date="1996" name="J. Clin. Endocrinol. Metab.">
        <title>Different phenotypes in a family with androgen insensitivity caused by the same M780I point mutation in the androgen receptor gene.</title>
        <authorList>
            <person name="Rodien P."/>
            <person name="Mebarki F."/>
            <person name="Mowszowicz I."/>
            <person name="Chaussain J.L."/>
            <person name="Young J."/>
            <person name="Morel Y."/>
            <person name="Schaison G."/>
        </authorList>
    </citation>
    <scope>VARIANT AIS ILE-781</scope>
</reference>
<reference key="155">
    <citation type="journal article" date="1996" name="J. Clin. Invest.">
        <title>A novel missense mutation in the amino-terminal domain of the human androgen receptor gene in a family with partial androgen insensitivity syndrome causes reduced efficiency of protein translation.</title>
        <authorList>
            <person name="Choong C.S."/>
            <person name="Quigley C.A."/>
            <person name="French F.S."/>
            <person name="Wilson E.M."/>
        </authorList>
    </citation>
    <scope>VARIANT PAIS LYS-2</scope>
</reference>
<reference key="156">
    <citation type="journal article" date="1996" name="J. Steroid Biochem. Mol. Biol.">
        <title>Molecular basis of androgen insensitivity.</title>
        <authorList>
            <person name="Bruggenwirth H.T."/>
            <person name="Boehmer A.L.M."/>
            <person name="Verleun-Mooijman M.C.T."/>
            <person name="Hoogenboezem T."/>
            <person name="Kleijer W.J."/>
            <person name="Otten B.J."/>
            <person name="Trapman J."/>
            <person name="Brinkmann A.O."/>
        </authorList>
    </citation>
    <scope>VARIANT AIS ASP-574</scope>
</reference>
<reference key="157">
    <citation type="journal article" date="1996" name="J. Urol.">
        <title>Androgen receptor gene mutations are rarely associated with isolated penile hypospadias.</title>
        <authorList>
            <person name="Sutherland R.W."/>
            <person name="Wiener J.S."/>
            <person name="Hicks J.P."/>
            <person name="Marcelli M."/>
            <person name="Gonzales E.T. Jr."/>
            <person name="Roth D.R."/>
            <person name="Lamb D.J."/>
        </authorList>
    </citation>
    <scope>VARIANT AIS SER-549</scope>
</reference>
<reference key="158">
    <citation type="journal article" date="1996" name="Mol. Cell. Endocrinol.">
        <title>Molecular modeling and in vitro investigations of the human androgen receptor DNA-binding domain: application for the study of two mutations.</title>
        <authorList>
            <person name="Lobaccaro J.-M."/>
            <person name="Poujol N."/>
            <person name="Chiche L."/>
            <person name="Lumbroso S."/>
            <person name="Brown T.R."/>
            <person name="Sultan C."/>
        </authorList>
    </citation>
    <scope>VARIANT AIS PRO-617</scope>
</reference>
<reference key="159">
    <citation type="journal article" date="1996" name="Mol. Cell. Endocrinol.">
        <title>Androgen insensitivity syndrome due to new mutations in the DNA-binding domain of the androgen receptor.</title>
        <authorList>
            <person name="Imasaki K."/>
            <person name="Okabe T."/>
            <person name="Murakami H."/>
            <person name="Tanaka Y."/>
            <person name="Haji M."/>
            <person name="Takayanagi R."/>
            <person name="Nawata H."/>
        </authorList>
    </citation>
    <scope>VARIANT AIS PHE-580</scope>
    <scope>VARIANT PAIS TYR-583</scope>
</reference>
<reference key="160">
    <citation type="journal article" date="1996" name="Prostate">
        <title>Low incidence of androgen receptor gene mutations in human prostatic tumors using single strand conformation polymorphism analysis.</title>
        <authorList>
            <person name="Evans B.A.J."/>
            <person name="Harper M.E."/>
            <person name="Daniells C.E."/>
            <person name="Watts C.E."/>
            <person name="Matenhelia S."/>
            <person name="Green J."/>
            <person name="Griffiths K."/>
        </authorList>
    </citation>
    <scope>VARIANT PROSTATE CANCER GLU-799</scope>
</reference>
<reference key="161">
    <citation type="journal article" date="1996" name="Prostate">
        <title>Codon 877 mutation in the androgen receptor gene in advanced prostate cancer: relation to antiandrogen withdrawal syndrome.</title>
        <authorList>
            <person name="Suzuki H."/>
            <person name="Akakura K."/>
            <person name="Komiya A."/>
            <person name="Aida S."/>
            <person name="Akimoto S."/>
            <person name="Shimazaki J."/>
        </authorList>
    </citation>
    <scope>VARIANT PROSTATE CANCER ALA-878</scope>
</reference>
<reference key="162">
    <citation type="journal article" date="1997" name="Am. J. Hum. Genet.">
        <title>Germ-line and somatic mosaicism in the androgen insensitivity syndrome: implications for genetic counseling.</title>
        <authorList>
            <person name="Boehmer A.L.M."/>
            <person name="Brinkmann A.O."/>
            <person name="Niermeijer M.F."/>
            <person name="Bakker L."/>
            <person name="Halley D.J.J."/>
            <person name="Drop S.L.S."/>
        </authorList>
    </citation>
    <scope>VARIANT AIS HIS-856</scope>
</reference>
<reference key="163">
    <citation type="journal article" date="1997" name="Cancer Res.">
        <title>Androgen receptor gene amplification: a possible molecular mechanism for androgen deprivation therapy failure in prostate cancer.</title>
        <authorList>
            <person name="Koivisto P."/>
            <person name="Kononen J."/>
            <person name="Palmberg C."/>
            <person name="Tammela T."/>
            <person name="Hyytinen E."/>
            <person name="Isola J."/>
            <person name="Trapman J."/>
            <person name="Cleutjens K."/>
            <person name="Noordzij A."/>
            <person name="Visakorpi T."/>
            <person name="Kallioniemi O.-P."/>
        </authorList>
    </citation>
    <scope>VARIANT PROSTATE CANCER ALA-684</scope>
</reference>
<reference key="164">
    <citation type="journal article" date="1997" name="Clin. Endocrinol. (Oxf.)">
        <title>Correlation of clinical, endocrine and molecular abnormalities with in vivo responses to high-dose testosterone in patients with partial androgen insensitivity syndrome.</title>
        <authorList>
            <person name="Tincello D.G."/>
            <person name="Saunders P.T."/>
            <person name="Hodgins M.B."/>
            <person name="Simpson N.B."/>
            <person name="Edwards C.R."/>
            <person name="Hargreaves T.B."/>
            <person name="Wu F.C."/>
        </authorList>
    </citation>
    <scope>VARIANTS PAIS LYS-609 AND GLY-773</scope>
</reference>
<reference key="165">
    <citation type="journal article" date="1997" name="Dis. Markers">
        <title>Molecular analysis of androgen resistance syndromes in Egyptian patients.</title>
        <authorList>
            <person name="Essawi M."/>
            <person name="Gad Y.Z."/>
            <person name="el-Rouby O."/>
            <person name="Temtamy S.A."/>
            <person name="Sabour Y.A."/>
            <person name="el-Awady M.K."/>
        </authorList>
    </citation>
    <scope>VARIANT AIS MET-890</scope>
</reference>
<reference key="166">
    <citation type="journal article" date="1997" name="Eur. J. Pediatr.">
        <title>Functional assessment and clinical classification of androgen sensitivity in patients with mutations of the androgen receptor gene.</title>
        <authorList>
            <person name="Sinnecker G.H."/>
            <person name="Hiort O."/>
            <person name="Nitsche E.M."/>
            <person name="Holterhus P.M."/>
            <person name="Kruse K."/>
        </authorList>
    </citation>
    <scope>VARIANT AIS TRP-780</scope>
</reference>
<reference key="167">
    <citation type="journal article" date="1997" name="Hum. Mutat.">
        <title>Mutations of the androgen receptor gene in patients with complete androgen insensitivity.</title>
        <authorList>
            <person name="Jakubiczka S."/>
            <person name="Nedel S."/>
            <person name="Werder E.A."/>
            <person name="Schleiermacher E."/>
            <person name="Theile U."/>
            <person name="Wolff G."/>
            <person name="Wieacker P."/>
        </authorList>
    </citation>
    <scope>VARIANTS AIS VAL-750; CYS-775; ILE-781 AND SER-795</scope>
</reference>
<reference key="168">
    <citation type="journal article" date="1997" name="Jpn. J. Clin. Oncol.">
        <title>Genetic alterations of androgen receptor gene in Japanese human prostate cancer.</title>
        <authorList>
            <person name="Watanabe M."/>
            <person name="Ushijima T."/>
            <person name="Shiraishi T."/>
            <person name="Yatani R."/>
            <person name="Shimazaki J."/>
            <person name="Kotake T."/>
            <person name="Sugimura T."/>
            <person name="Nagao M."/>
        </authorList>
    </citation>
    <scope>VARIANTS HIS-702 AND ARG-911</scope>
</reference>
<reference key="169">
    <citation type="journal article" date="1997" name="Nihon Hinyokika Gakkai Zasshi">
        <title>Androgen receptor gene mutations in prostate cancer.</title>
        <authorList>
            <person name="Wang C."/>
            <person name="Uchida T."/>
        </authorList>
    </citation>
    <scope>VARIANT PROSTATE CANCER GLN-630</scope>
</reference>
<reference key="170">
    <citation type="journal article" date="1997" name="J. Obstet. Gynaecol. Res.">
        <title>DNA analysis of the androgen receptor gene in two cases with complete androgen insensitivity syndrome.</title>
        <authorList>
            <person name="Komori S."/>
            <person name="Sakata K."/>
            <person name="Tanaka H."/>
            <person name="Shima H."/>
            <person name="Koyama K."/>
        </authorList>
    </citation>
    <scope>VARIANTS AIS ARG-196 AND CYS-856</scope>
</reference>
<reference key="171">
    <citation type="journal article" date="1997" name="J. Pediatr.">
        <title>Etiologic classification of severe hypospadias: implications for prognosis and management.</title>
        <authorList>
            <person name="Albers N."/>
            <person name="Ulrichs C."/>
            <person name="Gluer S."/>
            <person name="Hiort O."/>
            <person name="Sinnecker G.H."/>
            <person name="Mildenberger H."/>
            <person name="Brodehl J."/>
        </authorList>
    </citation>
    <scope>VARIANTS PAIS ALA-709 AND GLY-871</scope>
</reference>
<reference key="172">
    <citation type="journal article" date="1997" name="J. Reprod. Med.">
        <title>Complete androgen insensitivity syndrome. Molecular characterization in two Chinese women.</title>
        <authorList>
            <person name="Ko T.M."/>
            <person name="Yang Y.S."/>
            <person name="Wu M.Y."/>
            <person name="Kao C.H."/>
            <person name="Hsu P.M."/>
            <person name="Chuang S.M."/>
            <person name="Lee T.Y."/>
        </authorList>
    </citation>
    <scope>VARIANTS AIS ASN-733 AND THR-766</scope>
</reference>
<reference key="173">
    <citation type="journal article" date="1997" name="J. Steroid Biochem. Mol. Biol.">
        <title>Wide variation in androgen receptor dysfunction in complete androgen insensitivity syndrome.</title>
        <authorList>
            <person name="Bevan C.L."/>
            <person name="Hughes I.A."/>
            <person name="Patterson M.N."/>
        </authorList>
    </citation>
    <scope>VARIANTS AIS ASP-751; PHE-763; THR-766; ASN-865 AND PHE-908</scope>
</reference>
<reference key="174">
    <citation type="journal article" date="1997" name="J. Urol.">
        <title>Androgen receptor point mutations as the underlying molecular defect in 2 patients with androgen insensitivity syndrome.</title>
        <authorList>
            <person name="Radmayr C."/>
            <person name="Culig Z."/>
            <person name="Glatzl J."/>
            <person name="Neuschmid-Kaspar F."/>
            <person name="Bartsch G."/>
            <person name="Klocker H."/>
        </authorList>
    </citation>
    <scope>VARIANT PAIS GLY-704</scope>
    <scope>VARIANT AIS LEU-917</scope>
</reference>
<reference key="175">
    <citation type="journal article" date="1998" name="Arch. Gynecol. Obstet.">
        <title>Molecular analysis of the androgen receptor gene in 4 patients with complete androgen insensitivity.</title>
        <authorList>
            <person name="Komori S."/>
            <person name="Kasumi H."/>
            <person name="Sakata K."/>
            <person name="Tanaka H."/>
            <person name="Hamada K."/>
            <person name="Koyama K."/>
        </authorList>
    </citation>
    <scope>VARIANTS AIS CYS-572; GLN-753 AND CYS-775</scope>
</reference>
<reference key="176">
    <citation type="journal article" date="1998" name="Braz. J. Med. Biol. Res.">
        <title>Mutations of androgen receptor gene in Brazilian patients with male pseudohermaphroditism.</title>
        <authorList>
            <person name="Cabral D.F."/>
            <person name="Maciel-Guerra A.T."/>
            <person name="Hackel C."/>
        </authorList>
    </citation>
    <scope>VARIANTS AIS HIS-616 AND GLN-753</scope>
</reference>
<reference key="177">
    <citation type="journal article" date="1998" name="Clin. Genet.">
        <title>Analysis of the transactivation domain of the androgen receptor in patients with male infertility.</title>
        <authorList>
            <person name="Wang Q."/>
            <person name="Ghadessy F.J."/>
            <person name="Yong E.L."/>
        </authorList>
    </citation>
    <scope>VARIANT ARG-216</scope>
    <scope>CHARACTERIZATION OF VARIANT ARG-216</scope>
</reference>
<reference key="178">
    <citation type="journal article" date="1998" name="Endocrinology">
        <title>Substitution of Ala564 in the first zinc cluster of the deoxyribonucleic acid (DNA)-binding domain of the androgen receptor by Asp, Asn, or Leu exerts differential effects on DNA binding.</title>
        <authorList>
            <person name="Brueggenwirth H.T."/>
            <person name="Boehmer A.L."/>
            <person name="Lobaccaro J.M."/>
            <person name="Chiche L."/>
            <person name="Sultan C."/>
            <person name="Trapman J."/>
            <person name="Brinkmann A.O."/>
        </authorList>
    </citation>
    <scope>VARIANT AIS ASP-574</scope>
</reference>
<reference key="179">
    <citation type="journal article" date="1998" name="Gynecol. Endocrinol.">
        <title>One additional mutation at exon A amplifies thermolability of androgen receptor in a case with complete androgen insensitivity syndrome.</title>
        <authorList>
            <person name="Tanaka H."/>
            <person name="Komori S."/>
            <person name="Sakata K."/>
            <person name="Shima H."/>
            <person name="Koyama K."/>
        </authorList>
    </citation>
    <scope>VARIANTS AIS PRO-257 AND ALA-821</scope>
</reference>
<reference key="180">
    <citation type="journal article" date="1998" name="Hum. Genet.">
        <title>Functional characterisation of mutations in the ligand-binding domain of the androgen receptor gene in patients with androgen insensitivity syndrome.</title>
        <authorList>
            <person name="Lundberg Giwercman Y."/>
            <person name="Nikoshkov A."/>
            <person name="Lindsten K."/>
            <person name="Bystroem B."/>
            <person name="Pousette A."/>
            <person name="Chibalin A.V."/>
            <person name="Arvidsson S."/>
            <person name="Tiulpakov A."/>
            <person name="Semitcheva T.V."/>
            <person name="Peterkova V."/>
            <person name="Hagenfeldt K."/>
            <person name="Ritzen E.M."/>
            <person name="Wedell A."/>
        </authorList>
    </citation>
    <scope>VARIANTS AIS THR-766; TYR-785 AND THR-896</scope>
    <scope>VARIANT PAIS GLY-841</scope>
</reference>
<reference key="181">
    <citation type="journal article" date="1998" name="Hum. Mutat.">
        <title>A new missense substitution at a mutational hot spot of the androgen receptor in siblings with complete androgen insensitivity syndrome.</title>
        <authorList>
            <person name="Doerk T."/>
            <person name="Schnieders F."/>
            <person name="Jakubiczka S."/>
            <person name="Wieacker P."/>
            <person name="Schroeder-Kurth T."/>
            <person name="Schmidtke J."/>
        </authorList>
    </citation>
    <scope>VARIANT AIS VAL-696</scope>
</reference>
<reference key="182">
    <citation type="journal article" date="1998" name="Hum. Mutat.">
        <title>An androgen receptor gene mutation (A645D) in a boy with a normal phenotype.</title>
        <authorList>
            <person name="Nordenskjoeld A."/>
            <person name="Soederhaell S."/>
        </authorList>
    </citation>
    <scope>VARIANT ASP-646</scope>
</reference>
<reference key="183">
    <citation type="journal article" date="1998" name="Hum. Mutat.">
        <title>Single amino acid substitution in the hormone-binding domain of the androgen receptor in a family with complete androgen insensitivity syndrome (CAIS).</title>
        <authorList>
            <person name="Knoke I."/>
            <person name="Jakubiczka S."/>
            <person name="Rohrer T."/>
            <person name="Hanimann B."/>
            <person name="Werder E.A."/>
            <person name="Wieacker P."/>
        </authorList>
    </citation>
    <scope>VARIANT AIS LEU-893</scope>
</reference>
<reference key="184">
    <citation type="journal article" date="1998" name="J. Clin. Endocrinol. Metab.">
        <title>Response to androgen treatment in a patient with partial androgen insensitivity and a mutation in the deoxyribonucleic acid-binding domain of the androgen receptor.</title>
        <authorList>
            <person name="Weidemann W."/>
            <person name="Peters B."/>
            <person name="Romalo G."/>
            <person name="Spindler K.D."/>
            <person name="Schweikert H.-U."/>
        </authorList>
    </citation>
    <scope>VARIANT PAIS GLN-608</scope>
</reference>
<reference key="185">
    <citation type="journal article" date="1998" name="J. Clin. Endocrinol. Metab.">
        <title>Trafficking of androgen receptor mutants fused to green fluorescent protein: a new investigation of partial androgen insensitivity syndrome.</title>
        <authorList>
            <person name="Georget V."/>
            <person name="Terouanne B."/>
            <person name="Lumbroso S."/>
            <person name="Nicolas J.C."/>
            <person name="Sultan C."/>
        </authorList>
    </citation>
    <scope>VARIANTS PAIS VAL-744 AND CYS-841</scope>
</reference>
<reference key="186">
    <citation type="journal article" date="1998" name="J. Clin. Endocrinol. Metab.">
        <title>Azoospermia associated with a mutation in the ligand-binding domain of an androgen receptor displaying normal ligand binding, but defective trans-activation.</title>
        <authorList>
            <person name="Wang Q."/>
            <person name="Ghadessy F.J."/>
            <person name="Trounson A."/>
            <person name="de Kretser D."/>
            <person name="McLachlan R."/>
            <person name="Ng S.C."/>
            <person name="Yong E.L."/>
        </authorList>
    </citation>
    <scope>VARIANT AIS GLU-799</scope>
</reference>
<reference key="187">
    <citation type="journal article" date="1998" name="J. Pediatr.">
        <title>Inherited and de novo androgen receptor gene mutations: investigation of single-case families.</title>
        <authorList>
            <person name="Hiort O."/>
            <person name="Sinnecker G.H."/>
            <person name="Holterhus P.M."/>
            <person name="Nitsche E.M."/>
            <person name="Kruse K."/>
        </authorList>
    </citation>
    <scope>VARIANTS AIS</scope>
    <scope>VARIANT AIS PHE-723</scope>
    <scope>VARIANT PAIS HIS-734</scope>
</reference>
<reference key="188">
    <citation type="journal article" date="1998" name="Mol. Cell. Endocrinol.">
        <title>Partial androgen insensitivity and correlations with the predicted three dimensional structure of the androgen receptor ligand-binding domain.</title>
        <authorList>
            <person name="Yong E.L."/>
            <person name="Tut T.G."/>
            <person name="Ghadessy F.J."/>
            <person name="Prins G."/>
            <person name="Ratnam S.S."/>
        </authorList>
    </citation>
    <scope>VARIANT PAIS THR-759</scope>
</reference>
<reference key="189">
    <citation type="journal article" date="1999" name="Andrologia">
        <title>A new point mutation of the androgen receptor gene in a patient with partial androgen resistance and severe oligozoospermia.</title>
        <authorList>
            <person name="Knoke I."/>
            <person name="Jakubiczka S."/>
            <person name="Lehnert H."/>
            <person name="Wieacker P."/>
        </authorList>
    </citation>
    <scope>VARIANT PAIS LEU-912</scope>
</reference>
<reference key="190">
    <citation type="journal article" date="1999" name="Cancer Res.">
        <title>Selection for androgen receptor mutations in prostate cancers treated with androgen antagonist.</title>
        <authorList>
            <person name="Taplin M.-E."/>
            <person name="Bubley G.J."/>
            <person name="Ko Y.J."/>
            <person name="Small E.J."/>
            <person name="Upton M."/>
            <person name="Rajeshkumar B."/>
            <person name="Balk S.P."/>
        </authorList>
    </citation>
    <scope>VARIANTS PROSTATE CANCER ALA-878 AND ASN-891</scope>
</reference>
<reference key="191">
    <citation type="journal article" date="1999" name="Hum. Mutat.">
        <title>Update of the androgen receptor gene mutations database.</title>
        <authorList>
            <person name="Gottlieb B."/>
            <person name="Beitel L.K."/>
            <person name="Lumbroso R."/>
            <person name="Pinsky L."/>
            <person name="Trifiro M."/>
        </authorList>
    </citation>
    <scope>VARIANTS AIS ILE-685 AND VAL-709</scope>
</reference>
<reference key="192">
    <citation type="journal article" date="1999" name="Hum. Mutat.">
        <title>A novel point mutation (R840S) in the androgen receptor in a Brazilian family with partial androgen insensitivity syndrome.</title>
        <authorList>
            <person name="Melo K.F.S."/>
            <person name="Latronico A.C."/>
            <person name="Costa E.M.F."/>
            <person name="Billerbeck A.E.C."/>
            <person name="Mendonca B.B."/>
            <person name="Arnhold I.J.P."/>
        </authorList>
    </citation>
    <scope>VARIANT PAIS SER-841</scope>
</reference>
<reference key="193">
    <citation type="journal article" date="1999" name="Hum. Mutat.">
        <title>Analysis of exon 1 mutations in the androgen receptor gene.</title>
        <authorList>
            <person name="Gottlieb B."/>
            <person name="Vasiliou D.M."/>
            <person name="Lumbroso R."/>
            <person name="Beitel L.K."/>
            <person name="Pinsky L."/>
            <person name="Trifiro M.A."/>
        </authorList>
    </citation>
    <scope>VARIANTS AIS ARG-392 AND ARG-445</scope>
</reference>
<reference key="194">
    <citation type="journal article" date="1999" name="Hum. Reprod.">
        <title>Androgen receptor gene mutations in 46,XY females with germ cell tumours.</title>
        <authorList>
            <person name="Chen C.P."/>
            <person name="Chern S.R."/>
            <person name="Wang T.Y."/>
            <person name="Wang W."/>
            <person name="Wang K.L."/>
            <person name="Jeng C.J."/>
        </authorList>
    </citation>
    <scope>VARIANT PAIS GLN-608</scope>
    <scope>VARIANT AIS LYS-682</scope>
</reference>
<reference key="195">
    <citation type="journal article" date="1999" name="Int. J. Urol.">
        <title>A case of complete testicular feminization: laparoscopic orchiectomy and analysis of androgen receptor gene mutation.</title>
        <authorList>
            <person name="Kanayama H."/>
            <person name="Naroda T."/>
            <person name="Inoue Y."/>
            <person name="Kurokawa Y."/>
            <person name="Kagawa S."/>
        </authorList>
    </citation>
    <scope>VARIANT AIS LEU-893</scope>
</reference>
<reference key="196">
    <citation type="journal article" date="1999" name="J. Clin. Endocrinol. Metab.">
        <title>Discordant measures of androgen-binding kinetics in two mutant androgen receptors causing mild or partial androgen insensitivity, respectively.</title>
        <authorList>
            <person name="Shkolny D.L."/>
            <person name="Beitel L.K."/>
            <person name="Ginsberg J."/>
            <person name="Pekeles G."/>
            <person name="Arbour L."/>
            <person name="Pinsky L."/>
            <person name="Trifiro M.A."/>
        </authorList>
    </citation>
    <scope>VARIANT PAIS ALA-773</scope>
    <scope>VARIANT AIS GLY-872</scope>
</reference>
<reference key="197">
    <citation type="journal article" date="1999" name="J. Clin. Invest.">
        <title>Oligospermic infertility associated with an androgen receptor mutation that disrupts interdomain and coactivator (TIF2) interactions.</title>
        <authorList>
            <person name="Ghadessy F.J."/>
            <person name="Lim J."/>
            <person name="Abdullah A.A."/>
            <person name="Panet-Raymond V."/>
            <person name="Choo C.K."/>
            <person name="Lumbroso R."/>
            <person name="Tut T.G."/>
            <person name="Gottlieb B."/>
            <person name="Pinsky L."/>
            <person name="Trifiro M.A."/>
            <person name="Yong E.L."/>
        </authorList>
    </citation>
    <scope>VARIANT AIS VAL-887</scope>
</reference>
<reference key="198">
    <citation type="journal article" date="1999" name="J. Pathol.">
        <title>Androgen receptor gene mutations in hormone-refractory prostate cancer.</title>
        <authorList>
            <person name="Wallen M.J."/>
            <person name="Linja M."/>
            <person name="Kaartinen K."/>
            <person name="Schleutker J."/>
            <person name="Visakorpi T."/>
        </authorList>
    </citation>
    <scope>VARIANT ALA-684</scope>
</reference>
<reference key="199">
    <citation type="journal article" date="1999" name="J. Urol.">
        <title>Two mutations identified in the androgen receptor of the new human prostate cancer cell line MDA PCa 2a.</title>
        <authorList>
            <person name="Zhao X.Y."/>
            <person name="Boyle B."/>
            <person name="Krishnan A.V."/>
            <person name="Navone N.M."/>
            <person name="Peehl D.M."/>
            <person name="Feldman D."/>
        </authorList>
    </citation>
    <scope>VARIANTS HIS-702 AND ALA-878</scope>
</reference>
<reference key="200">
    <citation type="journal article" date="1999" name="Lancet">
        <title>Directed pharmacological therapy of ambiguous genitalia due to an androgen receptor gene mutation.</title>
        <authorList>
            <person name="Ong Y.C."/>
            <person name="Wong H.B."/>
            <person name="Adaikan G."/>
            <person name="Yong E.L."/>
        </authorList>
    </citation>
    <scope>VARIANT PAIS THR-808</scope>
</reference>
<reference key="201">
    <citation type="journal article" date="1999" name="Mol. Cell. Endocrinol.">
        <title>An androgen receptor mutation in the direct vicinity of the proposed C-terminal alpha-helix of the ligand binding domain containing the AF-2 transcriptional activating function core is associated with complete androgen insensitivity.</title>
        <authorList>
            <person name="Peters I."/>
            <person name="Weidemann W."/>
            <person name="Romalo G."/>
            <person name="Knorr D."/>
            <person name="Schweikert H.-U."/>
            <person name="Spindler K.D."/>
        </authorList>
    </citation>
    <scope>VARIANT AIS LEU-893</scope>
</reference>
<reference key="202">
    <citation type="journal article" date="1999" name="Mol. Endocrinol.">
        <title>A C619Y mutation in the human androgen receptor causes inactivation and mislocalization of the receptor with concomitant sequestration of SRC-1.</title>
        <authorList>
            <person name="Nazareth L.V."/>
            <person name="Stenoien D.L."/>
            <person name="Bingman W.E. III"/>
            <person name="James A.J."/>
            <person name="Wu C."/>
            <person name="Zhang Y."/>
            <person name="Edwards D.P."/>
            <person name="Mancini M."/>
            <person name="Marcelli M."/>
            <person name="Lamb D.J."/>
            <person name="Weigel N.L."/>
        </authorList>
    </citation>
    <scope>VARIANT PROSTATE CANCER TYR-620</scope>
</reference>
<reference key="203">
    <citation type="journal article" date="2000" name="Mol. Endocrinol.">
        <authorList>
            <person name="Nazareth L.V."/>
            <person name="Stenoien D.L."/>
            <person name="Bingman W.E. III"/>
            <person name="James A.J."/>
            <person name="Wu C."/>
            <person name="Zhang Y."/>
            <person name="Edwards D.P."/>
            <person name="Mancini M."/>
            <person name="Marcelli M."/>
            <person name="Lamb D.J."/>
            <person name="Weigel N.L."/>
        </authorList>
    </citation>
    <scope>ERRATUM OF PUBMED:10598582</scope>
</reference>
<reference key="204">
    <citation type="journal article" date="1999" name="Pediatr. Res.">
        <title>Clinical and molecular spectrum of somatic mosaicism in androgen insensitivity syndrome.</title>
        <authorList>
            <person name="Holterhus P.M."/>
            <person name="Wiebel J."/>
            <person name="Sinnecker G.H."/>
            <person name="Bruggenwirth H.T."/>
            <person name="Sippell W.G."/>
            <person name="Brinkmann A.O."/>
            <person name="Kruse K."/>
            <person name="Hiort O."/>
        </authorList>
    </citation>
    <scope>VARIANT AIS THR-597</scope>
</reference>
<reference key="205">
    <citation type="journal article" date="1999" name="Tohoku J. Exp. Med.">
        <title>Point mutations in the steroid-binding domain of the androgen receptor gene of five Japanese patients with androgen insensitivity syndrome.</title>
        <authorList>
            <person name="Yaegashi N."/>
            <person name="Uehara S."/>
            <person name="Senoo M."/>
            <person name="Sato J."/>
            <person name="Fujiwara J."/>
            <person name="Funato T."/>
            <person name="Sasaki T."/>
            <person name="Yajima A."/>
        </authorList>
    </citation>
    <scope>VARIANTS AIS PHE-813 AND GLN-832</scope>
</reference>
<reference key="206">
    <citation type="journal article" date="1999" name="Urol. Res.">
        <title>Screening for mutations in candidate genes for hypospadias.</title>
        <authorList>
            <person name="Nordenskjoeld A."/>
            <person name="Friedman E."/>
            <person name="Tapper-Persson M."/>
            <person name="Soederhaell C."/>
            <person name="Leviav A."/>
            <person name="Svensson J."/>
            <person name="Anvret M."/>
        </authorList>
    </citation>
    <scope>VARIANTS THR-598 AND LEU-726</scope>
</reference>
<reference key="207">
    <citation type="journal article" date="2000" name="Cancer Res.">
        <title>Androgen receptor mutations in prostate cancer.</title>
        <authorList>
            <person name="Marcelli M."/>
            <person name="Ittmann M."/>
            <person name="Mariani S."/>
            <person name="Sutherland R.W."/>
            <person name="Nigam R."/>
            <person name="Murthy L."/>
            <person name="Zhao Y."/>
            <person name="DiConcini D."/>
            <person name="Puxeddu E."/>
            <person name="Esen A."/>
            <person name="Eastham J."/>
            <person name="Weigel N.L."/>
            <person name="Lamb D.J."/>
        </authorList>
    </citation>
    <scope>VARIANTS PROSTATE CANCER ALA-576; ARG-581; VAL-587; TYR-620; ALA-758 AND GLY-847</scope>
</reference>
<reference key="208">
    <citation type="journal article" date="2000" name="J. Clin. Endocrinol. Metab.">
        <title>Phenotypic features, androgen receptor binding, and mutational analysis in 278 clinical cases reported as androgen insensitivity syndrome.</title>
        <authorList>
            <person name="Ahmed S.F."/>
            <person name="Cheng A."/>
            <person name="Dovey L."/>
            <person name="Hawkins J.R."/>
            <person name="Martin H."/>
            <person name="Rowland J."/>
            <person name="Shimura N."/>
            <person name="Tait A.D."/>
            <person name="Hughes I.A."/>
        </authorList>
    </citation>
    <scope>VARIANTS AIS AND PAIS</scope>
    <scope>VARIANTS AIS SER-492; MET-701; CYS-704; THR-711; SER-724; ASP-725; PRO-769; PRO-792; LEU-857; PRO-866 AND ARG-918</scope>
</reference>
<reference key="209">
    <citation type="journal article" date="2000" name="J. Clin. Endocrinol. Metab.">
        <title>Significance of mutations in the androgen receptor gene in males with idiopathic infertility.</title>
        <authorList>
            <person name="Hiort O."/>
            <person name="Holterhus P.M."/>
            <person name="Horter T."/>
            <person name="Schulze W."/>
            <person name="Kremke B."/>
            <person name="Bals-Pratsch M."/>
            <person name="Sinnecker G.H."/>
            <person name="Kruse K."/>
        </authorList>
    </citation>
    <scope>VARIANT AIS SER-392</scope>
</reference>
<reference key="210">
    <citation type="journal article" date="2001" name="J. Hum. Genet.">
        <title>Eight novel mutations of the androgen receptor gene in patients with androgen insensitivity syndrome.</title>
        <authorList>
            <person name="Chavez B."/>
            <person name="Mendez J.P."/>
            <person name="Ulloa-Aguirre A."/>
            <person name="Larrea F."/>
            <person name="Vilchis F."/>
        </authorList>
    </citation>
    <scope>VARIANTS PAIS THR-683 AND GLU-712</scope>
    <scope>VARIANTS AIS GLU-744; VAL-828; ARG-875 AND TYR-880</scope>
</reference>
<reference key="211">
    <citation type="journal article" date="2001" name="J. Invest. Dermatol.">
        <title>Polymorphism of the androgen receptor gene is associated with male pattern baldness.</title>
        <authorList>
            <person name="Ellis J.A."/>
            <person name="Stebbing M."/>
            <person name="Harrap S.B."/>
        </authorList>
    </citation>
    <scope>INVOLVEMENT IN ANDROGENETIC ALOPECIA</scope>
    <scope>POLYMORPHISM OF POLY-GLY REGION</scope>
</reference>
<reference key="212">
    <citation type="journal article" date="2002" name="Int. J. Mol. Med.">
        <title>Characterization of a novel receptor mutation A-&gt;T at exon 4 in complete androgen insensitivity syndrome and a carrier sibling via bidirectional polymorphism sequence analysis.</title>
        <authorList>
            <person name="Sills E.S."/>
            <person name="Sholes T.E."/>
            <person name="Perloe M."/>
            <person name="Kaplan C.R."/>
            <person name="Davis J.G."/>
            <person name="Tucker M.J."/>
        </authorList>
    </citation>
    <scope>VARIANT AIS TYR-706</scope>
</reference>
<reference key="213">
    <citation type="journal article" date="2002" name="J. Clin. Endocrinol. Metab.">
        <title>Postnatal changes of T, LH, and FSH in 46,XY infants with mutations in the AR gene.</title>
        <authorList>
            <person name="Bouvattier C."/>
            <person name="Carel J.C."/>
            <person name="Lecointre C."/>
            <person name="David A."/>
            <person name="Sultan C."/>
            <person name="Bertrand A.M."/>
            <person name="Morel Y."/>
            <person name="Chaussain J.L."/>
        </authorList>
    </citation>
    <scope>VARIANT PAIS PHE-548</scope>
</reference>
<reference key="214">
    <citation type="journal article" date="2005" name="Am. J. Hum. Genet.">
        <title>Genetic variation in the human androgen receptor gene is the major determinant of common early-onset androgenetic alopecia.</title>
        <authorList>
            <person name="Hillmer A.M."/>
            <person name="Hanneken S."/>
            <person name="Ritzmann S."/>
            <person name="Becker T."/>
            <person name="Freudenberg J."/>
            <person name="Brockschmidt F.F."/>
            <person name="Flaquer A."/>
            <person name="Freudenberg-Hua Y."/>
            <person name="Jamra R.A."/>
            <person name="Metzen C."/>
            <person name="Heyn U."/>
            <person name="Schweiger N."/>
            <person name="Betz R.C."/>
            <person name="Blaumeiser B."/>
            <person name="Hampe J."/>
            <person name="Schreiber S."/>
            <person name="Schulze T.G."/>
            <person name="Hennies H.C."/>
            <person name="Schumacher J."/>
            <person name="Propping P."/>
            <person name="Ruzicka T."/>
            <person name="Cichon S."/>
            <person name="Wienker T.F."/>
            <person name="Kruse R."/>
            <person name="Noethen M.M."/>
        </authorList>
    </citation>
    <scope>INVOLVEMENT IN ANDROGENETIC ALOPECIA</scope>
    <scope>POLYMORPHISM OF POLY-GLY REGION</scope>
</reference>
<reference key="215">
    <citation type="journal article" date="2005" name="Neurology">
        <title>A family with early-onset and rapidly progressive X-linked spinal and bulbar muscular atrophy.</title>
        <authorList>
            <person name="Echaniz-Laguna A."/>
            <person name="Rousso E."/>
            <person name="Anheim M."/>
            <person name="Cossee M."/>
            <person name="Tranchant C."/>
        </authorList>
    </citation>
    <scope>INVOLVEMENT IN SMAX1</scope>
</reference>
<reference key="216">
    <citation type="journal article" date="2004" name="Clin. Genet.">
        <title>Concordance of phenotypic expression and gender identity in a large kindred with a mutation in the androgen receptor.</title>
        <authorList>
            <person name="Hooper H.T."/>
            <person name="Figueiredo B.C."/>
            <person name="Pavan-Senn C.C."/>
            <person name="De Lacerda L."/>
            <person name="Sandrini R."/>
            <person name="Mengarelli J.K."/>
            <person name="Japp K."/>
            <person name="Karaviti L.P."/>
        </authorList>
    </citation>
    <scope>VARIANT AIS PHE-577</scope>
</reference>
<reference key="217">
    <citation type="journal article" date="2006" name="J. Mol. Endocrinol.">
        <title>Human androgen receptor gene ligand-binding-domain mutations leading to disrupted interaction between the N- and C-terminal domains.</title>
        <authorList>
            <person name="Jaeaeskelaeinen J."/>
            <person name="Deeb A."/>
            <person name="Schwabe J.W."/>
            <person name="Mongan N.P."/>
            <person name="Martin H."/>
            <person name="Hughes I.A."/>
        </authorList>
    </citation>
    <scope>CHARACTERIZATION OF VARIANTS AIS ASN-696; CYS-764; HIS-775; GLU-799; HIS-856 AND PHE-908</scope>
</reference>
<reference key="218">
    <citation type="journal article" date="2014" name="Andrology">
        <title>AR and SRD5A2 gene mutations in a series of 51 Turkish 46,XY DSD children with a clinical diagnosis of androgen insensitivity.</title>
        <authorList>
            <person name="Akcay T."/>
            <person name="Fernandez-Cancio M."/>
            <person name="Turan S."/>
            <person name="Gueran T."/>
            <person name="Audi L."/>
            <person name="Bereket A."/>
        </authorList>
    </citation>
    <scope>VARIANT AIS LEU-892</scope>
</reference>
<reference key="219">
    <citation type="journal article" date="2016" name="Nature">
        <title>Analysis of protein-coding genetic variation in 60,706 humans.</title>
        <authorList>
            <consortium name="Exome Aggregation Consortium"/>
            <person name="Lek M."/>
            <person name="Karczewski K.J."/>
            <person name="Minikel E.V."/>
            <person name="Samocha K.E."/>
            <person name="Banks E."/>
            <person name="Fennell T."/>
            <person name="O'Donnell-Luria A.H."/>
            <person name="Ware J.S."/>
            <person name="Hill A.J."/>
            <person name="Cummings B.B."/>
            <person name="Tukiainen T."/>
            <person name="Birnbaum D.P."/>
            <person name="Kosmicki J.A."/>
            <person name="Duncan L.E."/>
            <person name="Estrada K."/>
            <person name="Zhao F."/>
            <person name="Zou J."/>
            <person name="Pierce-Hoffman E."/>
            <person name="Berghout J."/>
            <person name="Cooper D.N."/>
            <person name="Deflaux N."/>
            <person name="DePristo M."/>
            <person name="Do R."/>
            <person name="Flannick J."/>
            <person name="Fromer M."/>
            <person name="Gauthier L."/>
            <person name="Goldstein J."/>
            <person name="Gupta N."/>
            <person name="Howrigan D."/>
            <person name="Kiezun A."/>
            <person name="Kurki M.I."/>
            <person name="Moonshine A.L."/>
            <person name="Natarajan P."/>
            <person name="Orozco L."/>
            <person name="Peloso G.M."/>
            <person name="Poplin R."/>
            <person name="Rivas M.A."/>
            <person name="Ruano-Rubio V."/>
            <person name="Rose S.A."/>
            <person name="Ruderfer D.M."/>
            <person name="Shakir K."/>
            <person name="Stenson P.D."/>
            <person name="Stevens C."/>
            <person name="Thomas B.P."/>
            <person name="Tiao G."/>
            <person name="Tusie-Luna M.T."/>
            <person name="Weisburd B."/>
            <person name="Won H.H."/>
            <person name="Yu D."/>
            <person name="Altshuler D.M."/>
            <person name="Ardissino D."/>
            <person name="Boehnke M."/>
            <person name="Danesh J."/>
            <person name="Donnelly S."/>
            <person name="Elosua R."/>
            <person name="Florez J.C."/>
            <person name="Gabriel S.B."/>
            <person name="Getz G."/>
            <person name="Glatt S.J."/>
            <person name="Hultman C.M."/>
            <person name="Kathiresan S."/>
            <person name="Laakso M."/>
            <person name="McCarroll S."/>
            <person name="McCarthy M.I."/>
            <person name="McGovern D."/>
            <person name="McPherson R."/>
            <person name="Neale B.M."/>
            <person name="Palotie A."/>
            <person name="Purcell S.M."/>
            <person name="Saleheen D."/>
            <person name="Scharf J.M."/>
            <person name="Sklar P."/>
            <person name="Sullivan P.F."/>
            <person name="Tuomilehto J."/>
            <person name="Tsuang M.T."/>
            <person name="Watkins H.C."/>
            <person name="Wilson J.G."/>
            <person name="Daly M.J."/>
            <person name="MacArthur D.G."/>
        </authorList>
    </citation>
    <scope>VARIANT ARG-216</scope>
</reference>
<reference key="220">
    <citation type="journal article" date="2021" name="EBioMedicine">
        <title>Shorter androgen receptor polyQ alleles protect against life-threatening COVID-19 disease in European males.</title>
        <authorList>
            <consortium name="Spanish Covid HGE, GEN-COVID Multicenter Study"/>
            <person name="Baldassarri M."/>
            <person name="Picchiotti N."/>
            <person name="Fava F."/>
            <person name="Fallerini C."/>
            <person name="Benetti E."/>
            <person name="Daga S."/>
            <person name="Valentino F."/>
            <person name="Doddato G."/>
            <person name="Furini S."/>
            <person name="Giliberti A."/>
            <person name="Tita R."/>
            <person name="Amitrano S."/>
            <person name="Bruttini M."/>
            <person name="Croci S."/>
            <person name="Meloni I."/>
            <person name="Pinto A.M."/>
            <person name="Iuso N."/>
            <person name="Gabbi C."/>
            <person name="Sciarra F."/>
            <person name="Venneri M.A."/>
            <person name="Gori M."/>
            <person name="Sanarico M."/>
            <person name="Crawley F.P."/>
            <person name="Pagotto U."/>
            <person name="Fanelli F."/>
            <person name="Mezzullo M."/>
            <person name="Dominguez-Garrido E."/>
            <person name="Planas-Serra L."/>
            <person name="Schlueter A."/>
            <person name="Colobran R."/>
            <person name="Soler-Palacin P."/>
            <person name="Lapunzina P."/>
            <person name="Tenorio J."/>
            <person name="Pujol A."/>
            <person name="Castagna M.G."/>
            <person name="Marcelli M."/>
            <person name="Isidori A.M."/>
            <person name="Renieri A."/>
            <person name="Frullanti E."/>
            <person name="Mari F."/>
        </authorList>
    </citation>
    <scope>POLYMORPHISM</scope>
</reference>
<keyword id="KW-0002">3D-structure</keyword>
<keyword id="KW-0010">Activator</keyword>
<keyword id="KW-0025">Alternative splicing</keyword>
<keyword id="KW-0963">Cytoplasm</keyword>
<keyword id="KW-0225">Disease variant</keyword>
<keyword id="KW-0238">DNA-binding</keyword>
<keyword id="KW-1017">Isopeptide bond</keyword>
<keyword id="KW-0446">Lipid-binding</keyword>
<keyword id="KW-0449">Lipoprotein</keyword>
<keyword id="KW-0479">Metal-binding</keyword>
<keyword id="KW-0523">Neurodegeneration</keyword>
<keyword id="KW-0539">Nucleus</keyword>
<keyword id="KW-0564">Palmitate</keyword>
<keyword id="KW-0597">Phosphoprotein</keyword>
<keyword id="KW-1267">Proteomics identification</keyword>
<keyword id="KW-0657">Pseudohermaphroditism</keyword>
<keyword id="KW-0675">Receptor</keyword>
<keyword id="KW-1185">Reference proteome</keyword>
<keyword id="KW-0754">Steroid-binding</keyword>
<keyword id="KW-0804">Transcription</keyword>
<keyword id="KW-0805">Transcription regulation</keyword>
<keyword id="KW-0818">Triplet repeat expansion</keyword>
<keyword id="KW-0832">Ubl conjugation</keyword>
<keyword id="KW-0862">Zinc</keyword>
<keyword id="KW-0863">Zinc-finger</keyword>
<organism>
    <name type="scientific">Homo sapiens</name>
    <name type="common">Human</name>
    <dbReference type="NCBI Taxonomy" id="9606"/>
    <lineage>
        <taxon>Eukaryota</taxon>
        <taxon>Metazoa</taxon>
        <taxon>Chordata</taxon>
        <taxon>Craniata</taxon>
        <taxon>Vertebrata</taxon>
        <taxon>Euteleostomi</taxon>
        <taxon>Mammalia</taxon>
        <taxon>Eutheria</taxon>
        <taxon>Euarchontoglires</taxon>
        <taxon>Primates</taxon>
        <taxon>Haplorrhini</taxon>
        <taxon>Catarrhini</taxon>
        <taxon>Hominidae</taxon>
        <taxon>Homo</taxon>
    </lineage>
</organism>
<sequence>MEVQLGLGRVYPRPPSKTYRGAFQNLFQSVREVIQNPGPRHPEAASAAPPGASLLLLQQQQQQQQQQQQQQQQQQQQQQQETSPRQQQQQQGEDGSPQAHRRGPTGYLVLDEEQQPSQPQSALECHPERGCVPEPGAAVAASKGLPQQLPAPPDEDDSAAPSTLSLLGPTFPGLSSCSADLKDILSEASTMQLLQQQQQEAVSEGSSSGRAREASGAPTSSKDNYLGGTSTISDNAKELCKAVSVSMGLGVEALEHLSPGEQLRGDCMYAPLLGVPPAVRPTPCAPLAECKGSLLDDSAGKSTEDTAEYSPFKGGYTKGLEGESLGCSGSAAAGSSGTLELPSTLSLYKSGALDEAAAYQSRDYYNFPLALAGPPPPPPPPHPHARIKLENPLDYGSAWAAAAAQCRYGDLASLHGAGAAGPGSGSPSAAASSSWHTLFTAEEGQLYGPCGGGGGGGGGGGGGGGGGGGGGGGEAGAVAPYGYTRPPQGLAGQESDFTAPDVWYPGGMVSRVPYPSPTCVKSEMGPWMDSYSGPYGDMRLETARDHVLPIDYYFPPQKTCLICGDEASGCHYGALTCGSCKVFFKRAAEGKQKYLCASRNDCTIDKFRRKNCPSCRLRKCYEAGMTLGARKLKKLGNLKLQEEGEASSTTSPTEETTQKLTVSHIEGYECQPIFLNVLEAIEPGVVCAGHDNNQPDSFAALLSSLNELGERQLVHVVKWAKALPGFRNLHVDDQMAVIQYSWMGLMVFAMGWRSFTNVNSRMLYFAPDLVFNEYRMHKSRMYSQCVRMRHLSQEFGWLQITPQEFLCMKALLLFSIIPVDGLKNQKFFDELRMNYIKELDRIIACKRKNPTSCSRRFYQLTKLLDSVQPIARELHQFTFDLLIKSHMVSVDFPEMMAEIISVQVPKILSGKVKPIYFHTQ</sequence>
<dbReference type="EMBL" id="M20132">
    <property type="protein sequence ID" value="AAA51729.1"/>
    <property type="molecule type" value="mRNA"/>
</dbReference>
<dbReference type="EMBL" id="M23263">
    <property type="protein sequence ID" value="AAA51775.1"/>
    <property type="molecule type" value="mRNA"/>
</dbReference>
<dbReference type="EMBL" id="M27430">
    <property type="protein sequence ID" value="AAA51886.1"/>
    <property type="molecule type" value="Genomic_DNA"/>
</dbReference>
<dbReference type="EMBL" id="M27423">
    <property type="protein sequence ID" value="AAA51886.1"/>
    <property type="status" value="JOINED"/>
    <property type="molecule type" value="Genomic_DNA"/>
</dbReference>
<dbReference type="EMBL" id="M27424">
    <property type="protein sequence ID" value="AAA51886.1"/>
    <property type="status" value="JOINED"/>
    <property type="molecule type" value="Genomic_DNA"/>
</dbReference>
<dbReference type="EMBL" id="M27425">
    <property type="protein sequence ID" value="AAA51886.1"/>
    <property type="status" value="JOINED"/>
    <property type="molecule type" value="Genomic_DNA"/>
</dbReference>
<dbReference type="EMBL" id="M27426">
    <property type="protein sequence ID" value="AAA51886.1"/>
    <property type="status" value="JOINED"/>
    <property type="molecule type" value="Genomic_DNA"/>
</dbReference>
<dbReference type="EMBL" id="M27427">
    <property type="protein sequence ID" value="AAA51886.1"/>
    <property type="status" value="JOINED"/>
    <property type="molecule type" value="Genomic_DNA"/>
</dbReference>
<dbReference type="EMBL" id="M27428">
    <property type="protein sequence ID" value="AAA51886.1"/>
    <property type="status" value="JOINED"/>
    <property type="molecule type" value="Genomic_DNA"/>
</dbReference>
<dbReference type="EMBL" id="M27429">
    <property type="protein sequence ID" value="AAA51886.1"/>
    <property type="status" value="JOINED"/>
    <property type="molecule type" value="Genomic_DNA"/>
</dbReference>
<dbReference type="EMBL" id="M34233">
    <property type="protein sequence ID" value="AAA51780.1"/>
    <property type="molecule type" value="mRNA"/>
</dbReference>
<dbReference type="EMBL" id="M21748">
    <property type="protein sequence ID" value="AAA51771.1"/>
    <property type="molecule type" value="mRNA"/>
</dbReference>
<dbReference type="EMBL" id="M35851">
    <property type="protein sequence ID" value="AAA51772.1"/>
    <property type="molecule type" value="Genomic_DNA"/>
</dbReference>
<dbReference type="EMBL" id="M35844">
    <property type="protein sequence ID" value="AAA51772.1"/>
    <property type="status" value="JOINED"/>
    <property type="molecule type" value="Genomic_DNA"/>
</dbReference>
<dbReference type="EMBL" id="M35845">
    <property type="protein sequence ID" value="AAA51772.1"/>
    <property type="status" value="JOINED"/>
    <property type="molecule type" value="Genomic_DNA"/>
</dbReference>
<dbReference type="EMBL" id="M35846">
    <property type="protein sequence ID" value="AAA51772.1"/>
    <property type="status" value="JOINED"/>
    <property type="molecule type" value="Genomic_DNA"/>
</dbReference>
<dbReference type="EMBL" id="M35847">
    <property type="protein sequence ID" value="AAA51772.1"/>
    <property type="status" value="JOINED"/>
    <property type="molecule type" value="Genomic_DNA"/>
</dbReference>
<dbReference type="EMBL" id="M35848">
    <property type="protein sequence ID" value="AAA51772.1"/>
    <property type="status" value="JOINED"/>
    <property type="molecule type" value="Genomic_DNA"/>
</dbReference>
<dbReference type="EMBL" id="M35849">
    <property type="protein sequence ID" value="AAA51772.1"/>
    <property type="status" value="JOINED"/>
    <property type="molecule type" value="Genomic_DNA"/>
</dbReference>
<dbReference type="EMBL" id="M35850">
    <property type="protein sequence ID" value="AAA51772.1"/>
    <property type="status" value="JOINED"/>
    <property type="molecule type" value="Genomic_DNA"/>
</dbReference>
<dbReference type="EMBL" id="AX453758">
    <property type="status" value="NOT_ANNOTATED_CDS"/>
    <property type="molecule type" value="Unassigned_DNA"/>
</dbReference>
<dbReference type="EMBL" id="FJ235916">
    <property type="protein sequence ID" value="ACN39559.1"/>
    <property type="molecule type" value="mRNA"/>
</dbReference>
<dbReference type="EMBL" id="FJ235917">
    <property type="protein sequence ID" value="ACN39560.1"/>
    <property type="molecule type" value="mRNA"/>
</dbReference>
<dbReference type="EMBL" id="AL049564">
    <property type="status" value="NOT_ANNOTATED_CDS"/>
    <property type="molecule type" value="Genomic_DNA"/>
</dbReference>
<dbReference type="EMBL" id="AL158016">
    <property type="status" value="NOT_ANNOTATED_CDS"/>
    <property type="molecule type" value="Genomic_DNA"/>
</dbReference>
<dbReference type="EMBL" id="AL356358">
    <property type="status" value="NOT_ANNOTATED_CDS"/>
    <property type="molecule type" value="Genomic_DNA"/>
</dbReference>
<dbReference type="EMBL" id="CH471132">
    <property type="protein sequence ID" value="EAX05380.1"/>
    <property type="molecule type" value="Genomic_DNA"/>
</dbReference>
<dbReference type="EMBL" id="BC132975">
    <property type="protein sequence ID" value="AAI32976.1"/>
    <property type="molecule type" value="mRNA"/>
</dbReference>
<dbReference type="EMBL" id="L29496">
    <property type="protein sequence ID" value="AAA51770.1"/>
    <property type="molecule type" value="mRNA"/>
</dbReference>
<dbReference type="EMBL" id="U16371">
    <property type="protein sequence ID" value="AAB60346.1"/>
    <property type="molecule type" value="Genomic_DNA"/>
</dbReference>
<dbReference type="EMBL" id="M20260">
    <property type="protein sequence ID" value="AAA51774.1"/>
    <property type="molecule type" value="mRNA"/>
</dbReference>
<dbReference type="EMBL" id="S79366">
    <property type="protein sequence ID" value="AAB21256.2"/>
    <property type="molecule type" value="Genomic_DNA"/>
</dbReference>
<dbReference type="EMBL" id="S79368">
    <property type="protein sequence ID" value="AAB21257.2"/>
    <property type="molecule type" value="Genomic_DNA"/>
</dbReference>
<dbReference type="CCDS" id="CCDS14387.1">
    <molecule id="P10275-1"/>
</dbReference>
<dbReference type="CCDS" id="CCDS87754.1">
    <molecule id="P10275-3"/>
</dbReference>
<dbReference type="PIR" id="A39248">
    <property type="entry name" value="A39248"/>
</dbReference>
<dbReference type="RefSeq" id="NP_000035.2">
    <molecule id="P10275-1"/>
    <property type="nucleotide sequence ID" value="NM_000044.4"/>
</dbReference>
<dbReference type="RefSeq" id="NP_001011645.1">
    <molecule id="P10275-2"/>
    <property type="nucleotide sequence ID" value="NM_001011645.3"/>
</dbReference>
<dbReference type="RefSeq" id="NP_001334990.1">
    <molecule id="P10275-3"/>
    <property type="nucleotide sequence ID" value="NM_001348061.1"/>
</dbReference>
<dbReference type="RefSeq" id="NP_001334992.1">
    <molecule id="P10275-4"/>
    <property type="nucleotide sequence ID" value="NM_001348063.1"/>
</dbReference>
<dbReference type="RefSeq" id="NP_001334993.1">
    <property type="nucleotide sequence ID" value="NM_001348064.1"/>
</dbReference>
<dbReference type="PDB" id="1E3G">
    <property type="method" value="X-ray"/>
    <property type="resolution" value="2.40 A"/>
    <property type="chains" value="A=658-920"/>
</dbReference>
<dbReference type="PDB" id="1GS4">
    <property type="method" value="X-ray"/>
    <property type="resolution" value="1.95 A"/>
    <property type="chains" value="A=671-918"/>
</dbReference>
<dbReference type="PDB" id="1T5Z">
    <property type="method" value="X-ray"/>
    <property type="resolution" value="2.30 A"/>
    <property type="chains" value="A=670-920"/>
</dbReference>
<dbReference type="PDB" id="1T63">
    <property type="method" value="X-ray"/>
    <property type="resolution" value="2.07 A"/>
    <property type="chains" value="A=670-919"/>
</dbReference>
<dbReference type="PDB" id="1T65">
    <property type="method" value="X-ray"/>
    <property type="resolution" value="1.66 A"/>
    <property type="chains" value="A=670-920"/>
</dbReference>
<dbReference type="PDB" id="1XJ7">
    <property type="method" value="X-ray"/>
    <property type="resolution" value="2.70 A"/>
    <property type="chains" value="A=664-920"/>
</dbReference>
<dbReference type="PDB" id="1XOW">
    <property type="method" value="X-ray"/>
    <property type="resolution" value="1.80 A"/>
    <property type="chains" value="A=672-920, B=20-30"/>
</dbReference>
<dbReference type="PDB" id="1XQ3">
    <property type="method" value="X-ray"/>
    <property type="resolution" value="2.25 A"/>
    <property type="chains" value="A=672-920"/>
</dbReference>
<dbReference type="PDB" id="1Z95">
    <property type="method" value="X-ray"/>
    <property type="resolution" value="1.80 A"/>
    <property type="chains" value="A=673-918"/>
</dbReference>
<dbReference type="PDB" id="2AM9">
    <property type="method" value="X-ray"/>
    <property type="resolution" value="1.64 A"/>
    <property type="chains" value="A=655-920"/>
</dbReference>
<dbReference type="PDB" id="2AMA">
    <property type="method" value="X-ray"/>
    <property type="resolution" value="1.90 A"/>
    <property type="chains" value="A=655-920"/>
</dbReference>
<dbReference type="PDB" id="2AMB">
    <property type="method" value="X-ray"/>
    <property type="resolution" value="1.75 A"/>
    <property type="chains" value="A=655-920"/>
</dbReference>
<dbReference type="PDB" id="2AO6">
    <property type="method" value="X-ray"/>
    <property type="resolution" value="1.89 A"/>
    <property type="chains" value="A=672-920"/>
</dbReference>
<dbReference type="PDB" id="2AX6">
    <property type="method" value="X-ray"/>
    <property type="resolution" value="1.50 A"/>
    <property type="chains" value="A=665-920"/>
</dbReference>
<dbReference type="PDB" id="2AX7">
    <property type="method" value="X-ray"/>
    <property type="resolution" value="1.90 A"/>
    <property type="chains" value="A=665-920"/>
</dbReference>
<dbReference type="PDB" id="2AX8">
    <property type="method" value="X-ray"/>
    <property type="resolution" value="1.70 A"/>
    <property type="chains" value="A=665-920"/>
</dbReference>
<dbReference type="PDB" id="2AX9">
    <property type="method" value="X-ray"/>
    <property type="resolution" value="1.65 A"/>
    <property type="chains" value="A=665-920"/>
</dbReference>
<dbReference type="PDB" id="2AXA">
    <property type="method" value="X-ray"/>
    <property type="resolution" value="1.80 A"/>
    <property type="chains" value="A=665-920"/>
</dbReference>
<dbReference type="PDB" id="2HVC">
    <property type="method" value="X-ray"/>
    <property type="resolution" value="2.10 A"/>
    <property type="chains" value="A=670-919"/>
</dbReference>
<dbReference type="PDB" id="2OZ7">
    <property type="method" value="X-ray"/>
    <property type="resolution" value="1.80 A"/>
    <property type="chains" value="A=672-920"/>
</dbReference>
<dbReference type="PDB" id="2PIO">
    <property type="method" value="X-ray"/>
    <property type="resolution" value="2.03 A"/>
    <property type="chains" value="A=670-920"/>
</dbReference>
<dbReference type="PDB" id="2PIP">
    <property type="method" value="X-ray"/>
    <property type="resolution" value="1.80 A"/>
    <property type="chains" value="L=670-920"/>
</dbReference>
<dbReference type="PDB" id="2PIQ">
    <property type="method" value="X-ray"/>
    <property type="resolution" value="2.40 A"/>
    <property type="chains" value="A=670-920"/>
</dbReference>
<dbReference type="PDB" id="2PIR">
    <property type="method" value="X-ray"/>
    <property type="resolution" value="2.10 A"/>
    <property type="chains" value="A=670-920"/>
</dbReference>
<dbReference type="PDB" id="2PIT">
    <property type="method" value="X-ray"/>
    <property type="resolution" value="1.76 A"/>
    <property type="chains" value="A=670-920"/>
</dbReference>
<dbReference type="PDB" id="2PIU">
    <property type="method" value="X-ray"/>
    <property type="resolution" value="2.12 A"/>
    <property type="chains" value="A=670-920"/>
</dbReference>
<dbReference type="PDB" id="2PIV">
    <property type="method" value="X-ray"/>
    <property type="resolution" value="1.95 A"/>
    <property type="chains" value="A=670-920"/>
</dbReference>
<dbReference type="PDB" id="2PIW">
    <property type="method" value="X-ray"/>
    <property type="resolution" value="2.58 A"/>
    <property type="chains" value="A=670-920"/>
</dbReference>
<dbReference type="PDB" id="2PIX">
    <property type="method" value="X-ray"/>
    <property type="resolution" value="2.40 A"/>
    <property type="chains" value="A=670-920"/>
</dbReference>
<dbReference type="PDB" id="2PKL">
    <property type="method" value="X-ray"/>
    <property type="resolution" value="2.49 A"/>
    <property type="chains" value="A=670-920"/>
</dbReference>
<dbReference type="PDB" id="2PNU">
    <property type="method" value="X-ray"/>
    <property type="resolution" value="1.65 A"/>
    <property type="chains" value="A=655-920"/>
</dbReference>
<dbReference type="PDB" id="2Q7I">
    <property type="method" value="X-ray"/>
    <property type="resolution" value="1.87 A"/>
    <property type="chains" value="A=664-920, B=20-30"/>
</dbReference>
<dbReference type="PDB" id="2Q7J">
    <property type="method" value="X-ray"/>
    <property type="resolution" value="1.90 A"/>
    <property type="chains" value="A=664-920"/>
</dbReference>
<dbReference type="PDB" id="2Q7K">
    <property type="method" value="X-ray"/>
    <property type="resolution" value="1.80 A"/>
    <property type="chains" value="A=664-920, B=20-30"/>
</dbReference>
<dbReference type="PDB" id="2Q7L">
    <property type="method" value="X-ray"/>
    <property type="resolution" value="1.92 A"/>
    <property type="chains" value="A=664-920"/>
</dbReference>
<dbReference type="PDB" id="2YHD">
    <property type="method" value="X-ray"/>
    <property type="resolution" value="2.20 A"/>
    <property type="chains" value="A=672-920"/>
</dbReference>
<dbReference type="PDB" id="2YLO">
    <property type="method" value="X-ray"/>
    <property type="resolution" value="2.50 A"/>
    <property type="chains" value="A=665-920"/>
</dbReference>
<dbReference type="PDB" id="2YLP">
    <property type="method" value="X-ray"/>
    <property type="resolution" value="2.30 A"/>
    <property type="chains" value="A=665-920"/>
</dbReference>
<dbReference type="PDB" id="2YLQ">
    <property type="method" value="X-ray"/>
    <property type="resolution" value="2.40 A"/>
    <property type="chains" value="A=665-920"/>
</dbReference>
<dbReference type="PDB" id="2Z4J">
    <property type="method" value="X-ray"/>
    <property type="resolution" value="2.60 A"/>
    <property type="chains" value="A=672-919"/>
</dbReference>
<dbReference type="PDB" id="3B5R">
    <property type="method" value="X-ray"/>
    <property type="resolution" value="1.80 A"/>
    <property type="chains" value="A=672-920"/>
</dbReference>
<dbReference type="PDB" id="3B65">
    <property type="method" value="X-ray"/>
    <property type="resolution" value="1.80 A"/>
    <property type="chains" value="A=672-920"/>
</dbReference>
<dbReference type="PDB" id="3B66">
    <property type="method" value="X-ray"/>
    <property type="resolution" value="1.65 A"/>
    <property type="chains" value="A=672-920"/>
</dbReference>
<dbReference type="PDB" id="3B67">
    <property type="method" value="X-ray"/>
    <property type="resolution" value="1.90 A"/>
    <property type="chains" value="A=672-920"/>
</dbReference>
<dbReference type="PDB" id="3B68">
    <property type="method" value="X-ray"/>
    <property type="resolution" value="1.90 A"/>
    <property type="chains" value="A=672-920"/>
</dbReference>
<dbReference type="PDB" id="3BTR">
    <property type="method" value="X-ray"/>
    <property type="resolution" value="2.60 A"/>
    <property type="chains" value="B=622-636"/>
</dbReference>
<dbReference type="PDB" id="3L3X">
    <property type="method" value="X-ray"/>
    <property type="resolution" value="1.55 A"/>
    <property type="chains" value="A=671-919"/>
</dbReference>
<dbReference type="PDB" id="3L3Z">
    <property type="method" value="X-ray"/>
    <property type="resolution" value="2.00 A"/>
    <property type="chains" value="A=671-919"/>
</dbReference>
<dbReference type="PDB" id="3RLJ">
    <property type="method" value="X-ray"/>
    <property type="resolution" value="1.90 A"/>
    <property type="chains" value="A=672-918"/>
</dbReference>
<dbReference type="PDB" id="3RLL">
    <property type="method" value="X-ray"/>
    <property type="resolution" value="1.70 A"/>
    <property type="chains" value="A=672-918"/>
</dbReference>
<dbReference type="PDB" id="3V49">
    <property type="method" value="X-ray"/>
    <property type="resolution" value="1.70 A"/>
    <property type="chains" value="A=655-920, B=21-31"/>
</dbReference>
<dbReference type="PDB" id="3V4A">
    <property type="method" value="X-ray"/>
    <property type="resolution" value="1.95 A"/>
    <property type="chains" value="A=672-920, B=21-31"/>
</dbReference>
<dbReference type="PDB" id="3ZQT">
    <property type="method" value="X-ray"/>
    <property type="resolution" value="2.29 A"/>
    <property type="chains" value="A=665-920"/>
</dbReference>
<dbReference type="PDB" id="4HLW">
    <property type="method" value="X-ray"/>
    <property type="resolution" value="2.50 A"/>
    <property type="chains" value="A=665-920"/>
</dbReference>
<dbReference type="PDB" id="4K7A">
    <property type="method" value="X-ray"/>
    <property type="resolution" value="2.44 A"/>
    <property type="chains" value="A=671-919"/>
</dbReference>
<dbReference type="PDB" id="4OEA">
    <property type="method" value="X-ray"/>
    <property type="resolution" value="2.12 A"/>
    <property type="chains" value="A=671-920"/>
</dbReference>
<dbReference type="PDB" id="4OED">
    <property type="method" value="X-ray"/>
    <property type="resolution" value="2.79 A"/>
    <property type="chains" value="A=671-920"/>
</dbReference>
<dbReference type="PDB" id="4OEY">
    <property type="method" value="X-ray"/>
    <property type="resolution" value="1.83 A"/>
    <property type="chains" value="A=671-920"/>
</dbReference>
<dbReference type="PDB" id="4OEZ">
    <property type="method" value="X-ray"/>
    <property type="resolution" value="1.80 A"/>
    <property type="chains" value="A=671-920"/>
</dbReference>
<dbReference type="PDB" id="4OFR">
    <property type="method" value="X-ray"/>
    <property type="resolution" value="2.26 A"/>
    <property type="chains" value="A=671-920"/>
</dbReference>
<dbReference type="PDB" id="4OFU">
    <property type="method" value="X-ray"/>
    <property type="resolution" value="2.12 A"/>
    <property type="chains" value="A=671-920"/>
</dbReference>
<dbReference type="PDB" id="4OGH">
    <property type="method" value="X-ray"/>
    <property type="resolution" value="2.98 A"/>
    <property type="chains" value="A=671-920"/>
</dbReference>
<dbReference type="PDB" id="4OH5">
    <property type="method" value="X-ray"/>
    <property type="resolution" value="2.00 A"/>
    <property type="chains" value="A=671-920"/>
</dbReference>
<dbReference type="PDB" id="4OH6">
    <property type="method" value="X-ray"/>
    <property type="resolution" value="3.56 A"/>
    <property type="chains" value="A=671-920"/>
</dbReference>
<dbReference type="PDB" id="4OHA">
    <property type="method" value="X-ray"/>
    <property type="resolution" value="1.42 A"/>
    <property type="chains" value="A=671-920"/>
</dbReference>
<dbReference type="PDB" id="4OIL">
    <property type="method" value="X-ray"/>
    <property type="resolution" value="2.51 A"/>
    <property type="chains" value="A=671-920"/>
</dbReference>
<dbReference type="PDB" id="4OIU">
    <property type="method" value="X-ray"/>
    <property type="resolution" value="3.01 A"/>
    <property type="chains" value="A=671-920"/>
</dbReference>
<dbReference type="PDB" id="4OJ9">
    <property type="method" value="X-ray"/>
    <property type="resolution" value="3.31 A"/>
    <property type="chains" value="A=671-920"/>
</dbReference>
<dbReference type="PDB" id="4OJB">
    <property type="method" value="X-ray"/>
    <property type="resolution" value="2.00 A"/>
    <property type="chains" value="A=671-920"/>
</dbReference>
<dbReference type="PDB" id="4OK1">
    <property type="method" value="X-ray"/>
    <property type="resolution" value="2.09 A"/>
    <property type="chains" value="A=671-920"/>
</dbReference>
<dbReference type="PDB" id="4OKB">
    <property type="method" value="X-ray"/>
    <property type="resolution" value="2.95 A"/>
    <property type="chains" value="A=671-920"/>
</dbReference>
<dbReference type="PDB" id="4OKT">
    <property type="method" value="X-ray"/>
    <property type="resolution" value="2.50 A"/>
    <property type="chains" value="A=671-920"/>
</dbReference>
<dbReference type="PDB" id="4OKW">
    <property type="method" value="X-ray"/>
    <property type="resolution" value="2.00 A"/>
    <property type="chains" value="A=671-920"/>
</dbReference>
<dbReference type="PDB" id="4OKX">
    <property type="method" value="X-ray"/>
    <property type="resolution" value="2.10 A"/>
    <property type="chains" value="A=671-920"/>
</dbReference>
<dbReference type="PDB" id="4OLM">
    <property type="method" value="X-ray"/>
    <property type="resolution" value="2.80 A"/>
    <property type="chains" value="A=671-920"/>
</dbReference>
<dbReference type="PDB" id="4QL8">
    <property type="method" value="X-ray"/>
    <property type="resolution" value="2.10 A"/>
    <property type="chains" value="A=663-920"/>
</dbReference>
<dbReference type="PDB" id="5CJ6">
    <property type="method" value="X-ray"/>
    <property type="resolution" value="2.07 A"/>
    <property type="chains" value="A=642-920, B=21-30"/>
</dbReference>
<dbReference type="PDB" id="5JJM">
    <property type="method" value="X-ray"/>
    <property type="resolution" value="2.15 A"/>
    <property type="chains" value="A/B/C/D=669-920"/>
</dbReference>
<dbReference type="PDB" id="5T8E">
    <property type="method" value="X-ray"/>
    <property type="resolution" value="2.71 A"/>
    <property type="chains" value="A=672-920"/>
</dbReference>
<dbReference type="PDB" id="5T8J">
    <property type="method" value="X-ray"/>
    <property type="resolution" value="2.70 A"/>
    <property type="chains" value="A=672-920"/>
</dbReference>
<dbReference type="PDB" id="5V8Q">
    <property type="method" value="X-ray"/>
    <property type="resolution" value="1.44 A"/>
    <property type="chains" value="A=672-920"/>
</dbReference>
<dbReference type="PDB" id="5VO4">
    <property type="method" value="X-ray"/>
    <property type="resolution" value="2.35 A"/>
    <property type="chains" value="A=671-920"/>
</dbReference>
<dbReference type="PDB" id="7ZTX">
    <property type="method" value="X-ray"/>
    <property type="resolution" value="1.89 A"/>
    <property type="chains" value="A=672-920"/>
</dbReference>
<dbReference type="PDB" id="7ZTZ">
    <property type="method" value="X-ray"/>
    <property type="resolution" value="1.40 A"/>
    <property type="chains" value="A=672-920"/>
</dbReference>
<dbReference type="PDB" id="7ZU1">
    <property type="method" value="X-ray"/>
    <property type="resolution" value="1.68 A"/>
    <property type="chains" value="A=672-920"/>
</dbReference>
<dbReference type="PDB" id="7ZU2">
    <property type="method" value="X-ray"/>
    <property type="resolution" value="1.74 A"/>
    <property type="chains" value="A=672-920"/>
</dbReference>
<dbReference type="PDB" id="8E1A">
    <property type="method" value="X-ray"/>
    <property type="resolution" value="1.20 A"/>
    <property type="chains" value="A=665-920"/>
</dbReference>
<dbReference type="PDB" id="8FGY">
    <property type="method" value="X-ray"/>
    <property type="resolution" value="2.20 A"/>
    <property type="chains" value="A=663-920"/>
</dbReference>
<dbReference type="PDB" id="8FGZ">
    <property type="method" value="X-ray"/>
    <property type="resolution" value="1.61 A"/>
    <property type="chains" value="A=663-920"/>
</dbReference>
<dbReference type="PDB" id="8FH0">
    <property type="method" value="X-ray"/>
    <property type="resolution" value="1.59 A"/>
    <property type="chains" value="A=663-920"/>
</dbReference>
<dbReference type="PDB" id="8FH1">
    <property type="method" value="X-ray"/>
    <property type="resolution" value="1.69 A"/>
    <property type="chains" value="A=663-920"/>
</dbReference>
<dbReference type="PDB" id="8FH2">
    <property type="method" value="X-ray"/>
    <property type="resolution" value="1.59 A"/>
    <property type="chains" value="A=663-920"/>
</dbReference>
<dbReference type="PDB" id="8RM6">
    <property type="method" value="X-ray"/>
    <property type="resolution" value="2.05 A"/>
    <property type="chains" value="A/B=557-629"/>
</dbReference>
<dbReference type="PDB" id="8RM7">
    <property type="method" value="X-ray"/>
    <property type="resolution" value="2.25 A"/>
    <property type="chains" value="A/B=557-629"/>
</dbReference>
<dbReference type="PDBsum" id="1E3G"/>
<dbReference type="PDBsum" id="1GS4"/>
<dbReference type="PDBsum" id="1T5Z"/>
<dbReference type="PDBsum" id="1T63"/>
<dbReference type="PDBsum" id="1T65"/>
<dbReference type="PDBsum" id="1XJ7"/>
<dbReference type="PDBsum" id="1XOW"/>
<dbReference type="PDBsum" id="1XQ3"/>
<dbReference type="PDBsum" id="1Z95"/>
<dbReference type="PDBsum" id="2AM9"/>
<dbReference type="PDBsum" id="2AMA"/>
<dbReference type="PDBsum" id="2AMB"/>
<dbReference type="PDBsum" id="2AO6"/>
<dbReference type="PDBsum" id="2AX6"/>
<dbReference type="PDBsum" id="2AX7"/>
<dbReference type="PDBsum" id="2AX8"/>
<dbReference type="PDBsum" id="2AX9"/>
<dbReference type="PDBsum" id="2AXA"/>
<dbReference type="PDBsum" id="2HVC"/>
<dbReference type="PDBsum" id="2OZ7"/>
<dbReference type="PDBsum" id="2PIO"/>
<dbReference type="PDBsum" id="2PIP"/>
<dbReference type="PDBsum" id="2PIQ"/>
<dbReference type="PDBsum" id="2PIR"/>
<dbReference type="PDBsum" id="2PIT"/>
<dbReference type="PDBsum" id="2PIU"/>
<dbReference type="PDBsum" id="2PIV"/>
<dbReference type="PDBsum" id="2PIW"/>
<dbReference type="PDBsum" id="2PIX"/>
<dbReference type="PDBsum" id="2PKL"/>
<dbReference type="PDBsum" id="2PNU"/>
<dbReference type="PDBsum" id="2Q7I"/>
<dbReference type="PDBsum" id="2Q7J"/>
<dbReference type="PDBsum" id="2Q7K"/>
<dbReference type="PDBsum" id="2Q7L"/>
<dbReference type="PDBsum" id="2YHD"/>
<dbReference type="PDBsum" id="2YLO"/>
<dbReference type="PDBsum" id="2YLP"/>
<dbReference type="PDBsum" id="2YLQ"/>
<dbReference type="PDBsum" id="2Z4J"/>
<dbReference type="PDBsum" id="3B5R"/>
<dbReference type="PDBsum" id="3B65"/>
<dbReference type="PDBsum" id="3B66"/>
<dbReference type="PDBsum" id="3B67"/>
<dbReference type="PDBsum" id="3B68"/>
<dbReference type="PDBsum" id="3BTR"/>
<dbReference type="PDBsum" id="3L3X"/>
<dbReference type="PDBsum" id="3L3Z"/>
<dbReference type="PDBsum" id="3RLJ"/>
<dbReference type="PDBsum" id="3RLL"/>
<dbReference type="PDBsum" id="3V49"/>
<dbReference type="PDBsum" id="3V4A"/>
<dbReference type="PDBsum" id="3ZQT"/>
<dbReference type="PDBsum" id="4HLW"/>
<dbReference type="PDBsum" id="4K7A"/>
<dbReference type="PDBsum" id="4OEA"/>
<dbReference type="PDBsum" id="4OED"/>
<dbReference type="PDBsum" id="4OEY"/>
<dbReference type="PDBsum" id="4OEZ"/>
<dbReference type="PDBsum" id="4OFR"/>
<dbReference type="PDBsum" id="4OFU"/>
<dbReference type="PDBsum" id="4OGH"/>
<dbReference type="PDBsum" id="4OH5"/>
<dbReference type="PDBsum" id="4OH6"/>
<dbReference type="PDBsum" id="4OHA"/>
<dbReference type="PDBsum" id="4OIL"/>
<dbReference type="PDBsum" id="4OIU"/>
<dbReference type="PDBsum" id="4OJ9"/>
<dbReference type="PDBsum" id="4OJB"/>
<dbReference type="PDBsum" id="4OK1"/>
<dbReference type="PDBsum" id="4OKB"/>
<dbReference type="PDBsum" id="4OKT"/>
<dbReference type="PDBsum" id="4OKW"/>
<dbReference type="PDBsum" id="4OKX"/>
<dbReference type="PDBsum" id="4OLM"/>
<dbReference type="PDBsum" id="4QL8"/>
<dbReference type="PDBsum" id="5CJ6"/>
<dbReference type="PDBsum" id="5JJM"/>
<dbReference type="PDBsum" id="5T8E"/>
<dbReference type="PDBsum" id="5T8J"/>
<dbReference type="PDBsum" id="5V8Q"/>
<dbReference type="PDBsum" id="5VO4"/>
<dbReference type="PDBsum" id="7ZTX"/>
<dbReference type="PDBsum" id="7ZTZ"/>
<dbReference type="PDBsum" id="7ZU1"/>
<dbReference type="PDBsum" id="7ZU2"/>
<dbReference type="PDBsum" id="8E1A"/>
<dbReference type="PDBsum" id="8FGY"/>
<dbReference type="PDBsum" id="8FGZ"/>
<dbReference type="PDBsum" id="8FH0"/>
<dbReference type="PDBsum" id="8FH1"/>
<dbReference type="PDBsum" id="8FH2"/>
<dbReference type="PDBsum" id="8RM6"/>
<dbReference type="PDBsum" id="8RM7"/>
<dbReference type="PCDDB" id="P10275"/>
<dbReference type="SMR" id="P10275"/>
<dbReference type="BioGRID" id="106862">
    <property type="interactions" value="954"/>
</dbReference>
<dbReference type="CORUM" id="P10275"/>
<dbReference type="DIP" id="DIP-125N"/>
<dbReference type="ELM" id="P10275"/>
<dbReference type="FunCoup" id="P10275">
    <property type="interactions" value="1131"/>
</dbReference>
<dbReference type="IntAct" id="P10275">
    <property type="interactions" value="310"/>
</dbReference>
<dbReference type="MINT" id="P10275"/>
<dbReference type="STRING" id="9606.ENSP00000363822"/>
<dbReference type="BindingDB" id="P10275"/>
<dbReference type="ChEMBL" id="CHEMBL1871"/>
<dbReference type="DrugBank" id="DB07422">
    <property type="generic name" value="(2S)-2-hydroxy-2-methyl-N-[4-nitro-3-(trifluoromethyl)phenyl]-3-(pentafluorophenoxy)propanamide"/>
</dbReference>
<dbReference type="DrugBank" id="DB07039">
    <property type="generic name" value="(2S)-N-(4-cyano-3-iodophenyl)-3-(4-cyanophenoxy)-2-hydroxy-2-methylpropanamide"/>
</dbReference>
<dbReference type="DrugBank" id="DB04709">
    <property type="generic name" value="(3AALPHA,4ALPHA,7ALPHA,7AALPHA)- 3A,4,7,7A-TETRAHYDRO-2-(4-NITRO-1-NAPHTHALENYL)-4,7-ETHANO-1H-ISOINDOLE-1,3(2H)-DIONE"/>
</dbReference>
<dbReference type="DrugBank" id="DB07717">
    <property type="generic name" value="(5S,8R,9S,10S,13R,14S,17S)-13-{2-[(3,5-DIFLUOROBENZYL)OXY]ETHYL}-17-HYDROXY-10-METHYLHEXADECAHYDRO-3H-CYCLOPENTA[A]PHENANTHREN-3-ONE"/>
</dbReference>
<dbReference type="DrugBank" id="DB07454">
    <property type="generic name" value="(R)-3-BROMO-2-HYDROXY-2-METHYL-N-[4-NITRO-3-(TRIFLUOROMETHYL)PHENYL]PROPANAMIDE"/>
</dbReference>
<dbReference type="DrugBank" id="DB02932">
    <property type="generic name" value="(R)-Bicalutamide"/>
</dbReference>
<dbReference type="DrugBank" id="DB08035">
    <property type="generic name" value="1-TERT-BUTYL-3-(2,5-DIMETHYLBENZYL)-1H-PYRAZOLO[3,4-D]PYRIMIDIN-4-AMINE"/>
</dbReference>
<dbReference type="DrugBank" id="DB01481">
    <property type="generic name" value="1-Testosterone"/>
</dbReference>
<dbReference type="DrugBank" id="DB05107">
    <property type="generic name" value="16-Bromoepiandrosterone"/>
</dbReference>
<dbReference type="DrugBank" id="DB08088">
    <property type="generic name" value="2-chloro-4-{[(1R,3Z,7S,7aS)-7-hydroxy-1-(trifluoromethyl)tetrahydro-1H-pyrrolo[1,2-c][1,3]oxazol-3-ylidene]amino}-3-methylbenzonitrile"/>
</dbReference>
<dbReference type="DrugBank" id="DB08461">
    <property type="generic name" value="3-[(4-AMINO-1-TERT-BUTYL-1H-PYRAZOLO[3,4-D]PYRIMIDIN-3-YL)METHYL]PHENOL"/>
</dbReference>
<dbReference type="DrugBank" id="DB08087">
    <property type="generic name" value="4-[(7R,7AS)-7-HYDROXY-1,3-DIOXOTETRAHYDRO-1H-PYRROLO[1,2-C]IMIDAZOL-2(3H)-YL]-1-NAPHTHONITRILE"/>
</dbReference>
<dbReference type="DrugBank" id="DB07421">
    <property type="generic name" value="4-{[(1R,2S)-1,2-dihydroxy-2-methyl-3-(4-nitrophenoxy)propyl]amino}-2-(trifluoromethyl)benzonitrile"/>
</dbReference>
<dbReference type="DrugBank" id="DB01063">
    <property type="generic name" value="Acetophenazine"/>
</dbReference>
<dbReference type="DrugBank" id="DB07423">
    <property type="generic name" value="Andarine"/>
</dbReference>
<dbReference type="DrugBank" id="DB11901">
    <property type="generic name" value="Apalutamide"/>
</dbReference>
<dbReference type="DrugBank" id="DB07352">
    <property type="generic name" value="Apigenin"/>
</dbReference>
<dbReference type="DrugBank" id="DB01128">
    <property type="generic name" value="Bicalutamide"/>
</dbReference>
<dbReference type="DrugBank" id="DB06973">
    <property type="generic name" value="Bisphenol A"/>
</dbReference>
<dbReference type="DrugBank" id="DB07286">
    <property type="generic name" value="BMS-564929"/>
</dbReference>
<dbReference type="DrugBank" id="DB01541">
    <property type="generic name" value="Boldenone"/>
</dbReference>
<dbReference type="DrugBank" id="DB14639">
    <property type="generic name" value="Boldenone undecylenate"/>
</dbReference>
<dbReference type="DrugBank" id="DB01564">
    <property type="generic name" value="Calusterone"/>
</dbReference>
<dbReference type="DrugBank" id="DB13111">
    <property type="generic name" value="Chromanol"/>
</dbReference>
<dbReference type="DrugBank" id="DB12499">
    <property type="generic name" value="Clascoterone"/>
</dbReference>
<dbReference type="DrugBank" id="DB04839">
    <property type="generic name" value="Cyproterone acetate"/>
</dbReference>
<dbReference type="DrugBank" id="DB01406">
    <property type="generic name" value="Danazol"/>
</dbReference>
<dbReference type="DrugBank" id="DB12941">
    <property type="generic name" value="Darolutamide"/>
</dbReference>
<dbReference type="DrugBank" id="DB09123">
    <property type="generic name" value="Dienogest"/>
</dbReference>
<dbReference type="DrugBank" id="DB00255">
    <property type="generic name" value="Diethylstilbestrol"/>
</dbReference>
<dbReference type="DrugBank" id="DB06133">
    <property type="generic name" value="Dimethylcurcumin"/>
</dbReference>
<dbReference type="DrugBank" id="DB01395">
    <property type="generic name" value="Drospirenone"/>
</dbReference>
<dbReference type="DrugBank" id="DB00858">
    <property type="generic name" value="Drostanolone"/>
</dbReference>
<dbReference type="DrugBank" id="DB15488">
    <property type="generic name" value="Echinacoside"/>
</dbReference>
<dbReference type="DrugBank" id="DB11219">
    <property type="generic name" value="Enzacamene"/>
</dbReference>
<dbReference type="DrugBank" id="DB08899">
    <property type="generic name" value="Enzalutamide"/>
</dbReference>
<dbReference type="DrugBank" id="DB19123">
    <property type="generic name" value="Enzalutamide d3"/>
</dbReference>
<dbReference type="DrugBank" id="DB13155">
    <property type="generic name" value="Esculin"/>
</dbReference>
<dbReference type="DrugBank" id="DB00655">
    <property type="generic name" value="Estrone"/>
</dbReference>
<dbReference type="DrugBank" id="DB01493">
    <property type="generic name" value="Ethylestrenol"/>
</dbReference>
<dbReference type="DrugBank" id="DB09086">
    <property type="generic name" value="Eugenol"/>
</dbReference>
<dbReference type="DrugBank" id="DB07776">
    <property type="generic name" value="Flavone"/>
</dbReference>
<dbReference type="DrugBank" id="DB00687">
    <property type="generic name" value="Fludrocortisone"/>
</dbReference>
<dbReference type="DrugBank" id="DB02266">
    <property type="generic name" value="Flufenamic acid"/>
</dbReference>
<dbReference type="DrugBank" id="DB01185">
    <property type="generic name" value="Fluoxymesterone"/>
</dbReference>
<dbReference type="DrugBank" id="DB00623">
    <property type="generic name" value="Fluphenazine"/>
</dbReference>
<dbReference type="DrugBank" id="DB00499">
    <property type="generic name" value="Flutamide"/>
</dbReference>
<dbReference type="DrugBank" id="DB12415">
    <property type="generic name" value="Galeterone"/>
</dbReference>
<dbReference type="DrugBank" id="DB11619">
    <property type="generic name" value="Gestrinone"/>
</dbReference>
<dbReference type="DrugBank" id="DB12461">
    <property type="generic name" value="GLPG-0492"/>
</dbReference>
<dbReference type="DrugBank" id="DB11064">
    <property type="generic name" value="Homosalate"/>
</dbReference>
<dbReference type="DrugBank" id="DB01852">
    <property type="generic name" value="Kaempherol"/>
</dbReference>
<dbReference type="DrugBank" id="DB01026">
    <property type="generic name" value="Ketoconazole"/>
</dbReference>
<dbReference type="DrugBank" id="DB15647">
    <property type="generic name" value="Ketodarolutamide"/>
</dbReference>
<dbReference type="DrugBank" id="DB00367">
    <property type="generic name" value="Levonorgestrel"/>
</dbReference>
<dbReference type="DrugBank" id="DB08089">
    <property type="generic name" value="LGD-2226"/>
</dbReference>
<dbReference type="DrugBank" id="DB05234">
    <property type="generic name" value="LGD2941"/>
</dbReference>
<dbReference type="DrugBank" id="DB13934">
    <property type="generic name" value="Ligandrol"/>
</dbReference>
<dbReference type="DrugBank" id="DB16221">
    <property type="generic name" value="Lonaprisan"/>
</dbReference>
<dbReference type="DrugBank" id="DB11425">
    <property type="generic name" value="Luprostiol"/>
</dbReference>
<dbReference type="DrugBank" id="DB06710">
    <property type="generic name" value="Methyltestosterone"/>
</dbReference>
<dbReference type="DrugBank" id="DB02998">
    <property type="generic name" value="Metribolone"/>
</dbReference>
<dbReference type="DrugBank" id="DB11429">
    <property type="generic name" value="Mibolerone"/>
</dbReference>
<dbReference type="DrugBank" id="DB00648">
    <property type="generic name" value="Mitotane"/>
</dbReference>
<dbReference type="DrugBank" id="DB16244">
    <property type="generic name" value="MK-0773"/>
</dbReference>
<dbReference type="DrugBank" id="DB13169">
    <property type="generic name" value="Nandrolone"/>
</dbReference>
<dbReference type="DrugBank" id="DB08804">
    <property type="generic name" value="Nandrolone decanoate"/>
</dbReference>
<dbReference type="DrugBank" id="DB00984">
    <property type="generic name" value="Nandrolone phenpropionate"/>
</dbReference>
<dbReference type="DrugBank" id="DB00665">
    <property type="generic name" value="Nilutamide"/>
</dbReference>
<dbReference type="DrugBank" id="DB06713">
    <property type="generic name" value="Norelgestromin"/>
</dbReference>
<dbReference type="DrugBank" id="DB00717">
    <property type="generic name" value="Norethisterone"/>
</dbReference>
<dbReference type="DrugBank" id="DB09371">
    <property type="generic name" value="Norethynodrel"/>
</dbReference>
<dbReference type="DrugBank" id="DB00957">
    <property type="generic name" value="Norgestimate"/>
</dbReference>
<dbReference type="DrugBank" id="DB09389">
    <property type="generic name" value="Norgestrel"/>
</dbReference>
<dbReference type="DrugBank" id="DB00621">
    <property type="generic name" value="Oxandrolone"/>
</dbReference>
<dbReference type="DrugBank" id="DB01428">
    <property type="generic name" value="Oxybenzone"/>
</dbReference>
<dbReference type="DrugBank" id="DB06412">
    <property type="generic name" value="Oxymetholone"/>
</dbReference>
<dbReference type="DrugBank" id="DB01608">
    <property type="generic name" value="Periciazine"/>
</dbReference>
<dbReference type="DrugBank" id="DB15221">
    <property type="generic name" value="PF-06260414"/>
</dbReference>
<dbReference type="DrugBank" id="DB11447">
    <property type="generic name" value="Phenothiazine"/>
</dbReference>
<dbReference type="DrugBank" id="DB01708">
    <property type="generic name" value="Prasterone"/>
</dbReference>
<dbReference type="DrugBank" id="DB00396">
    <property type="generic name" value="Progesterone"/>
</dbReference>
<dbReference type="DrugBank" id="DB13939">
    <property type="generic name" value="RAD-140"/>
</dbReference>
<dbReference type="DrugBank" id="DB07419">
    <property type="generic name" value="S-23"/>
</dbReference>
<dbReference type="DrugBank" id="DB07769">
    <property type="generic name" value="S-3-(4-FLUOROPHENOXY)-2-HYDROXY-2-METHYL-N-[4-NITRO-3-(TRIFLUOROMETHYL)PHENYL]PROPANAMIDE"/>
</dbReference>
<dbReference type="DrugBank" id="DB14583">
    <property type="generic name" value="Segesterone acetate"/>
</dbReference>
<dbReference type="DrugBank" id="DB00421">
    <property type="generic name" value="Spironolactone"/>
</dbReference>
<dbReference type="DrugBank" id="DB02901">
    <property type="generic name" value="Stanolone"/>
</dbReference>
<dbReference type="DrugBank" id="DB13951">
    <property type="generic name" value="Stanolone acetate"/>
</dbReference>
<dbReference type="DrugBank" id="DB06718">
    <property type="generic name" value="Stanozolol"/>
</dbReference>
<dbReference type="DrugBank" id="DB00675">
    <property type="generic name" value="Tamoxifen"/>
</dbReference>
<dbReference type="DrugBank" id="DB00624">
    <property type="generic name" value="Testosterone"/>
</dbReference>
<dbReference type="DrugBank" id="DB13943">
    <property type="generic name" value="Testosterone cypionate"/>
</dbReference>
<dbReference type="DrugBank" id="DB13944">
    <property type="generic name" value="Testosterone enanthate"/>
</dbReference>
<dbReference type="DrugBank" id="DB01420">
    <property type="generic name" value="Testosterone propionate"/>
</dbReference>
<dbReference type="DrugBank" id="DB13946">
    <property type="generic name" value="Testosterone undecanoate"/>
</dbReference>
<dbReference type="DrugBank" id="DB06870">
    <property type="generic name" value="Tetrahydrogestrinone"/>
</dbReference>
<dbReference type="DrugBank" id="DB08604">
    <property type="generic name" value="Triclosan"/>
</dbReference>
<dbReference type="DrugBank" id="DB08867">
    <property type="generic name" value="Ulipristal"/>
</dbReference>
<dbReference type="DrugCentral" id="P10275"/>
<dbReference type="GuidetoPHARMACOLOGY" id="628"/>
<dbReference type="SwissLipids" id="SLP:000001553"/>
<dbReference type="MoonDB" id="P10275">
    <property type="type" value="Predicted"/>
</dbReference>
<dbReference type="GlyGen" id="P10275">
    <property type="glycosylation" value="2 sites, 1 O-linked glycan (1 site)"/>
</dbReference>
<dbReference type="iPTMnet" id="P10275"/>
<dbReference type="PhosphoSitePlus" id="P10275"/>
<dbReference type="SwissPalm" id="P10275"/>
<dbReference type="BioMuta" id="AR"/>
<dbReference type="DMDM" id="113830"/>
<dbReference type="jPOST" id="P10275"/>
<dbReference type="MassIVE" id="P10275"/>
<dbReference type="PaxDb" id="9606-ENSP00000363822"/>
<dbReference type="PeptideAtlas" id="P10275"/>
<dbReference type="ProteomicsDB" id="18721"/>
<dbReference type="ProteomicsDB" id="52590">
    <molecule id="P10275-1"/>
</dbReference>
<dbReference type="ProteomicsDB" id="52591">
    <molecule id="P10275-2"/>
</dbReference>
<dbReference type="TopDownProteomics" id="P10275-1">
    <molecule id="P10275-1"/>
</dbReference>
<dbReference type="Antibodypedia" id="3489">
    <property type="antibodies" value="2585 antibodies from 51 providers"/>
</dbReference>
<dbReference type="DNASU" id="367"/>
<dbReference type="Ensembl" id="ENST00000374690.9">
    <molecule id="P10275-1"/>
    <property type="protein sequence ID" value="ENSP00000363822.3"/>
    <property type="gene ID" value="ENSG00000169083.18"/>
</dbReference>
<dbReference type="Ensembl" id="ENST00000504326.5">
    <molecule id="P10275-3"/>
    <property type="protein sequence ID" value="ENSP00000421155.1"/>
    <property type="gene ID" value="ENSG00000169083.18"/>
</dbReference>
<dbReference type="Ensembl" id="ENST00000612452.5">
    <molecule id="P10275-1"/>
    <property type="protein sequence ID" value="ENSP00000484033.2"/>
    <property type="gene ID" value="ENSG00000169083.18"/>
</dbReference>
<dbReference type="GeneID" id="367"/>
<dbReference type="KEGG" id="hsa:367"/>
<dbReference type="MANE-Select" id="ENST00000374690.9">
    <property type="protein sequence ID" value="ENSP00000363822.3"/>
    <property type="RefSeq nucleotide sequence ID" value="NM_000044.6"/>
    <property type="RefSeq protein sequence ID" value="NP_000035.2"/>
</dbReference>
<dbReference type="UCSC" id="uc004dwv.3">
    <molecule id="P10275-1"/>
    <property type="organism name" value="human"/>
</dbReference>
<dbReference type="UCSC" id="uc011mpf.2">
    <property type="organism name" value="human"/>
</dbReference>
<dbReference type="AGR" id="HGNC:644"/>
<dbReference type="CTD" id="367"/>
<dbReference type="DisGeNET" id="367"/>
<dbReference type="GeneCards" id="AR"/>
<dbReference type="GeneReviews" id="AR"/>
<dbReference type="HGNC" id="HGNC:644">
    <property type="gene designation" value="AR"/>
</dbReference>
<dbReference type="HPA" id="ENSG00000169083">
    <property type="expression patterns" value="Tissue enhanced (liver)"/>
</dbReference>
<dbReference type="MalaCards" id="AR"/>
<dbReference type="MIM" id="300068">
    <property type="type" value="phenotype"/>
</dbReference>
<dbReference type="MIM" id="300633">
    <property type="type" value="phenotype"/>
</dbReference>
<dbReference type="MIM" id="301120">
    <property type="type" value="phenotype"/>
</dbReference>
<dbReference type="MIM" id="312300">
    <property type="type" value="phenotype"/>
</dbReference>
<dbReference type="MIM" id="313200">
    <property type="type" value="phenotype"/>
</dbReference>
<dbReference type="MIM" id="313700">
    <property type="type" value="gene"/>
</dbReference>
<dbReference type="neXtProt" id="NX_P10275"/>
<dbReference type="OpenTargets" id="ENSG00000169083"/>
<dbReference type="Orphanet" id="99429">
    <property type="disease" value="Complete androgen insensitivity syndrome"/>
</dbReference>
<dbReference type="Orphanet" id="481">
    <property type="disease" value="Kennedy disease"/>
</dbReference>
<dbReference type="Orphanet" id="95706">
    <property type="disease" value="Non-syndromic posterior hypospadias"/>
</dbReference>
<dbReference type="Orphanet" id="90797">
    <property type="disease" value="Partial androgen insensitivity syndrome"/>
</dbReference>
<dbReference type="PharmGKB" id="PA57"/>
<dbReference type="VEuPathDB" id="HostDB:ENSG00000169083"/>
<dbReference type="eggNOG" id="KOG3575">
    <property type="taxonomic scope" value="Eukaryota"/>
</dbReference>
<dbReference type="GeneTree" id="ENSGT00940000155516"/>
<dbReference type="HOGENOM" id="CLU_007368_15_0_1"/>
<dbReference type="InParanoid" id="P10275"/>
<dbReference type="OMA" id="SHMEGYE"/>
<dbReference type="OrthoDB" id="10032732at2759"/>
<dbReference type="PAN-GO" id="P10275">
    <property type="GO annotations" value="5 GO annotations based on evolutionary models"/>
</dbReference>
<dbReference type="PhylomeDB" id="P10275"/>
<dbReference type="TreeFam" id="TF350286"/>
<dbReference type="PathwayCommons" id="P10275"/>
<dbReference type="Reactome" id="R-HSA-3371497">
    <property type="pathway name" value="HSP90 chaperone cycle for steroid hormone receptors (SHR) in the presence of ligand"/>
</dbReference>
<dbReference type="Reactome" id="R-HSA-383280">
    <property type="pathway name" value="Nuclear Receptor transcription pathway"/>
</dbReference>
<dbReference type="Reactome" id="R-HSA-4090294">
    <property type="pathway name" value="SUMOylation of intracellular receptors"/>
</dbReference>
<dbReference type="Reactome" id="R-HSA-5625886">
    <property type="pathway name" value="Activated PKN1 stimulates transcription of AR (androgen receptor) regulated genes KLK2 and KLK3"/>
</dbReference>
<dbReference type="Reactome" id="R-HSA-5689880">
    <property type="pathway name" value="Ub-specific processing proteases"/>
</dbReference>
<dbReference type="Reactome" id="R-HSA-8940973">
    <property type="pathway name" value="RUNX2 regulates osteoblast differentiation"/>
</dbReference>
<dbReference type="SignaLink" id="P10275"/>
<dbReference type="SIGNOR" id="P10275"/>
<dbReference type="BioGRID-ORCS" id="367">
    <property type="hits" value="14 hits in 805 CRISPR screens"/>
</dbReference>
<dbReference type="CD-CODE" id="DFB52F78">
    <property type="entry name" value="Synthetic Condensate 000129"/>
</dbReference>
<dbReference type="CD-CODE" id="EEE9EDCA">
    <property type="entry name" value="Synthetic Condensate 000155"/>
</dbReference>
<dbReference type="ChiTaRS" id="AR">
    <property type="organism name" value="human"/>
</dbReference>
<dbReference type="EvolutionaryTrace" id="P10275"/>
<dbReference type="GeneWiki" id="Androgen_receptor"/>
<dbReference type="GenomeRNAi" id="367"/>
<dbReference type="Pharos" id="P10275">
    <property type="development level" value="Tclin"/>
</dbReference>
<dbReference type="PRO" id="PR:P10275"/>
<dbReference type="Proteomes" id="UP000005640">
    <property type="component" value="Chromosome X"/>
</dbReference>
<dbReference type="RNAct" id="P10275">
    <property type="molecule type" value="protein"/>
</dbReference>
<dbReference type="Bgee" id="ENSG00000169083">
    <property type="expression patterns" value="Expressed in seminal vesicle and 180 other cell types or tissues"/>
</dbReference>
<dbReference type="ExpressionAtlas" id="P10275">
    <property type="expression patterns" value="baseline and differential"/>
</dbReference>
<dbReference type="GO" id="GO:0000785">
    <property type="term" value="C:chromatin"/>
    <property type="evidence" value="ECO:0000314"/>
    <property type="project" value="BHF-UCL"/>
</dbReference>
<dbReference type="GO" id="GO:0005737">
    <property type="term" value="C:cytoplasm"/>
    <property type="evidence" value="ECO:0000314"/>
    <property type="project" value="UniProtKB"/>
</dbReference>
<dbReference type="GO" id="GO:0005829">
    <property type="term" value="C:cytosol"/>
    <property type="evidence" value="ECO:0000314"/>
    <property type="project" value="HPA"/>
</dbReference>
<dbReference type="GO" id="GO:0016607">
    <property type="term" value="C:nuclear speck"/>
    <property type="evidence" value="ECO:0000314"/>
    <property type="project" value="CAFA"/>
</dbReference>
<dbReference type="GO" id="GO:0005654">
    <property type="term" value="C:nucleoplasm"/>
    <property type="evidence" value="ECO:0000304"/>
    <property type="project" value="Reactome"/>
</dbReference>
<dbReference type="GO" id="GO:0005634">
    <property type="term" value="C:nucleus"/>
    <property type="evidence" value="ECO:0000314"/>
    <property type="project" value="UniProtKB"/>
</dbReference>
<dbReference type="GO" id="GO:0005886">
    <property type="term" value="C:plasma membrane"/>
    <property type="evidence" value="ECO:0007669"/>
    <property type="project" value="Ensembl"/>
</dbReference>
<dbReference type="GO" id="GO:0032991">
    <property type="term" value="C:protein-containing complex"/>
    <property type="evidence" value="ECO:0000314"/>
    <property type="project" value="MGI"/>
</dbReference>
<dbReference type="GO" id="GO:0005497">
    <property type="term" value="F:androgen binding"/>
    <property type="evidence" value="ECO:0000314"/>
    <property type="project" value="UniProtKB"/>
</dbReference>
<dbReference type="GO" id="GO:0051117">
    <property type="term" value="F:ATPase binding"/>
    <property type="evidence" value="ECO:0000314"/>
    <property type="project" value="MGI"/>
</dbReference>
<dbReference type="GO" id="GO:0008013">
    <property type="term" value="F:beta-catenin binding"/>
    <property type="evidence" value="ECO:0000314"/>
    <property type="project" value="BHF-UCL"/>
</dbReference>
<dbReference type="GO" id="GO:0003682">
    <property type="term" value="F:chromatin binding"/>
    <property type="evidence" value="ECO:0000314"/>
    <property type="project" value="UniProtKB"/>
</dbReference>
<dbReference type="GO" id="GO:0001228">
    <property type="term" value="F:DNA-binding transcription activator activity, RNA polymerase II-specific"/>
    <property type="evidence" value="ECO:0000314"/>
    <property type="project" value="NTNU_SB"/>
</dbReference>
<dbReference type="GO" id="GO:0003700">
    <property type="term" value="F:DNA-binding transcription factor activity"/>
    <property type="evidence" value="ECO:0000314"/>
    <property type="project" value="UniProtKB"/>
</dbReference>
<dbReference type="GO" id="GO:0000981">
    <property type="term" value="F:DNA-binding transcription factor activity, RNA polymerase II-specific"/>
    <property type="evidence" value="ECO:0000247"/>
    <property type="project" value="NTNU_SB"/>
</dbReference>
<dbReference type="GO" id="GO:0019899">
    <property type="term" value="F:enzyme binding"/>
    <property type="evidence" value="ECO:0000353"/>
    <property type="project" value="UniProtKB"/>
</dbReference>
<dbReference type="GO" id="GO:0034056">
    <property type="term" value="F:estrogen response element binding"/>
    <property type="evidence" value="ECO:0000318"/>
    <property type="project" value="GO_Central"/>
</dbReference>
<dbReference type="GO" id="GO:0060090">
    <property type="term" value="F:molecular adaptor activity"/>
    <property type="evidence" value="ECO:0000314"/>
    <property type="project" value="DisProt"/>
</dbReference>
<dbReference type="GO" id="GO:0140693">
    <property type="term" value="F:molecular condensate scaffold activity"/>
    <property type="evidence" value="ECO:0000314"/>
    <property type="project" value="DisProt"/>
</dbReference>
<dbReference type="GO" id="GO:0004879">
    <property type="term" value="F:nuclear receptor activity"/>
    <property type="evidence" value="ECO:0000314"/>
    <property type="project" value="UniProtKB"/>
</dbReference>
<dbReference type="GO" id="GO:0003707">
    <property type="term" value="F:nuclear steroid receptor activity"/>
    <property type="evidence" value="ECO:0000314"/>
    <property type="project" value="BHF-UCL"/>
</dbReference>
<dbReference type="GO" id="GO:0070974">
    <property type="term" value="F:POU domain binding"/>
    <property type="evidence" value="ECO:0007669"/>
    <property type="project" value="Ensembl"/>
</dbReference>
<dbReference type="GO" id="GO:0000978">
    <property type="term" value="F:RNA polymerase II cis-regulatory region sequence-specific DNA binding"/>
    <property type="evidence" value="ECO:0000314"/>
    <property type="project" value="NTNU_SB"/>
</dbReference>
<dbReference type="GO" id="GO:0000979">
    <property type="term" value="F:RNA polymerase II core promoter sequence-specific DNA binding"/>
    <property type="evidence" value="ECO:0007669"/>
    <property type="project" value="Ensembl"/>
</dbReference>
<dbReference type="GO" id="GO:0001091">
    <property type="term" value="F:RNA polymerase II general transcription initiation factor binding"/>
    <property type="evidence" value="ECO:0000353"/>
    <property type="project" value="ParkinsonsUK-UCL"/>
</dbReference>
<dbReference type="GO" id="GO:0000977">
    <property type="term" value="F:RNA polymerase II transcription regulatory region sequence-specific DNA binding"/>
    <property type="evidence" value="ECO:0000314"/>
    <property type="project" value="BHF-UCL"/>
</dbReference>
<dbReference type="GO" id="GO:0061629">
    <property type="term" value="F:RNA polymerase II-specific DNA-binding transcription factor binding"/>
    <property type="evidence" value="ECO:0000353"/>
    <property type="project" value="BHF-UCL"/>
</dbReference>
<dbReference type="GO" id="GO:0005102">
    <property type="term" value="F:signaling receptor binding"/>
    <property type="evidence" value="ECO:0000353"/>
    <property type="project" value="UniProtKB"/>
</dbReference>
<dbReference type="GO" id="GO:0005496">
    <property type="term" value="F:steroid binding"/>
    <property type="evidence" value="ECO:0007669"/>
    <property type="project" value="UniProtKB-KW"/>
</dbReference>
<dbReference type="GO" id="GO:0000976">
    <property type="term" value="F:transcription cis-regulatory region binding"/>
    <property type="evidence" value="ECO:0000314"/>
    <property type="project" value="UniProtKB"/>
</dbReference>
<dbReference type="GO" id="GO:0001223">
    <property type="term" value="F:transcription coactivator binding"/>
    <property type="evidence" value="ECO:0000314"/>
    <property type="project" value="ARUK-UCL"/>
</dbReference>
<dbReference type="GO" id="GO:0008270">
    <property type="term" value="F:zinc ion binding"/>
    <property type="evidence" value="ECO:0007669"/>
    <property type="project" value="UniProtKB-KW"/>
</dbReference>
<dbReference type="GO" id="GO:0030521">
    <property type="term" value="P:androgen receptor signaling pathway"/>
    <property type="evidence" value="ECO:0000314"/>
    <property type="project" value="UniProtKB"/>
</dbReference>
<dbReference type="GO" id="GO:0048645">
    <property type="term" value="P:animal organ formation"/>
    <property type="evidence" value="ECO:0007669"/>
    <property type="project" value="Ensembl"/>
</dbReference>
<dbReference type="GO" id="GO:0007267">
    <property type="term" value="P:cell-cell signaling"/>
    <property type="evidence" value="ECO:0000304"/>
    <property type="project" value="ProtInc"/>
</dbReference>
<dbReference type="GO" id="GO:0071391">
    <property type="term" value="P:cellular response to estrogen stimulus"/>
    <property type="evidence" value="ECO:0000314"/>
    <property type="project" value="ARUK-UCL"/>
</dbReference>
<dbReference type="GO" id="GO:0071383">
    <property type="term" value="P:cellular response to steroid hormone stimulus"/>
    <property type="evidence" value="ECO:0000315"/>
    <property type="project" value="CAFA"/>
</dbReference>
<dbReference type="GO" id="GO:0071394">
    <property type="term" value="P:cellular response to testosterone stimulus"/>
    <property type="evidence" value="ECO:0000314"/>
    <property type="project" value="ARUK-UCL"/>
</dbReference>
<dbReference type="GO" id="GO:0060742">
    <property type="term" value="P:epithelial cell differentiation involved in prostate gland development"/>
    <property type="evidence" value="ECO:0007669"/>
    <property type="project" value="Ensembl"/>
</dbReference>
<dbReference type="GO" id="GO:0003382">
    <property type="term" value="P:epithelial cell morphogenesis"/>
    <property type="evidence" value="ECO:0007669"/>
    <property type="project" value="Ensembl"/>
</dbReference>
<dbReference type="GO" id="GO:0050673">
    <property type="term" value="P:epithelial cell proliferation"/>
    <property type="evidence" value="ECO:0007669"/>
    <property type="project" value="Ensembl"/>
</dbReference>
<dbReference type="GO" id="GO:0030520">
    <property type="term" value="P:estrogen receptor signaling pathway"/>
    <property type="evidence" value="ECO:0000314"/>
    <property type="project" value="ARUK-UCL"/>
</dbReference>
<dbReference type="GO" id="GO:0001701">
    <property type="term" value="P:in utero embryonic development"/>
    <property type="evidence" value="ECO:0007669"/>
    <property type="project" value="Ensembl"/>
</dbReference>
<dbReference type="GO" id="GO:0048009">
    <property type="term" value="P:insulin-like growth factor receptor signaling pathway"/>
    <property type="evidence" value="ECO:0007669"/>
    <property type="project" value="Ensembl"/>
</dbReference>
<dbReference type="GO" id="GO:0030522">
    <property type="term" value="P:intracellular receptor signaling pathway"/>
    <property type="evidence" value="ECO:0000314"/>
    <property type="project" value="BHF-UCL"/>
</dbReference>
<dbReference type="GO" id="GO:0060599">
    <property type="term" value="P:lateral sprouting involved in mammary gland duct morphogenesis"/>
    <property type="evidence" value="ECO:0007669"/>
    <property type="project" value="Ensembl"/>
</dbReference>
<dbReference type="GO" id="GO:0033327">
    <property type="term" value="P:Leydig cell differentiation"/>
    <property type="evidence" value="ECO:0007669"/>
    <property type="project" value="Ensembl"/>
</dbReference>
<dbReference type="GO" id="GO:0048808">
    <property type="term" value="P:male genitalia morphogenesis"/>
    <property type="evidence" value="ECO:0007669"/>
    <property type="project" value="Ensembl"/>
</dbReference>
<dbReference type="GO" id="GO:0008584">
    <property type="term" value="P:male gonad development"/>
    <property type="evidence" value="ECO:0000318"/>
    <property type="project" value="GO_Central"/>
</dbReference>
<dbReference type="GO" id="GO:0019102">
    <property type="term" value="P:male somatic sex determination"/>
    <property type="evidence" value="ECO:0007669"/>
    <property type="project" value="Ensembl"/>
</dbReference>
<dbReference type="GO" id="GO:0060749">
    <property type="term" value="P:mammary gland alveolus development"/>
    <property type="evidence" value="ECO:0007669"/>
    <property type="project" value="Ensembl"/>
</dbReference>
<dbReference type="GO" id="GO:0000165">
    <property type="term" value="P:MAPK cascade"/>
    <property type="evidence" value="ECO:0007669"/>
    <property type="project" value="Ensembl"/>
</dbReference>
<dbReference type="GO" id="GO:0140694">
    <property type="term" value="P:membraneless organelle assembly"/>
    <property type="evidence" value="ECO:0000314"/>
    <property type="project" value="DisProt"/>
</dbReference>
<dbReference type="GO" id="GO:0060571">
    <property type="term" value="P:morphogenesis of an epithelial fold"/>
    <property type="evidence" value="ECO:0007669"/>
    <property type="project" value="Ensembl"/>
</dbReference>
<dbReference type="GO" id="GO:0035264">
    <property type="term" value="P:multicellular organism growth"/>
    <property type="evidence" value="ECO:0007669"/>
    <property type="project" value="Ensembl"/>
</dbReference>
<dbReference type="GO" id="GO:0008285">
    <property type="term" value="P:negative regulation of cell population proliferation"/>
    <property type="evidence" value="ECO:0000315"/>
    <property type="project" value="UniProtKB"/>
</dbReference>
<dbReference type="GO" id="GO:0050680">
    <property type="term" value="P:negative regulation of epithelial cell proliferation"/>
    <property type="evidence" value="ECO:0007669"/>
    <property type="project" value="Ensembl"/>
</dbReference>
<dbReference type="GO" id="GO:2001237">
    <property type="term" value="P:negative regulation of extrinsic apoptotic signaling pathway"/>
    <property type="evidence" value="ECO:0000314"/>
    <property type="project" value="BHF-UCL"/>
</dbReference>
<dbReference type="GO" id="GO:0000122">
    <property type="term" value="P:negative regulation of transcription by RNA polymerase II"/>
    <property type="evidence" value="ECO:0000315"/>
    <property type="project" value="CAFA"/>
</dbReference>
<dbReference type="GO" id="GO:0030518">
    <property type="term" value="P:nuclear receptor-mediated steroid hormone signaling pathway"/>
    <property type="evidence" value="ECO:0000318"/>
    <property type="project" value="GO_Central"/>
</dbReference>
<dbReference type="GO" id="GO:0045597">
    <property type="term" value="P:positive regulation of cell differentiation"/>
    <property type="evidence" value="ECO:0000315"/>
    <property type="project" value="UniProtKB"/>
</dbReference>
<dbReference type="GO" id="GO:0008284">
    <property type="term" value="P:positive regulation of cell population proliferation"/>
    <property type="evidence" value="ECO:0000314"/>
    <property type="project" value="BHF-UCL"/>
</dbReference>
<dbReference type="GO" id="GO:0045893">
    <property type="term" value="P:positive regulation of DNA-templated transcription"/>
    <property type="evidence" value="ECO:0000314"/>
    <property type="project" value="UniProtKB"/>
</dbReference>
<dbReference type="GO" id="GO:0060769">
    <property type="term" value="P:positive regulation of epithelial cell proliferation involved in prostate gland development"/>
    <property type="evidence" value="ECO:0007669"/>
    <property type="project" value="Ensembl"/>
</dbReference>
<dbReference type="GO" id="GO:0010628">
    <property type="term" value="P:positive regulation of gene expression"/>
    <property type="evidence" value="ECO:0000314"/>
    <property type="project" value="UniProtKB"/>
</dbReference>
<dbReference type="GO" id="GO:0043568">
    <property type="term" value="P:positive regulation of insulin-like growth factor receptor signaling pathway"/>
    <property type="evidence" value="ECO:0007669"/>
    <property type="project" value="Ensembl"/>
</dbReference>
<dbReference type="GO" id="GO:0045726">
    <property type="term" value="P:positive regulation of integrin biosynthetic process"/>
    <property type="evidence" value="ECO:0000314"/>
    <property type="project" value="BHF-UCL"/>
</dbReference>
<dbReference type="GO" id="GO:0033148">
    <property type="term" value="P:positive regulation of intracellular estrogen receptor signaling pathway"/>
    <property type="evidence" value="ECO:0007669"/>
    <property type="project" value="Ensembl"/>
</dbReference>
<dbReference type="GO" id="GO:0043410">
    <property type="term" value="P:positive regulation of MAPK cascade"/>
    <property type="evidence" value="ECO:0007669"/>
    <property type="project" value="Ensembl"/>
</dbReference>
<dbReference type="GO" id="GO:1902895">
    <property type="term" value="P:positive regulation of miRNA transcription"/>
    <property type="evidence" value="ECO:0000314"/>
    <property type="project" value="BHF-UCL"/>
</dbReference>
<dbReference type="GO" id="GO:0045944">
    <property type="term" value="P:positive regulation of transcription by RNA polymerase II"/>
    <property type="evidence" value="ECO:0000314"/>
    <property type="project" value="UniProtKB"/>
</dbReference>
<dbReference type="GO" id="GO:0045945">
    <property type="term" value="P:positive regulation of transcription by RNA polymerase III"/>
    <property type="evidence" value="ECO:0000314"/>
    <property type="project" value="BHF-UCL"/>
</dbReference>
<dbReference type="GO" id="GO:0060740">
    <property type="term" value="P:prostate gland epithelium morphogenesis"/>
    <property type="evidence" value="ECO:0007669"/>
    <property type="project" value="Ensembl"/>
</dbReference>
<dbReference type="GO" id="GO:0060736">
    <property type="term" value="P:prostate gland growth"/>
    <property type="evidence" value="ECO:0007669"/>
    <property type="project" value="Ensembl"/>
</dbReference>
<dbReference type="GO" id="GO:0060514">
    <property type="term" value="P:prostate induction"/>
    <property type="evidence" value="ECO:0007669"/>
    <property type="project" value="Ensembl"/>
</dbReference>
<dbReference type="GO" id="GO:0048638">
    <property type="term" value="P:regulation of developmental growth"/>
    <property type="evidence" value="ECO:0007669"/>
    <property type="project" value="Ensembl"/>
</dbReference>
<dbReference type="GO" id="GO:1903076">
    <property type="term" value="P:regulation of protein localization to plasma membrane"/>
    <property type="evidence" value="ECO:0000314"/>
    <property type="project" value="BHF-UCL"/>
</dbReference>
<dbReference type="GO" id="GO:0003073">
    <property type="term" value="P:regulation of systemic arterial blood pressure"/>
    <property type="evidence" value="ECO:0007669"/>
    <property type="project" value="Ensembl"/>
</dbReference>
<dbReference type="GO" id="GO:0072520">
    <property type="term" value="P:seminiferous tubule development"/>
    <property type="evidence" value="ECO:0007669"/>
    <property type="project" value="Ensembl"/>
</dbReference>
<dbReference type="GO" id="GO:0007165">
    <property type="term" value="P:signal transduction"/>
    <property type="evidence" value="ECO:0000304"/>
    <property type="project" value="ProtInc"/>
</dbReference>
<dbReference type="GO" id="GO:0007338">
    <property type="term" value="P:single fertilization"/>
    <property type="evidence" value="ECO:0007669"/>
    <property type="project" value="Ensembl"/>
</dbReference>
<dbReference type="GO" id="GO:0007283">
    <property type="term" value="P:spermatogenesis"/>
    <property type="evidence" value="ECO:0007669"/>
    <property type="project" value="Ensembl"/>
</dbReference>
<dbReference type="GO" id="GO:0060748">
    <property type="term" value="P:tertiary branching involved in mammary gland duct morphogenesis"/>
    <property type="evidence" value="ECO:0007669"/>
    <property type="project" value="Ensembl"/>
</dbReference>
<dbReference type="GO" id="GO:0006366">
    <property type="term" value="P:transcription by RNA polymerase II"/>
    <property type="evidence" value="ECO:0007669"/>
    <property type="project" value="Ensembl"/>
</dbReference>
<dbReference type="CDD" id="cd07173">
    <property type="entry name" value="NR_DBD_AR"/>
    <property type="match status" value="1"/>
</dbReference>
<dbReference type="CDD" id="cd07073">
    <property type="entry name" value="NR_LBD_AR"/>
    <property type="match status" value="1"/>
</dbReference>
<dbReference type="DisProt" id="DP00492"/>
<dbReference type="FunFam" id="3.30.50.10:FF:000024">
    <property type="entry name" value="Androgen receptor"/>
    <property type="match status" value="1"/>
</dbReference>
<dbReference type="FunFam" id="1.10.565.10:FF:000004">
    <property type="entry name" value="Androgen receptor variant"/>
    <property type="match status" value="1"/>
</dbReference>
<dbReference type="Gene3D" id="3.30.50.10">
    <property type="entry name" value="Erythroid Transcription Factor GATA-1, subunit A"/>
    <property type="match status" value="1"/>
</dbReference>
<dbReference type="Gene3D" id="1.10.565.10">
    <property type="entry name" value="Retinoid X Receptor"/>
    <property type="match status" value="1"/>
</dbReference>
<dbReference type="IDEAL" id="IID00020"/>
<dbReference type="InterPro" id="IPR001103">
    <property type="entry name" value="Andrgn_rcpt"/>
</dbReference>
<dbReference type="InterPro" id="IPR035500">
    <property type="entry name" value="NHR-like_dom_sf"/>
</dbReference>
<dbReference type="InterPro" id="IPR000536">
    <property type="entry name" value="Nucl_hrmn_rcpt_lig-bd"/>
</dbReference>
<dbReference type="InterPro" id="IPR050200">
    <property type="entry name" value="Nuclear_hormone_rcpt_NR3"/>
</dbReference>
<dbReference type="InterPro" id="IPR001628">
    <property type="entry name" value="Znf_hrmn_rcpt"/>
</dbReference>
<dbReference type="InterPro" id="IPR013088">
    <property type="entry name" value="Znf_NHR/GATA"/>
</dbReference>
<dbReference type="PANTHER" id="PTHR48092">
    <property type="entry name" value="KNIRPS-RELATED PROTEIN-RELATED"/>
    <property type="match status" value="1"/>
</dbReference>
<dbReference type="Pfam" id="PF02166">
    <property type="entry name" value="Androgen_recep"/>
    <property type="match status" value="1"/>
</dbReference>
<dbReference type="Pfam" id="PF00104">
    <property type="entry name" value="Hormone_recep"/>
    <property type="match status" value="1"/>
</dbReference>
<dbReference type="Pfam" id="PF00105">
    <property type="entry name" value="zf-C4"/>
    <property type="match status" value="1"/>
</dbReference>
<dbReference type="PRINTS" id="PR00521">
    <property type="entry name" value="ANDROGENR"/>
</dbReference>
<dbReference type="PRINTS" id="PR00047">
    <property type="entry name" value="STROIDFINGER"/>
</dbReference>
<dbReference type="SMART" id="SM00430">
    <property type="entry name" value="HOLI"/>
    <property type="match status" value="1"/>
</dbReference>
<dbReference type="SMART" id="SM00399">
    <property type="entry name" value="ZnF_C4"/>
    <property type="match status" value="1"/>
</dbReference>
<dbReference type="SUPFAM" id="SSF57716">
    <property type="entry name" value="Glucocorticoid receptor-like (DNA-binding domain)"/>
    <property type="match status" value="1"/>
</dbReference>
<dbReference type="SUPFAM" id="SSF48508">
    <property type="entry name" value="Nuclear receptor ligand-binding domain"/>
    <property type="match status" value="1"/>
</dbReference>
<dbReference type="PROSITE" id="PS51843">
    <property type="entry name" value="NR_LBD"/>
    <property type="match status" value="1"/>
</dbReference>
<dbReference type="PROSITE" id="PS00031">
    <property type="entry name" value="NUCLEAR_REC_DBD_1"/>
    <property type="match status" value="1"/>
</dbReference>
<dbReference type="PROSITE" id="PS51030">
    <property type="entry name" value="NUCLEAR_REC_DBD_2"/>
    <property type="match status" value="1"/>
</dbReference>
<gene>
    <name type="primary">AR</name>
    <name type="synonym">DHTR</name>
    <name type="synonym">NR3C4</name>
</gene>
<evidence type="ECO:0000250" key="1">
    <source>
        <dbReference type="UniProtKB" id="P15207"/>
    </source>
</evidence>
<evidence type="ECO:0000250" key="2">
    <source>
        <dbReference type="UniProtKB" id="P19091"/>
    </source>
</evidence>
<evidence type="ECO:0000255" key="3">
    <source>
        <dbReference type="PROSITE-ProRule" id="PRU00407"/>
    </source>
</evidence>
<evidence type="ECO:0000255" key="4">
    <source>
        <dbReference type="PROSITE-ProRule" id="PRU01189"/>
    </source>
</evidence>
<evidence type="ECO:0000256" key="5">
    <source>
        <dbReference type="SAM" id="MobiDB-lite"/>
    </source>
</evidence>
<evidence type="ECO:0000269" key="6">
    <source>
    </source>
</evidence>
<evidence type="ECO:0000269" key="7">
    <source>
    </source>
</evidence>
<evidence type="ECO:0000269" key="8">
    <source>
    </source>
</evidence>
<evidence type="ECO:0000269" key="9">
    <source>
    </source>
</evidence>
<evidence type="ECO:0000269" key="10">
    <source>
    </source>
</evidence>
<evidence type="ECO:0000269" key="11">
    <source>
    </source>
</evidence>
<evidence type="ECO:0000269" key="12">
    <source>
    </source>
</evidence>
<evidence type="ECO:0000269" key="13">
    <source>
    </source>
</evidence>
<evidence type="ECO:0000269" key="14">
    <source>
    </source>
</evidence>
<evidence type="ECO:0000269" key="15">
    <source>
    </source>
</evidence>
<evidence type="ECO:0000269" key="16">
    <source>
    </source>
</evidence>
<evidence type="ECO:0000269" key="17">
    <source>
    </source>
</evidence>
<evidence type="ECO:0000269" key="18">
    <source>
    </source>
</evidence>
<evidence type="ECO:0000269" key="19">
    <source>
    </source>
</evidence>
<evidence type="ECO:0000269" key="20">
    <source>
    </source>
</evidence>
<evidence type="ECO:0000269" key="21">
    <source>
    </source>
</evidence>
<evidence type="ECO:0000269" key="22">
    <source>
    </source>
</evidence>
<evidence type="ECO:0000269" key="23">
    <source>
    </source>
</evidence>
<evidence type="ECO:0000269" key="24">
    <source>
    </source>
</evidence>
<evidence type="ECO:0000269" key="25">
    <source>
    </source>
</evidence>
<evidence type="ECO:0000269" key="26">
    <source>
    </source>
</evidence>
<evidence type="ECO:0000269" key="27">
    <source>
    </source>
</evidence>
<evidence type="ECO:0000269" key="28">
    <source>
    </source>
</evidence>
<evidence type="ECO:0000269" key="29">
    <source>
    </source>
</evidence>
<evidence type="ECO:0000269" key="30">
    <source>
    </source>
</evidence>
<evidence type="ECO:0000269" key="31">
    <source>
    </source>
</evidence>
<evidence type="ECO:0000269" key="32">
    <source>
    </source>
</evidence>
<evidence type="ECO:0000269" key="33">
    <source>
    </source>
</evidence>
<evidence type="ECO:0000269" key="34">
    <source>
    </source>
</evidence>
<evidence type="ECO:0000269" key="35">
    <source>
    </source>
</evidence>
<evidence type="ECO:0000269" key="36">
    <source>
    </source>
</evidence>
<evidence type="ECO:0000269" key="37">
    <source>
    </source>
</evidence>
<evidence type="ECO:0000269" key="38">
    <source>
    </source>
</evidence>
<evidence type="ECO:0000269" key="39">
    <source>
    </source>
</evidence>
<evidence type="ECO:0000269" key="40">
    <source>
    </source>
</evidence>
<evidence type="ECO:0000269" key="41">
    <source>
    </source>
</evidence>
<evidence type="ECO:0000269" key="42">
    <source>
    </source>
</evidence>
<evidence type="ECO:0000269" key="43">
    <source>
    </source>
</evidence>
<evidence type="ECO:0000269" key="44">
    <source>
    </source>
</evidence>
<evidence type="ECO:0000269" key="45">
    <source>
    </source>
</evidence>
<evidence type="ECO:0000269" key="46">
    <source>
    </source>
</evidence>
<evidence type="ECO:0000269" key="47">
    <source>
    </source>
</evidence>
<evidence type="ECO:0000269" key="48">
    <source>
    </source>
</evidence>
<evidence type="ECO:0000269" key="49">
    <source>
    </source>
</evidence>
<evidence type="ECO:0000269" key="50">
    <source>
    </source>
</evidence>
<evidence type="ECO:0000269" key="51">
    <source>
    </source>
</evidence>
<evidence type="ECO:0000269" key="52">
    <source>
    </source>
</evidence>
<evidence type="ECO:0000269" key="53">
    <source>
    </source>
</evidence>
<evidence type="ECO:0000269" key="54">
    <source>
    </source>
</evidence>
<evidence type="ECO:0000269" key="55">
    <source>
    </source>
</evidence>
<evidence type="ECO:0000269" key="56">
    <source>
    </source>
</evidence>
<evidence type="ECO:0000269" key="57">
    <source>
    </source>
</evidence>
<evidence type="ECO:0000269" key="58">
    <source>
    </source>
</evidence>
<evidence type="ECO:0000269" key="59">
    <source>
    </source>
</evidence>
<evidence type="ECO:0000269" key="60">
    <source>
    </source>
</evidence>
<evidence type="ECO:0000269" key="61">
    <source>
    </source>
</evidence>
<evidence type="ECO:0000269" key="62">
    <source>
    </source>
</evidence>
<evidence type="ECO:0000269" key="63">
    <source>
    </source>
</evidence>
<evidence type="ECO:0000269" key="64">
    <source>
    </source>
</evidence>
<evidence type="ECO:0000269" key="65">
    <source>
    </source>
</evidence>
<evidence type="ECO:0000269" key="66">
    <source>
    </source>
</evidence>
<evidence type="ECO:0000269" key="67">
    <source>
    </source>
</evidence>
<evidence type="ECO:0000269" key="68">
    <source>
    </source>
</evidence>
<evidence type="ECO:0000269" key="69">
    <source>
    </source>
</evidence>
<evidence type="ECO:0000269" key="70">
    <source>
    </source>
</evidence>
<evidence type="ECO:0000269" key="71">
    <source>
    </source>
</evidence>
<evidence type="ECO:0000269" key="72">
    <source>
    </source>
</evidence>
<evidence type="ECO:0000269" key="73">
    <source>
    </source>
</evidence>
<evidence type="ECO:0000269" key="74">
    <source>
    </source>
</evidence>
<evidence type="ECO:0000269" key="75">
    <source>
    </source>
</evidence>
<evidence type="ECO:0000269" key="76">
    <source>
    </source>
</evidence>
<evidence type="ECO:0000269" key="77">
    <source>
    </source>
</evidence>
<evidence type="ECO:0000269" key="78">
    <source>
    </source>
</evidence>
<evidence type="ECO:0000269" key="79">
    <source>
    </source>
</evidence>
<evidence type="ECO:0000269" key="80">
    <source>
    </source>
</evidence>
<evidence type="ECO:0000269" key="81">
    <source>
    </source>
</evidence>
<evidence type="ECO:0000269" key="82">
    <source>
    </source>
</evidence>
<evidence type="ECO:0000269" key="83">
    <source>
    </source>
</evidence>
<evidence type="ECO:0000269" key="84">
    <source>
    </source>
</evidence>
<evidence type="ECO:0000269" key="85">
    <source>
    </source>
</evidence>
<evidence type="ECO:0000269" key="86">
    <source>
    </source>
</evidence>
<evidence type="ECO:0000269" key="87">
    <source>
    </source>
</evidence>
<evidence type="ECO:0000269" key="88">
    <source>
    </source>
</evidence>
<evidence type="ECO:0000269" key="89">
    <source>
    </source>
</evidence>
<evidence type="ECO:0000269" key="90">
    <source>
    </source>
</evidence>
<evidence type="ECO:0000269" key="91">
    <source>
    </source>
</evidence>
<evidence type="ECO:0000269" key="92">
    <source>
    </source>
</evidence>
<evidence type="ECO:0000269" key="93">
    <source>
    </source>
</evidence>
<evidence type="ECO:0000269" key="94">
    <source>
    </source>
</evidence>
<evidence type="ECO:0000269" key="95">
    <source>
    </source>
</evidence>
<evidence type="ECO:0000269" key="96">
    <source>
    </source>
</evidence>
<evidence type="ECO:0000269" key="97">
    <source>
    </source>
</evidence>
<evidence type="ECO:0000269" key="98">
    <source>
    </source>
</evidence>
<evidence type="ECO:0000269" key="99">
    <source>
    </source>
</evidence>
<evidence type="ECO:0000269" key="100">
    <source>
    </source>
</evidence>
<evidence type="ECO:0000269" key="101">
    <source>
    </source>
</evidence>
<evidence type="ECO:0000269" key="102">
    <source>
    </source>
</evidence>
<evidence type="ECO:0000269" key="103">
    <source>
    </source>
</evidence>
<evidence type="ECO:0000269" key="104">
    <source>
    </source>
</evidence>
<evidence type="ECO:0000269" key="105">
    <source>
    </source>
</evidence>
<evidence type="ECO:0000269" key="106">
    <source>
    </source>
</evidence>
<evidence type="ECO:0000269" key="107">
    <source>
    </source>
</evidence>
<evidence type="ECO:0000269" key="108">
    <source>
    </source>
</evidence>
<evidence type="ECO:0000269" key="109">
    <source>
    </source>
</evidence>
<evidence type="ECO:0000269" key="110">
    <source>
    </source>
</evidence>
<evidence type="ECO:0000269" key="111">
    <source>
    </source>
</evidence>
<evidence type="ECO:0000269" key="112">
    <source>
    </source>
</evidence>
<evidence type="ECO:0000269" key="113">
    <source>
    </source>
</evidence>
<evidence type="ECO:0000269" key="114">
    <source>
    </source>
</evidence>
<evidence type="ECO:0000269" key="115">
    <source>
    </source>
</evidence>
<evidence type="ECO:0000269" key="116">
    <source>
    </source>
</evidence>
<evidence type="ECO:0000269" key="117">
    <source>
    </source>
</evidence>
<evidence type="ECO:0000269" key="118">
    <source>
    </source>
</evidence>
<evidence type="ECO:0000269" key="119">
    <source>
    </source>
</evidence>
<evidence type="ECO:0000269" key="120">
    <source>
    </source>
</evidence>
<evidence type="ECO:0000269" key="121">
    <source>
    </source>
</evidence>
<evidence type="ECO:0000269" key="122">
    <source>
    </source>
</evidence>
<evidence type="ECO:0000269" key="123">
    <source>
    </source>
</evidence>
<evidence type="ECO:0000269" key="124">
    <source>
    </source>
</evidence>
<evidence type="ECO:0000269" key="125">
    <source>
    </source>
</evidence>
<evidence type="ECO:0000269" key="126">
    <source>
    </source>
</evidence>
<evidence type="ECO:0000269" key="127">
    <source>
    </source>
</evidence>
<evidence type="ECO:0000269" key="128">
    <source>
    </source>
</evidence>
<evidence type="ECO:0000269" key="129">
    <source>
    </source>
</evidence>
<evidence type="ECO:0000269" key="130">
    <source>
    </source>
</evidence>
<evidence type="ECO:0000269" key="131">
    <source>
    </source>
</evidence>
<evidence type="ECO:0000269" key="132">
    <source>
    </source>
</evidence>
<evidence type="ECO:0000269" key="133">
    <source>
    </source>
</evidence>
<evidence type="ECO:0000269" key="134">
    <source>
    </source>
</evidence>
<evidence type="ECO:0000269" key="135">
    <source>
    </source>
</evidence>
<evidence type="ECO:0000269" key="136">
    <source>
    </source>
</evidence>
<evidence type="ECO:0000269" key="137">
    <source>
    </source>
</evidence>
<evidence type="ECO:0000269" key="138">
    <source>
    </source>
</evidence>
<evidence type="ECO:0000269" key="139">
    <source>
    </source>
</evidence>
<evidence type="ECO:0000269" key="140">
    <source>
    </source>
</evidence>
<evidence type="ECO:0000269" key="141">
    <source>
    </source>
</evidence>
<evidence type="ECO:0000269" key="142">
    <source>
    </source>
</evidence>
<evidence type="ECO:0000269" key="143">
    <source>
    </source>
</evidence>
<evidence type="ECO:0000269" key="144">
    <source>
    </source>
</evidence>
<evidence type="ECO:0000269" key="145">
    <source>
    </source>
</evidence>
<evidence type="ECO:0000269" key="146">
    <source>
    </source>
</evidence>
<evidence type="ECO:0000269" key="147">
    <source>
    </source>
</evidence>
<evidence type="ECO:0000269" key="148">
    <source>
    </source>
</evidence>
<evidence type="ECO:0000269" key="149">
    <source>
    </source>
</evidence>
<evidence type="ECO:0000269" key="150">
    <source>
    </source>
</evidence>
<evidence type="ECO:0000269" key="151">
    <source>
    </source>
</evidence>
<evidence type="ECO:0000269" key="152">
    <source>
    </source>
</evidence>
<evidence type="ECO:0000269" key="153">
    <source>
    </source>
</evidence>
<evidence type="ECO:0000269" key="154">
    <source>
    </source>
</evidence>
<evidence type="ECO:0000269" key="155">
    <source>
    </source>
</evidence>
<evidence type="ECO:0000269" key="156">
    <source>
    </source>
</evidence>
<evidence type="ECO:0000269" key="157">
    <source>
    </source>
</evidence>
<evidence type="ECO:0000269" key="158">
    <source>
    </source>
</evidence>
<evidence type="ECO:0000269" key="159">
    <source>
    </source>
</evidence>
<evidence type="ECO:0000269" key="160">
    <source>
    </source>
</evidence>
<evidence type="ECO:0000269" key="161">
    <source>
    </source>
</evidence>
<evidence type="ECO:0000269" key="162">
    <source>
    </source>
</evidence>
<evidence type="ECO:0000269" key="163">
    <source>
    </source>
</evidence>
<evidence type="ECO:0000269" key="164">
    <source>
    </source>
</evidence>
<evidence type="ECO:0000269" key="165">
    <source>
    </source>
</evidence>
<evidence type="ECO:0000269" key="166">
    <source>
    </source>
</evidence>
<evidence type="ECO:0000269" key="167">
    <source>
    </source>
</evidence>
<evidence type="ECO:0000269" key="168">
    <source>
    </source>
</evidence>
<evidence type="ECO:0000269" key="169">
    <source>
    </source>
</evidence>
<evidence type="ECO:0000269" key="170">
    <source>
    </source>
</evidence>
<evidence type="ECO:0000269" key="171">
    <source>
    </source>
</evidence>
<evidence type="ECO:0000269" key="172">
    <source>
    </source>
</evidence>
<evidence type="ECO:0000269" key="173">
    <source>
    </source>
</evidence>
<evidence type="ECO:0000269" key="174">
    <source>
    </source>
</evidence>
<evidence type="ECO:0000269" key="175">
    <source>
    </source>
</evidence>
<evidence type="ECO:0000269" key="176">
    <source>
    </source>
</evidence>
<evidence type="ECO:0000269" key="177">
    <source>
    </source>
</evidence>
<evidence type="ECO:0000269" key="178">
    <source>
    </source>
</evidence>
<evidence type="ECO:0000269" key="179">
    <source>
    </source>
</evidence>
<evidence type="ECO:0000269" key="180">
    <source>
    </source>
</evidence>
<evidence type="ECO:0000269" key="181">
    <source>
    </source>
</evidence>
<evidence type="ECO:0000269" key="182">
    <source>
    </source>
</evidence>
<evidence type="ECO:0000269" key="183">
    <source>
    </source>
</evidence>
<evidence type="ECO:0000269" key="184">
    <source>
    </source>
</evidence>
<evidence type="ECO:0000269" key="185">
    <source>
    </source>
</evidence>
<evidence type="ECO:0000269" key="186">
    <source>
    </source>
</evidence>
<evidence type="ECO:0000269" key="187">
    <source>
    </source>
</evidence>
<evidence type="ECO:0000269" key="188">
    <source>
    </source>
</evidence>
<evidence type="ECO:0000269" key="189">
    <source>
    </source>
</evidence>
<evidence type="ECO:0000269" key="190">
    <source>
    </source>
</evidence>
<evidence type="ECO:0000269" key="191">
    <source>
    </source>
</evidence>
<evidence type="ECO:0000269" key="192">
    <source>
    </source>
</evidence>
<evidence type="ECO:0000269" key="193">
    <source ref="116"/>
</evidence>
<evidence type="ECO:0000269" key="194">
    <source ref="124"/>
</evidence>
<evidence type="ECO:0000269" key="195">
    <source ref="183"/>
</evidence>
<evidence type="ECO:0000305" key="196"/>
<evidence type="ECO:0000305" key="197">
    <source>
    </source>
</evidence>
<evidence type="ECO:0000305" key="198">
    <source>
    </source>
</evidence>
<evidence type="ECO:0007744" key="199">
    <source>
        <dbReference type="PDB" id="1T5Z"/>
    </source>
</evidence>
<evidence type="ECO:0007744" key="200">
    <source>
        <dbReference type="PDB" id="1T63"/>
    </source>
</evidence>
<evidence type="ECO:0007744" key="201">
    <source>
        <dbReference type="PDB" id="1T65"/>
    </source>
</evidence>
<evidence type="ECO:0007744" key="202">
    <source>
        <dbReference type="PDB" id="1XJ7"/>
    </source>
</evidence>
<evidence type="ECO:0007744" key="203">
    <source>
        <dbReference type="PDB" id="2AM9"/>
    </source>
</evidence>
<evidence type="ECO:0007744" key="204">
    <source>
        <dbReference type="PDB" id="2AMA"/>
    </source>
</evidence>
<evidence type="ECO:0007744" key="205">
    <source>
        <dbReference type="PDB" id="2AMB"/>
    </source>
</evidence>
<evidence type="ECO:0007744" key="206">
    <source>
        <dbReference type="PDB" id="2PIO"/>
    </source>
</evidence>
<evidence type="ECO:0007744" key="207">
    <source>
        <dbReference type="PDB" id="2PIP"/>
    </source>
</evidence>
<evidence type="ECO:0007744" key="208">
    <source>
        <dbReference type="PDB" id="2PIQ"/>
    </source>
</evidence>
<evidence type="ECO:0007744" key="209">
    <source>
        <dbReference type="PDB" id="2PIR"/>
    </source>
</evidence>
<evidence type="ECO:0007744" key="210">
    <source>
        <dbReference type="PDB" id="2PIT"/>
    </source>
</evidence>
<evidence type="ECO:0007744" key="211">
    <source>
        <dbReference type="PDB" id="2PIU"/>
    </source>
</evidence>
<evidence type="ECO:0007744" key="212">
    <source>
        <dbReference type="PDB" id="2PIV"/>
    </source>
</evidence>
<evidence type="ECO:0007744" key="213">
    <source>
        <dbReference type="PDB" id="2PIW"/>
    </source>
</evidence>
<evidence type="ECO:0007744" key="214">
    <source>
        <dbReference type="PDB" id="2PIX"/>
    </source>
</evidence>
<evidence type="ECO:0007744" key="215">
    <source>
        <dbReference type="PDB" id="2PKL"/>
    </source>
</evidence>
<evidence type="ECO:0007744" key="216">
    <source>
        <dbReference type="PDB" id="2PNU"/>
    </source>
</evidence>
<evidence type="ECO:0007744" key="217">
    <source>
        <dbReference type="PDB" id="2Q7I"/>
    </source>
</evidence>
<evidence type="ECO:0007744" key="218">
    <source>
        <dbReference type="PDB" id="2Q7J"/>
    </source>
</evidence>
<evidence type="ECO:0007744" key="219">
    <source>
        <dbReference type="PDB" id="2Q7K"/>
    </source>
</evidence>
<evidence type="ECO:0007744" key="220">
    <source>
        <dbReference type="PDB" id="2Q7L"/>
    </source>
</evidence>
<evidence type="ECO:0007744" key="221">
    <source>
        <dbReference type="PDB" id="2YHD"/>
    </source>
</evidence>
<evidence type="ECO:0007744" key="222">
    <source>
        <dbReference type="PDB" id="2YLO"/>
    </source>
</evidence>
<evidence type="ECO:0007744" key="223">
    <source>
        <dbReference type="PDB" id="2YLP"/>
    </source>
</evidence>
<evidence type="ECO:0007744" key="224">
    <source>
        <dbReference type="PDB" id="2YLQ"/>
    </source>
</evidence>
<evidence type="ECO:0007744" key="225">
    <source>
        <dbReference type="PDB" id="2Z4J"/>
    </source>
</evidence>
<evidence type="ECO:0007744" key="226">
    <source>
        <dbReference type="PDB" id="3L3X"/>
    </source>
</evidence>
<evidence type="ECO:0007744" key="227">
    <source>
        <dbReference type="PDB" id="3L3Z"/>
    </source>
</evidence>
<evidence type="ECO:0007744" key="228">
    <source>
        <dbReference type="PDB" id="3ZQT"/>
    </source>
</evidence>
<evidence type="ECO:0007744" key="229">
    <source>
        <dbReference type="PDB" id="4HLW"/>
    </source>
</evidence>
<evidence type="ECO:0007744" key="230">
    <source>
        <dbReference type="PDB" id="4K7A"/>
    </source>
</evidence>
<evidence type="ECO:0007744" key="231">
    <source>
        <dbReference type="PDB" id="4OEA"/>
    </source>
</evidence>
<evidence type="ECO:0007744" key="232">
    <source>
        <dbReference type="PDB" id="4OED"/>
    </source>
</evidence>
<evidence type="ECO:0007744" key="233">
    <source>
        <dbReference type="PDB" id="4OEY"/>
    </source>
</evidence>
<evidence type="ECO:0007744" key="234">
    <source>
        <dbReference type="PDB" id="4OEZ"/>
    </source>
</evidence>
<evidence type="ECO:0007744" key="235">
    <source>
        <dbReference type="PDB" id="4OFR"/>
    </source>
</evidence>
<evidence type="ECO:0007744" key="236">
    <source>
        <dbReference type="PDB" id="4OFU"/>
    </source>
</evidence>
<evidence type="ECO:0007744" key="237">
    <source>
        <dbReference type="PDB" id="4OGH"/>
    </source>
</evidence>
<evidence type="ECO:0007744" key="238">
    <source>
        <dbReference type="PDB" id="4OH5"/>
    </source>
</evidence>
<evidence type="ECO:0007744" key="239">
    <source>
        <dbReference type="PDB" id="4OHA"/>
    </source>
</evidence>
<evidence type="ECO:0007744" key="240">
    <source>
        <dbReference type="PDB" id="4OIL"/>
    </source>
</evidence>
<evidence type="ECO:0007744" key="241">
    <source>
        <dbReference type="PDB" id="5JJM"/>
    </source>
</evidence>
<evidence type="ECO:0007744" key="242">
    <source>
    </source>
</evidence>
<evidence type="ECO:0007744" key="243">
    <source>
    </source>
</evidence>
<evidence type="ECO:0007829" key="244">
    <source>
        <dbReference type="PDB" id="1XJ7"/>
    </source>
</evidence>
<evidence type="ECO:0007829" key="245">
    <source>
        <dbReference type="PDB" id="3V49"/>
    </source>
</evidence>
<evidence type="ECO:0007829" key="246">
    <source>
        <dbReference type="PDB" id="5VO4"/>
    </source>
</evidence>
<evidence type="ECO:0007829" key="247">
    <source>
        <dbReference type="PDB" id="8E1A"/>
    </source>
</evidence>